<reference key="1">
    <citation type="journal article" date="2013" name="Science">
        <title>Cyclic GMP-AMP synthase is a cytosolic DNA sensor that activates the type I interferon pathway.</title>
        <authorList>
            <person name="Sun L."/>
            <person name="Wu J."/>
            <person name="Du F."/>
            <person name="Chen X."/>
            <person name="Chen Z.J."/>
        </authorList>
    </citation>
    <scope>NUCLEOTIDE SEQUENCE [MRNA]</scope>
    <scope>FUNCTION</scope>
    <scope>CATALYTIC ACTIVITY</scope>
    <scope>ACTIVITY REGULATION</scope>
    <scope>DNA-BINDING</scope>
    <scope>IDENTIFICATION BY MASS SPECTROMETRY</scope>
    <scope>SUBCELLULAR LOCATION</scope>
    <scope>TISSUE SPECIFICITY</scope>
</reference>
<reference key="2">
    <citation type="journal article" date="2004" name="Nat. Genet.">
        <title>Complete sequencing and characterization of 21,243 full-length human cDNAs.</title>
        <authorList>
            <person name="Ota T."/>
            <person name="Suzuki Y."/>
            <person name="Nishikawa T."/>
            <person name="Otsuki T."/>
            <person name="Sugiyama T."/>
            <person name="Irie R."/>
            <person name="Wakamatsu A."/>
            <person name="Hayashi K."/>
            <person name="Sato H."/>
            <person name="Nagai K."/>
            <person name="Kimura K."/>
            <person name="Makita H."/>
            <person name="Sekine M."/>
            <person name="Obayashi M."/>
            <person name="Nishi T."/>
            <person name="Shibahara T."/>
            <person name="Tanaka T."/>
            <person name="Ishii S."/>
            <person name="Yamamoto J."/>
            <person name="Saito K."/>
            <person name="Kawai Y."/>
            <person name="Isono Y."/>
            <person name="Nakamura Y."/>
            <person name="Nagahari K."/>
            <person name="Murakami K."/>
            <person name="Yasuda T."/>
            <person name="Iwayanagi T."/>
            <person name="Wagatsuma M."/>
            <person name="Shiratori A."/>
            <person name="Sudo H."/>
            <person name="Hosoiri T."/>
            <person name="Kaku Y."/>
            <person name="Kodaira H."/>
            <person name="Kondo H."/>
            <person name="Sugawara M."/>
            <person name="Takahashi M."/>
            <person name="Kanda K."/>
            <person name="Yokoi T."/>
            <person name="Furuya T."/>
            <person name="Kikkawa E."/>
            <person name="Omura Y."/>
            <person name="Abe K."/>
            <person name="Kamihara K."/>
            <person name="Katsuta N."/>
            <person name="Sato K."/>
            <person name="Tanikawa M."/>
            <person name="Yamazaki M."/>
            <person name="Ninomiya K."/>
            <person name="Ishibashi T."/>
            <person name="Yamashita H."/>
            <person name="Murakawa K."/>
            <person name="Fujimori K."/>
            <person name="Tanai H."/>
            <person name="Kimata M."/>
            <person name="Watanabe M."/>
            <person name="Hiraoka S."/>
            <person name="Chiba Y."/>
            <person name="Ishida S."/>
            <person name="Ono Y."/>
            <person name="Takiguchi S."/>
            <person name="Watanabe S."/>
            <person name="Yosida M."/>
            <person name="Hotuta T."/>
            <person name="Kusano J."/>
            <person name="Kanehori K."/>
            <person name="Takahashi-Fujii A."/>
            <person name="Hara H."/>
            <person name="Tanase T.-O."/>
            <person name="Nomura Y."/>
            <person name="Togiya S."/>
            <person name="Komai F."/>
            <person name="Hara R."/>
            <person name="Takeuchi K."/>
            <person name="Arita M."/>
            <person name="Imose N."/>
            <person name="Musashino K."/>
            <person name="Yuuki H."/>
            <person name="Oshima A."/>
            <person name="Sasaki N."/>
            <person name="Aotsuka S."/>
            <person name="Yoshikawa Y."/>
            <person name="Matsunawa H."/>
            <person name="Ichihara T."/>
            <person name="Shiohata N."/>
            <person name="Sano S."/>
            <person name="Moriya S."/>
            <person name="Momiyama H."/>
            <person name="Satoh N."/>
            <person name="Takami S."/>
            <person name="Terashima Y."/>
            <person name="Suzuki O."/>
            <person name="Nakagawa S."/>
            <person name="Senoh A."/>
            <person name="Mizoguchi H."/>
            <person name="Goto Y."/>
            <person name="Shimizu F."/>
            <person name="Wakebe H."/>
            <person name="Hishigaki H."/>
            <person name="Watanabe T."/>
            <person name="Sugiyama A."/>
            <person name="Takemoto M."/>
            <person name="Kawakami B."/>
            <person name="Yamazaki M."/>
            <person name="Watanabe K."/>
            <person name="Kumagai A."/>
            <person name="Itakura S."/>
            <person name="Fukuzumi Y."/>
            <person name="Fujimori Y."/>
            <person name="Komiyama M."/>
            <person name="Tashiro H."/>
            <person name="Tanigami A."/>
            <person name="Fujiwara T."/>
            <person name="Ono T."/>
            <person name="Yamada K."/>
            <person name="Fujii Y."/>
            <person name="Ozaki K."/>
            <person name="Hirao M."/>
            <person name="Ohmori Y."/>
            <person name="Kawabata A."/>
            <person name="Hikiji T."/>
            <person name="Kobatake N."/>
            <person name="Inagaki H."/>
            <person name="Ikema Y."/>
            <person name="Okamoto S."/>
            <person name="Okitani R."/>
            <person name="Kawakami T."/>
            <person name="Noguchi S."/>
            <person name="Itoh T."/>
            <person name="Shigeta K."/>
            <person name="Senba T."/>
            <person name="Matsumura K."/>
            <person name="Nakajima Y."/>
            <person name="Mizuno T."/>
            <person name="Morinaga M."/>
            <person name="Sasaki M."/>
            <person name="Togashi T."/>
            <person name="Oyama M."/>
            <person name="Hata H."/>
            <person name="Watanabe M."/>
            <person name="Komatsu T."/>
            <person name="Mizushima-Sugano J."/>
            <person name="Satoh T."/>
            <person name="Shirai Y."/>
            <person name="Takahashi Y."/>
            <person name="Nakagawa K."/>
            <person name="Okumura K."/>
            <person name="Nagase T."/>
            <person name="Nomura N."/>
            <person name="Kikuchi H."/>
            <person name="Masuho Y."/>
            <person name="Yamashita R."/>
            <person name="Nakai K."/>
            <person name="Yada T."/>
            <person name="Nakamura Y."/>
            <person name="Ohara O."/>
            <person name="Isogai T."/>
            <person name="Sugano S."/>
        </authorList>
    </citation>
    <scope>NUCLEOTIDE SEQUENCE [LARGE SCALE MRNA] (ISOFORM 1)</scope>
    <scope>VARIANT ASN-35</scope>
    <source>
        <tissue>Spleen</tissue>
    </source>
</reference>
<reference key="3">
    <citation type="journal article" date="2003" name="Nature">
        <title>The DNA sequence and analysis of human chromosome 6.</title>
        <authorList>
            <person name="Mungall A.J."/>
            <person name="Palmer S.A."/>
            <person name="Sims S.K."/>
            <person name="Edwards C.A."/>
            <person name="Ashurst J.L."/>
            <person name="Wilming L."/>
            <person name="Jones M.C."/>
            <person name="Horton R."/>
            <person name="Hunt S.E."/>
            <person name="Scott C.E."/>
            <person name="Gilbert J.G.R."/>
            <person name="Clamp M.E."/>
            <person name="Bethel G."/>
            <person name="Milne S."/>
            <person name="Ainscough R."/>
            <person name="Almeida J.P."/>
            <person name="Ambrose K.D."/>
            <person name="Andrews T.D."/>
            <person name="Ashwell R.I.S."/>
            <person name="Babbage A.K."/>
            <person name="Bagguley C.L."/>
            <person name="Bailey J."/>
            <person name="Banerjee R."/>
            <person name="Barker D.J."/>
            <person name="Barlow K.F."/>
            <person name="Bates K."/>
            <person name="Beare D.M."/>
            <person name="Beasley H."/>
            <person name="Beasley O."/>
            <person name="Bird C.P."/>
            <person name="Blakey S.E."/>
            <person name="Bray-Allen S."/>
            <person name="Brook J."/>
            <person name="Brown A.J."/>
            <person name="Brown J.Y."/>
            <person name="Burford D.C."/>
            <person name="Burrill W."/>
            <person name="Burton J."/>
            <person name="Carder C."/>
            <person name="Carter N.P."/>
            <person name="Chapman J.C."/>
            <person name="Clark S.Y."/>
            <person name="Clark G."/>
            <person name="Clee C.M."/>
            <person name="Clegg S."/>
            <person name="Cobley V."/>
            <person name="Collier R.E."/>
            <person name="Collins J.E."/>
            <person name="Colman L.K."/>
            <person name="Corby N.R."/>
            <person name="Coville G.J."/>
            <person name="Culley K.M."/>
            <person name="Dhami P."/>
            <person name="Davies J."/>
            <person name="Dunn M."/>
            <person name="Earthrowl M.E."/>
            <person name="Ellington A.E."/>
            <person name="Evans K.A."/>
            <person name="Faulkner L."/>
            <person name="Francis M.D."/>
            <person name="Frankish A."/>
            <person name="Frankland J."/>
            <person name="French L."/>
            <person name="Garner P."/>
            <person name="Garnett J."/>
            <person name="Ghori M.J."/>
            <person name="Gilby L.M."/>
            <person name="Gillson C.J."/>
            <person name="Glithero R.J."/>
            <person name="Grafham D.V."/>
            <person name="Grant M."/>
            <person name="Gribble S."/>
            <person name="Griffiths C."/>
            <person name="Griffiths M.N.D."/>
            <person name="Hall R."/>
            <person name="Halls K.S."/>
            <person name="Hammond S."/>
            <person name="Harley J.L."/>
            <person name="Hart E.A."/>
            <person name="Heath P.D."/>
            <person name="Heathcott R."/>
            <person name="Holmes S.J."/>
            <person name="Howden P.J."/>
            <person name="Howe K.L."/>
            <person name="Howell G.R."/>
            <person name="Huckle E."/>
            <person name="Humphray S.J."/>
            <person name="Humphries M.D."/>
            <person name="Hunt A.R."/>
            <person name="Johnson C.M."/>
            <person name="Joy A.A."/>
            <person name="Kay M."/>
            <person name="Keenan S.J."/>
            <person name="Kimberley A.M."/>
            <person name="King A."/>
            <person name="Laird G.K."/>
            <person name="Langford C."/>
            <person name="Lawlor S."/>
            <person name="Leongamornlert D.A."/>
            <person name="Leversha M."/>
            <person name="Lloyd C.R."/>
            <person name="Lloyd D.M."/>
            <person name="Loveland J.E."/>
            <person name="Lovell J."/>
            <person name="Martin S."/>
            <person name="Mashreghi-Mohammadi M."/>
            <person name="Maslen G.L."/>
            <person name="Matthews L."/>
            <person name="McCann O.T."/>
            <person name="McLaren S.J."/>
            <person name="McLay K."/>
            <person name="McMurray A."/>
            <person name="Moore M.J.F."/>
            <person name="Mullikin J.C."/>
            <person name="Niblett D."/>
            <person name="Nickerson T."/>
            <person name="Novik K.L."/>
            <person name="Oliver K."/>
            <person name="Overton-Larty E.K."/>
            <person name="Parker A."/>
            <person name="Patel R."/>
            <person name="Pearce A.V."/>
            <person name="Peck A.I."/>
            <person name="Phillimore B.J.C.T."/>
            <person name="Phillips S."/>
            <person name="Plumb R.W."/>
            <person name="Porter K.M."/>
            <person name="Ramsey Y."/>
            <person name="Ranby S.A."/>
            <person name="Rice C.M."/>
            <person name="Ross M.T."/>
            <person name="Searle S.M."/>
            <person name="Sehra H.K."/>
            <person name="Sheridan E."/>
            <person name="Skuce C.D."/>
            <person name="Smith S."/>
            <person name="Smith M."/>
            <person name="Spraggon L."/>
            <person name="Squares S.L."/>
            <person name="Steward C.A."/>
            <person name="Sycamore N."/>
            <person name="Tamlyn-Hall G."/>
            <person name="Tester J."/>
            <person name="Theaker A.J."/>
            <person name="Thomas D.W."/>
            <person name="Thorpe A."/>
            <person name="Tracey A."/>
            <person name="Tromans A."/>
            <person name="Tubby B."/>
            <person name="Wall M."/>
            <person name="Wallis J.M."/>
            <person name="West A.P."/>
            <person name="White S.S."/>
            <person name="Whitehead S.L."/>
            <person name="Whittaker H."/>
            <person name="Wild A."/>
            <person name="Willey D.J."/>
            <person name="Wilmer T.E."/>
            <person name="Wood J.M."/>
            <person name="Wray P.W."/>
            <person name="Wyatt J.C."/>
            <person name="Young L."/>
            <person name="Younger R.M."/>
            <person name="Bentley D.R."/>
            <person name="Coulson A."/>
            <person name="Durbin R.M."/>
            <person name="Hubbard T."/>
            <person name="Sulston J.E."/>
            <person name="Dunham I."/>
            <person name="Rogers J."/>
            <person name="Beck S."/>
        </authorList>
    </citation>
    <scope>NUCLEOTIDE SEQUENCE [LARGE SCALE GENOMIC DNA]</scope>
</reference>
<reference key="4">
    <citation type="journal article" date="2004" name="Genome Res.">
        <title>The status, quality, and expansion of the NIH full-length cDNA project: the Mammalian Gene Collection (MGC).</title>
        <authorList>
            <consortium name="The MGC Project Team"/>
        </authorList>
    </citation>
    <scope>NUCLEOTIDE SEQUENCE [LARGE SCALE MRNA] (ISOFORMS 1 AND 2)</scope>
    <scope>VARIANTS ASN-35 AND HIS-261</scope>
    <source>
        <tissue>Brain</tissue>
        <tissue>Prostate</tissue>
        <tissue>Testis</tissue>
    </source>
</reference>
<reference key="5">
    <citation type="journal article" date="2009" name="Science">
        <title>Lysine acetylation targets protein complexes and co-regulates major cellular functions.</title>
        <authorList>
            <person name="Choudhary C."/>
            <person name="Kumar C."/>
            <person name="Gnad F."/>
            <person name="Nielsen M.L."/>
            <person name="Rehman M."/>
            <person name="Walther T.C."/>
            <person name="Olsen J.V."/>
            <person name="Mann M."/>
        </authorList>
    </citation>
    <scope>ACETYLATION [LARGE SCALE ANALYSIS] AT LYS-7 AND LYS-414</scope>
    <scope>IDENTIFICATION BY MASS SPECTROMETRY [LARGE SCALE ANALYSIS]</scope>
</reference>
<reference key="6">
    <citation type="journal article" date="2010" name="Sci. Signal.">
        <title>Quantitative phosphoproteomics reveals widespread full phosphorylation site occupancy during mitosis.</title>
        <authorList>
            <person name="Olsen J.V."/>
            <person name="Vermeulen M."/>
            <person name="Santamaria A."/>
            <person name="Kumar C."/>
            <person name="Miller M.L."/>
            <person name="Jensen L.J."/>
            <person name="Gnad F."/>
            <person name="Cox J."/>
            <person name="Jensen T.S."/>
            <person name="Nigg E.A."/>
            <person name="Brunak S."/>
            <person name="Mann M."/>
        </authorList>
    </citation>
    <scope>PHOSPHORYLATION [LARGE SCALE ANALYSIS] AT SER-143</scope>
    <scope>IDENTIFICATION BY MASS SPECTROMETRY [LARGE SCALE ANALYSIS]</scope>
    <source>
        <tissue>Cervix carcinoma</tissue>
    </source>
</reference>
<reference key="7">
    <citation type="journal article" date="2011" name="Nature">
        <title>A diverse range of gene products are effectors of the type I interferon antiviral response.</title>
        <authorList>
            <person name="Schoggins J.W."/>
            <person name="Wilson S.J."/>
            <person name="Panis M."/>
            <person name="Murphy M.Y."/>
            <person name="Jones C.T."/>
            <person name="Bieniasz P."/>
            <person name="Rice C.M."/>
        </authorList>
    </citation>
    <scope>FUNCTION</scope>
    <scope>INDUCTION</scope>
</reference>
<reference key="8">
    <citation type="journal article" date="2013" name="Cell Rep.">
        <title>The innate immune DNA sensor cGAS produces a noncanonical cyclic dinucleotide that activates human STING.</title>
        <authorList>
            <person name="Diner E.J."/>
            <person name="Burdette D.L."/>
            <person name="Wilson S.C."/>
            <person name="Monroe K.M."/>
            <person name="Kellenberger C.A."/>
            <person name="Hyodo M."/>
            <person name="Hayakawa Y."/>
            <person name="Hammond M.C."/>
            <person name="Vance R.E."/>
        </authorList>
    </citation>
    <scope>FUNCTION</scope>
</reference>
<reference key="9">
    <citation type="journal article" date="2013" name="Immunity">
        <title>The capsids of HIV-1 and HIV-2 determine immune detection of the viral cDNA by the innate sensor cGAS in dendritic cells.</title>
        <authorList>
            <person name="Lahaye X."/>
            <person name="Satoh T."/>
            <person name="Gentili M."/>
            <person name="Cerboni S."/>
            <person name="Conrad C."/>
            <person name="Hurbain I."/>
            <person name="El Marjou A."/>
            <person name="Lacabaratz C."/>
            <person name="Lelievre J.D."/>
            <person name="Manel N."/>
        </authorList>
    </citation>
    <scope>FUNCTION</scope>
</reference>
<reference key="10">
    <citation type="journal article" date="2013" name="Nature">
        <title>Structural mechanism of cytosolic DNA sensing by cGAS.</title>
        <authorList>
            <person name="Civril F."/>
            <person name="Deimling T."/>
            <person name="de Oliveira Mann C.C."/>
            <person name="Ablasser A."/>
            <person name="Moldt M."/>
            <person name="Witte G."/>
            <person name="Hornung V."/>
            <person name="Hopfner K.P."/>
        </authorList>
    </citation>
    <scope>FUNCTION</scope>
    <scope>CATALYTIC ACTIVITY</scope>
    <scope>MUTAGENESIS OF LYS-173; LEU-174; ARG-176; 212-GLY-SER-213; 225-GLU--ASP-227; 396-CYS-CYS-397; LYS-407 AND LYS-411</scope>
</reference>
<reference key="11">
    <citation type="journal article" date="2013" name="Nature">
        <title>Cell intrinsic immunity spreads to bystander cells via the intercellular transfer of cGAMP.</title>
        <authorList>
            <person name="Ablasser A."/>
            <person name="Schmid-Burgk J.L."/>
            <person name="Hemmerling I."/>
            <person name="Horvath G.L."/>
            <person name="Schmidt T."/>
            <person name="Latz E."/>
            <person name="Hornung V."/>
        </authorList>
    </citation>
    <scope>FUNCTION</scope>
</reference>
<reference key="12">
    <citation type="journal article" date="2013" name="Science">
        <title>Cyclic GMP-AMP synthase is an innate immune sensor of HIV and other retroviruses.</title>
        <authorList>
            <person name="Gao D."/>
            <person name="Wu J."/>
            <person name="Wu Y.T."/>
            <person name="Du F."/>
            <person name="Aroh C."/>
            <person name="Yan N."/>
            <person name="Sun L."/>
            <person name="Chen Z.J."/>
        </authorList>
    </citation>
    <scope>FUNCTION</scope>
</reference>
<reference key="13">
    <citation type="journal article" date="2014" name="Cell">
        <title>Structure-guided reprogramming of human cGAS dinucleotide linkage specificity.</title>
        <authorList>
            <person name="Kranzusch P.J."/>
            <person name="Lee A.S."/>
            <person name="Wilson S.C."/>
            <person name="Solovykh M.S."/>
            <person name="Vance R.E."/>
            <person name="Berger J.M."/>
            <person name="Doudna J.A."/>
        </authorList>
    </citation>
    <scope>FUNCTION</scope>
    <scope>CATALYTIC ACTIVITY</scope>
    <scope>MUTAGENESIS OF THR-211; ARG-376 AND TYR-436</scope>
</reference>
<reference key="14">
    <citation type="journal article" date="2015" name="Cell">
        <title>PQBP1 is a proximal sensor of the cGAS-dependent innate response to HIV-1.</title>
        <authorList>
            <person name="Yoh S.M."/>
            <person name="Schneider M."/>
            <person name="Seifried J."/>
            <person name="Soonthornvacharin S."/>
            <person name="Akleh R.E."/>
            <person name="Olivieri K.C."/>
            <person name="De Jesus P.D."/>
            <person name="Ruan C."/>
            <person name="de Castro E."/>
            <person name="Ruiz P.A."/>
            <person name="Germanaud D."/>
            <person name="des Portes V."/>
            <person name="Garcia-Sastre A."/>
            <person name="Koenig R."/>
            <person name="Chanda S.K."/>
        </authorList>
    </citation>
    <scope>FUNCTION</scope>
    <scope>INTERACTION WITH PQBP1</scope>
</reference>
<reference key="15">
    <citation type="journal article" date="2015" name="Cell Host Microbe">
        <title>Inhibition of cGAS DNA Sensing by a Herpesvirus Virion Protein.</title>
        <authorList>
            <person name="Wu J.J."/>
            <person name="Li W."/>
            <person name="Shao Y."/>
            <person name="Avey D."/>
            <person name="Fu B."/>
            <person name="Gillen J."/>
            <person name="Hand T."/>
            <person name="Ma S."/>
            <person name="Liu X."/>
            <person name="Miley W."/>
            <person name="Konrad A."/>
            <person name="Neipel F."/>
            <person name="Stuerzl M."/>
            <person name="Whitby D."/>
            <person name="Li H."/>
            <person name="Zhu F."/>
        </authorList>
    </citation>
    <scope>INTERACTION WITH HHV-8 PROTEIN ORF52 (MICROBIAL INFECTION)</scope>
</reference>
<reference key="16">
    <citation type="journal article" date="2015" name="Cell Host Microbe">
        <title>Mycobacterium tuberculosis differentially activates cGAS- and inflammasome-dependent intracellular immune responses through ESX-1.</title>
        <authorList>
            <person name="Wassermann R."/>
            <person name="Gulen M.F."/>
            <person name="Sala C."/>
            <person name="Perin S.G."/>
            <person name="Lou Y."/>
            <person name="Rybniker J."/>
            <person name="Schmid-Burgk J.L."/>
            <person name="Schmidt T."/>
            <person name="Hornung V."/>
            <person name="Cole S.T."/>
            <person name="Ablasser A."/>
        </authorList>
    </citation>
    <scope>FUNCTION</scope>
    <scope>SUBCELLULAR LOCATION</scope>
</reference>
<reference key="17">
    <citation type="journal article" date="2015" name="Cell Rep.">
        <title>Akt kinase-mediated checkpoint of cGAS DNA sensing pathway.</title>
        <authorList>
            <person name="Seo G.J."/>
            <person name="Yang A."/>
            <person name="Tan B."/>
            <person name="Kim S."/>
            <person name="Liang Q."/>
            <person name="Choi Y."/>
            <person name="Yuan W."/>
            <person name="Feng P."/>
            <person name="Park H.S."/>
            <person name="Jung J.U."/>
        </authorList>
    </citation>
    <scope>PHOSPHORYLATION AT SER-305</scope>
    <scope>ACTIVITY REGULATION</scope>
    <scope>MUTAGENESIS OF SER-305</scope>
</reference>
<reference key="18">
    <citation type="journal article" date="2015" name="Mol. Cell">
        <title>Ancient origin of cGAS-STING reveals mechanism of universal 2',3' cGAMP signaling.</title>
        <authorList>
            <person name="Kranzusch P.J."/>
            <person name="Wilson S.C."/>
            <person name="Lee A.S."/>
            <person name="Berger J.M."/>
            <person name="Doudna J.A."/>
            <person name="Vance R.E."/>
        </authorList>
    </citation>
    <scope>FUNCTION</scope>
    <scope>ACTIVITY REGULATION</scope>
</reference>
<reference key="19">
    <citation type="journal article" date="2015" name="Science">
        <title>Transmission of innate immune signaling by packaging of cGAMP in viral particles.</title>
        <authorList>
            <person name="Gentili M."/>
            <person name="Kowal J."/>
            <person name="Tkach M."/>
            <person name="Satoh T."/>
            <person name="Lahaye X."/>
            <person name="Conrad C."/>
            <person name="Boyron M."/>
            <person name="Lombard B."/>
            <person name="Durand S."/>
            <person name="Kroemer G."/>
            <person name="Loew D."/>
            <person name="Dalod M."/>
            <person name="Thery C."/>
            <person name="Manel N."/>
        </authorList>
    </citation>
    <scope>FUNCTION</scope>
    <scope>MUTAGENESIS OF 225-GLU--ASP-227</scope>
</reference>
<reference key="20">
    <citation type="journal article" date="2016" name="Immunity">
        <title>Sumoylation promotes the stability of the DNA sensor cGAS and the adaptor STING to regulate the kinetics of response to DNA virus.</title>
        <authorList>
            <person name="Hu M.M."/>
            <person name="Yang Q."/>
            <person name="Xie X.Q."/>
            <person name="Liao C.Y."/>
            <person name="Lin H."/>
            <person name="Liu T.T."/>
            <person name="Yin L."/>
            <person name="Shu H.B."/>
        </authorList>
    </citation>
    <scope>SUMOYLATION AT LYS-231 AND LYS-479</scope>
    <scope>UBIQUITINATION AT LYS-285 AND LYS-479</scope>
    <scope>MUTAGENESIS OF LYS-231 AND LYS-479</scope>
</reference>
<reference key="21">
    <citation type="journal article" date="2016" name="Mol. Cell">
        <title>TRIM14 inhibits cGAS degradation mediated by selective autophagy receptor p62 to promote innate immune responses.</title>
        <authorList>
            <person name="Chen M."/>
            <person name="Meng Q."/>
            <person name="Qin Y."/>
            <person name="Liang P."/>
            <person name="Tan P."/>
            <person name="He L."/>
            <person name="Zhou Y."/>
            <person name="Chen Y."/>
            <person name="Huang J."/>
            <person name="Wang R.F."/>
            <person name="Cui J."/>
        </authorList>
    </citation>
    <scope>UBIQUITINATION AT LYS-414</scope>
    <scope>INTERACTION WITH TRIM14</scope>
    <scope>MUTAGENESIS OF LYS-414</scope>
</reference>
<reference key="22">
    <citation type="journal article" date="2017" name="FEBS Lett.">
        <title>The N terminus of cGAS de-oligomerizes the cGAS:DNA complex and lifts the DNA size restriction of core-cGAS activity.</title>
        <authorList>
            <person name="Lee A."/>
            <person name="Park E.B."/>
            <person name="Lee J."/>
            <person name="Choi B.S."/>
            <person name="Kang S.J."/>
        </authorList>
    </citation>
    <scope>FUNCTION</scope>
    <scope>DOMAIN</scope>
</reference>
<reference key="23">
    <citation type="journal article" date="2017" name="Immunity">
        <title>Inflammasome activation triggers caspase-1-mediated cleavage of cGAS to regulate responses to DNA virus infection.</title>
        <authorList>
            <person name="Wang Y."/>
            <person name="Ning X."/>
            <person name="Gao P."/>
            <person name="Wu S."/>
            <person name="Sha M."/>
            <person name="Lv M."/>
            <person name="Zhou X."/>
            <person name="Gao J."/>
            <person name="Fang R."/>
            <person name="Meng G."/>
            <person name="Su X."/>
            <person name="Jiang Z."/>
        </authorList>
    </citation>
    <scope>FUNCTION</scope>
    <scope>CLEAVAGE</scope>
    <scope>ACTIVITY REGULATION</scope>
    <scope>DOMAIN</scope>
    <scope>MUTAGENESIS OF ASP-33; ASP-67; ASP-90; ASP-95; ASP-140 AND ASP-157</scope>
</reference>
<reference key="24">
    <citation type="journal article" date="2017" name="J. Immunol.">
        <title>Nonspecific DNA Binding of cGAS N Terminus Promotes cGAS Activation.</title>
        <authorList>
            <person name="Tao J."/>
            <person name="Zhang X.W."/>
            <person name="Jin J."/>
            <person name="Du X.X."/>
            <person name="Lian T."/>
            <person name="Yang J."/>
            <person name="Zhou X."/>
            <person name="Jiang Z."/>
            <person name="Su X.D."/>
        </authorList>
    </citation>
    <scope>FUNCTION</scope>
    <scope>DNA-BINDING</scope>
    <scope>DOMAIN</scope>
    <scope>MONOMER</scope>
</reference>
<reference key="25">
    <citation type="journal article" date="2017" name="Nature">
        <title>cGAS surveillance of micronuclei links genome instability to innate immunity.</title>
        <authorList>
            <person name="Mackenzie K.J."/>
            <person name="Carroll P."/>
            <person name="Martin C.A."/>
            <person name="Murina O."/>
            <person name="Fluteau A."/>
            <person name="Simpson D.J."/>
            <person name="Olova N."/>
            <person name="Sutcliffe H."/>
            <person name="Rainger J.K."/>
            <person name="Leitch A."/>
            <person name="Osborn R.T."/>
            <person name="Wheeler A.P."/>
            <person name="Nowotny M."/>
            <person name="Gilbert N."/>
            <person name="Chandra T."/>
            <person name="Reijns M.A.M."/>
            <person name="Jackson A.P."/>
        </authorList>
    </citation>
    <scope>FUNCTION</scope>
</reference>
<reference key="26">
    <citation type="journal article" date="2017" name="Nature">
        <title>Mitotic progression following DNA damage enables pattern recognition within micronuclei.</title>
        <authorList>
            <person name="Harding S.M."/>
            <person name="Benci J.L."/>
            <person name="Irianto J."/>
            <person name="Discher D.E."/>
            <person name="Minn A.J."/>
            <person name="Greenberg R.A."/>
        </authorList>
    </citation>
    <scope>FUNCTION</scope>
</reference>
<reference key="27">
    <citation type="journal article" date="2017" name="PLoS Pathog.">
        <title>The E3 ubiquitin ligase RNF185 facilitates the cGAS-mediated innate immune response.</title>
        <authorList>
            <person name="Wang Q."/>
            <person name="Huang L."/>
            <person name="Hong Z."/>
            <person name="Lv Z."/>
            <person name="Mao Z."/>
            <person name="Tang Y."/>
            <person name="Kong X."/>
            <person name="Li S."/>
            <person name="Cui Y."/>
            <person name="Liu H."/>
            <person name="Zhang L."/>
            <person name="Zhang X."/>
            <person name="Jiang L."/>
            <person name="Wang C."/>
            <person name="Zhou Q."/>
        </authorList>
    </citation>
    <scope>UBIQUITINATION AT LYS-173 AND LYS-384</scope>
    <scope>ACTIVITY REGULATION</scope>
    <scope>MUTAGENESIS OF LYS-173 AND LYS-384</scope>
</reference>
<reference key="28">
    <citation type="journal article" date="2018" name="Cell">
        <title>NONO detects the nuclear HIV capsid to promote cGAS-mediated innate immune activation.</title>
        <authorList>
            <person name="Lahaye X."/>
            <person name="Gentili M."/>
            <person name="Silvin A."/>
            <person name="Conrad C."/>
            <person name="Picard L."/>
            <person name="Jouve M."/>
            <person name="Zueva E."/>
            <person name="Maurin M."/>
            <person name="Nadalin F."/>
            <person name="Knott G.J."/>
            <person name="Zhao B."/>
            <person name="Du F."/>
            <person name="Rio M."/>
            <person name="Amiel J."/>
            <person name="Fox A.H."/>
            <person name="Li P."/>
            <person name="Etienne L."/>
            <person name="Bond C.S."/>
            <person name="Colleaux L."/>
            <person name="Manel N."/>
        </authorList>
    </citation>
    <scope>FUNCTION</scope>
    <scope>SUBCELLULAR LOCATION</scope>
</reference>
<reference key="29">
    <citation type="journal article" date="2018" name="Cell Biosci.">
        <title>RINCK-mediated monoubiquitination of cGAS promotes antiviral innate immune responses.</title>
        <authorList>
            <person name="Liu Z.S."/>
            <person name="Zhang Z.Y."/>
            <person name="Cai H."/>
            <person name="Zhao M."/>
            <person name="Mao J."/>
            <person name="Dai J."/>
            <person name="Xia T."/>
            <person name="Zhang X.M."/>
            <person name="Li T."/>
        </authorList>
    </citation>
    <scope>UBIQUITINATION</scope>
</reference>
<reference key="30">
    <citation type="journal article" date="2018" name="Cell Host Microbe">
        <title>Human Cytomegalovirus Protein UL31 Inhibits DNA Sensing of cGAS to Mediate Immune Evasion.</title>
        <authorList>
            <person name="Huang Z.F."/>
            <person name="Zou H.M."/>
            <person name="Liao B.W."/>
            <person name="Zhang H.Y."/>
            <person name="Yang Y."/>
            <person name="Fu Y.Z."/>
            <person name="Wang S.Y."/>
            <person name="Luo M.H."/>
            <person name="Wang Y.Y."/>
        </authorList>
    </citation>
    <scope>INTERACTION WITH CYTOMEGALOVIRUS PROTEIN UL31 (MICROBIAL INFECTION)</scope>
    <scope>SUBCELLULAR LOCATION</scope>
</reference>
<reference key="31">
    <citation type="journal article" date="2018" name="Cell Host Microbe">
        <title>Species-Specific Deamidation of cGAS by Herpes Simplex Virus UL37 Protein Facilitates Viral Replication.</title>
        <authorList>
            <person name="Zhang J."/>
            <person name="Zhao J."/>
            <person name="Xu S."/>
            <person name="Li J."/>
            <person name="He S."/>
            <person name="Zeng Y."/>
            <person name="Xie L."/>
            <person name="Xie N."/>
            <person name="Liu T."/>
            <person name="Lee K."/>
            <person name="Seo G.J."/>
            <person name="Chen L."/>
            <person name="Stabell A.C."/>
            <person name="Xia Z."/>
            <person name="Sawyer S.L."/>
            <person name="Jung J."/>
            <person name="Huang C."/>
            <person name="Feng P."/>
        </authorList>
    </citation>
    <scope>INTERACTION WITH HERPES SIMPLEX VIRUS 1 PROTEIN UL37 (MICROBIAL INFECTION)</scope>
    <scope>DEAMIDATION AT ASN-210; ASN-389; GLN-451 AND GLN-454</scope>
    <scope>MUTAGENESIS OF ASN-210</scope>
</reference>
<reference key="32">
    <citation type="journal article" date="2018" name="J. Virol.">
        <title>Herpes simplex virus 1 tegument protein VP22 abrogates cGAS/STING-mediated antiviral innate immunity.</title>
        <authorList>
            <person name="Huang J."/>
            <person name="You H."/>
            <person name="Su C."/>
            <person name="Li Y."/>
            <person name="Chen S."/>
            <person name="Zheng C."/>
        </authorList>
    </citation>
    <scope>INTERACTION WITH HERPES SIMPLEX VIRUS 1 PROTEIN UL49/VP22 (MICROBIAL INFECTION)</scope>
</reference>
<reference key="33">
    <citation type="journal article" date="2018" name="Nature">
        <title>Nuclear cGAS suppresses DNA repair and promotes tumorigenesis.</title>
        <authorList>
            <person name="Liu H."/>
            <person name="Zhang H."/>
            <person name="Wu X."/>
            <person name="Ma D."/>
            <person name="Wu J."/>
            <person name="Wang L."/>
            <person name="Jiang Y."/>
            <person name="Fei Y."/>
            <person name="Zhu C."/>
            <person name="Tan R."/>
            <person name="Jungblut P."/>
            <person name="Pei G."/>
            <person name="Dorhoi A."/>
            <person name="Yan Q."/>
            <person name="Zhang F."/>
            <person name="Zheng R."/>
            <person name="Liu S."/>
            <person name="Liang H."/>
            <person name="Liu Z."/>
            <person name="Yang H."/>
            <person name="Chen J."/>
            <person name="Wang P."/>
            <person name="Tang T."/>
            <person name="Peng W."/>
            <person name="Hu Z."/>
            <person name="Xu Z."/>
            <person name="Huang X."/>
            <person name="Wang J."/>
            <person name="Li H."/>
            <person name="Zhou Y."/>
            <person name="Liu F."/>
            <person name="Yan D."/>
            <person name="Kaufmann S.H.E."/>
            <person name="Chen C."/>
            <person name="Mao Z."/>
            <person name="Ge B."/>
        </authorList>
    </citation>
    <scope>FUNCTION</scope>
    <scope>SUBCELLULAR LOCATION</scope>
    <scope>PHOSPHORYLATION AT TYR-215</scope>
    <scope>INTERACTION WITH PARP1</scope>
    <scope>MUTAGENESIS OF 171-LYS--LEU-174; 210-ASN--TYR-214; TYR-215; 225-GLU--ASP-227; 295-ASP--SER-305; ASP-319; LYS-384 AND LYS-407</scope>
</reference>
<reference key="34">
    <citation type="journal article" date="2018" name="Nat. Commun.">
        <title>TRIM56-mediated monoubiquitination of cGAS for cytosolic DNA sensing.</title>
        <authorList>
            <person name="Seo G.J."/>
            <person name="Kim C."/>
            <person name="Shin W.J."/>
            <person name="Sklan E.H."/>
            <person name="Eoh H."/>
            <person name="Jung J.U."/>
        </authorList>
    </citation>
    <scope>UBIQUITINATION</scope>
</reference>
<reference key="35">
    <citation type="journal article" date="2018" name="Nat. Commun.">
        <title>ZCCHC3 is a co-sensor of cGAS for dsDNA recognition in innate immune response.</title>
        <authorList>
            <person name="Lian H."/>
            <person name="Wei J."/>
            <person name="Zang R."/>
            <person name="Ye W."/>
            <person name="Yang Q."/>
            <person name="Zhang X.N."/>
            <person name="Chen Y.D."/>
            <person name="Fu Y.Z."/>
            <person name="Hu M.M."/>
            <person name="Lei C.Q."/>
            <person name="Luo W.W."/>
            <person name="Li S."/>
            <person name="Shu H.B."/>
        </authorList>
    </citation>
    <scope>INTERACTION WITH ZCCHC3</scope>
</reference>
<reference key="36">
    <citation type="journal article" date="2018" name="J. Virol.">
        <title>Human Cytomegalovirus Tegument Protein pp65 (pUL83) Dampens Type I Interferon Production by Inactivating the DNA Sensor cGAS without Affecting STING.</title>
        <authorList>
            <person name="Biolatti M."/>
            <person name="Dell'Oste V."/>
            <person name="Pautasso S."/>
            <person name="Gugliesi F."/>
            <person name="von Einem J."/>
            <person name="Krapp C."/>
            <person name="Jakobsen M.R."/>
            <person name="Borgogna C."/>
            <person name="Gariglio M."/>
            <person name="De Andrea M."/>
            <person name="Landolfo S."/>
        </authorList>
    </citation>
    <scope>INTERACTION WITH HUMAN CYTOMEGALOVIRUS PROTEIN UL83 (MICROBIAL INFECTION)</scope>
    <scope>SUBCELLULAR LOCATION</scope>
</reference>
<reference key="37">
    <citation type="journal article" date="2018" name="Science">
        <title>DNA-induced liquid phase condensation of cGAS activates innate immune signaling.</title>
        <authorList>
            <person name="Du M."/>
            <person name="Chen Z.J."/>
        </authorList>
    </citation>
    <scope>FUNCTION</scope>
    <scope>ACTIVITY REGULATION</scope>
    <scope>CATALYTIC ACTIVITY</scope>
    <scope>COFACTOR</scope>
    <scope>DOMAIN</scope>
</reference>
<reference key="38">
    <citation type="journal article" date="2019" name="Cell">
        <title>Phosphoinositide interactions position cGAS at the plasma membrane to ensure efficient distinction between self- and viral DNA.</title>
        <authorList>
            <person name="Barnett K.C."/>
            <person name="Coronas-Serna J.M."/>
            <person name="Zhou W."/>
            <person name="Ernandes M.J."/>
            <person name="Cao A."/>
            <person name="Kranzusch P.J."/>
            <person name="Kagan J.C."/>
        </authorList>
    </citation>
    <scope>SUBCELLULAR LOCATION</scope>
    <scope>LIPID-BINDING</scope>
    <scope>MUTAGENESIS OF 71-ARG--ARG-75 AND 396-CYS-CYS-397</scope>
</reference>
<reference key="39">
    <citation type="journal article" date="2019" name="Cell">
        <title>Acetylation blocks cGAS activity and inhibits self-DNA-induced autoimmunity.</title>
        <authorList>
            <person name="Dai J."/>
            <person name="Huang Y.J."/>
            <person name="He X."/>
            <person name="Zhao M."/>
            <person name="Wang X."/>
            <person name="Liu Z.S."/>
            <person name="Xue W."/>
            <person name="Cai H."/>
            <person name="Zhan X.Y."/>
            <person name="Huang S.Y."/>
            <person name="He K."/>
            <person name="Wang H."/>
            <person name="Wang N."/>
            <person name="Sang Z."/>
            <person name="Li T."/>
            <person name="Han Q.Y."/>
            <person name="Mao J."/>
            <person name="Diao X."/>
            <person name="Song N."/>
            <person name="Chen Y."/>
            <person name="Li W.H."/>
            <person name="Man J.H."/>
            <person name="Li A.L."/>
            <person name="Zhou T."/>
            <person name="Liu Z.G."/>
            <person name="Zhang X.M."/>
            <person name="Li T."/>
        </authorList>
    </citation>
    <scope>ACETYLATION AT LYS-7; LYS-50; LYS-384; LYS-392; LYS-394 AND LYS-414</scope>
    <scope>FUNCTION</scope>
    <scope>CATALYTIC ACTIVITY</scope>
    <scope>SUBCELLULAR LOCATION</scope>
    <scope>SUBUNIT</scope>
    <scope>MUTAGENESIS OF LYS-7; LYS-50; LYS-384; LYS-392; LYS-394 AND LYS-414</scope>
</reference>
<reference key="40">
    <citation type="journal article" date="2019" name="Cell">
        <title>The cytoplasmic DNA sensor cGAS promotes mitotic cell death.</title>
        <authorList>
            <person name="Zierhut C."/>
            <person name="Yamaguchi N."/>
            <person name="Paredes M."/>
            <person name="Luo J.D."/>
            <person name="Carroll T."/>
            <person name="Funabiki H."/>
        </authorList>
    </citation>
    <scope>FUNCTION</scope>
    <scope>ACTIVITY REGULATION</scope>
    <scope>SUBCELLULAR LOCATION</scope>
    <scope>MUTAGENESIS OF 225-GLU--ASP-227 AND 407-LYS--LYS-411</scope>
</reference>
<reference key="41">
    <citation type="journal article" date="2019" name="Cell Rep.">
        <title>The N-Terminal domain of cGAS determines preferential association with centromeric DNA and innate immune activation in the nucleus.</title>
        <authorList>
            <person name="Gentili M."/>
            <person name="Lahaye X."/>
            <person name="Nadalin F."/>
            <person name="Nader G.P.F."/>
            <person name="Puig Lombardi E."/>
            <person name="Herve S."/>
            <person name="De Silva N.S."/>
            <person name="Rookhuizen D.C."/>
            <person name="Zueva E."/>
            <person name="Goudot C."/>
            <person name="Maurin M."/>
            <person name="Bochnakian A."/>
            <person name="Amigorena S."/>
            <person name="Piel M."/>
            <person name="Fachinetti D."/>
            <person name="Londono-Vallejo A."/>
            <person name="Manel N."/>
        </authorList>
    </citation>
    <scope>SUBCELLULAR LOCATION</scope>
</reference>
<reference key="42">
    <citation type="journal article" date="2019" name="Elife">
        <title>Tight nuclear tethering of cGAS is essential for preventing autoreactivity.</title>
        <authorList>
            <person name="Volkman H.E."/>
            <person name="Cambier S."/>
            <person name="Gray E.E."/>
            <person name="Stetson D.B."/>
        </authorList>
    </citation>
    <scope>SUBCELLULAR LOCATION</scope>
    <scope>MUTAGENESIS OF ARG-236 AND ARG-255</scope>
</reference>
<reference key="43">
    <citation type="journal article" date="2019" name="EMBO J.">
        <title>Chromatin-bound cGAS is an inhibitor of DNA repair and hence accelerates genome destabilization and cell death.</title>
        <authorList>
            <person name="Jiang H."/>
            <person name="Xue X."/>
            <person name="Panda S."/>
            <person name="Kawale A."/>
            <person name="Hooy R.M."/>
            <person name="Liang F."/>
            <person name="Sohn J."/>
            <person name="Sung P."/>
            <person name="Gekara N.O."/>
        </authorList>
    </citation>
    <scope>FUNCTION</scope>
    <scope>SUBCELLULAR LOCATION</scope>
    <scope>MUTAGENESIS OF LYS-171; LYS-173; 225-GLU--ASP-227; LYS-394 AND 396-CYS-CYS-397</scope>
</reference>
<reference key="44">
    <citation type="journal article" date="2020" name="EMBO Rep.">
        <title>Autoimmunity gene IRGM suppresses cGAS-STING and RIG-I-MAVS signaling to control interferon response.</title>
        <authorList>
            <person name="Jena K.K."/>
            <person name="Mehto S."/>
            <person name="Nath P."/>
            <person name="Chauhan N.R."/>
            <person name="Sahu R."/>
            <person name="Dhar K."/>
            <person name="Das S.K."/>
            <person name="Kolapalli S.P."/>
            <person name="Murmu K.C."/>
            <person name="Jain A."/>
            <person name="Krishna S."/>
            <person name="Sahoo B.S."/>
            <person name="Chattopadhyay S."/>
            <person name="Rusten T.E."/>
            <person name="Prasad P."/>
            <person name="Chauhan S."/>
            <person name="Chauhan S."/>
        </authorList>
    </citation>
    <scope>INTERACTION WITH IRGM</scope>
    <scope>PROTEIN DEGRADATION</scope>
</reference>
<reference key="45">
    <citation type="journal article" date="2019" name="J. Immunol.">
        <title>USP27X deubiquitinates and stabilizes the DNA sensor cGAS to regulate cytosolic DNA-mediated signaling.</title>
        <authorList>
            <person name="Guo Y."/>
            <person name="Jiang F."/>
            <person name="Kong L."/>
            <person name="Li B."/>
            <person name="Yang Y."/>
            <person name="Zhang L."/>
            <person name="Liu B."/>
            <person name="Zheng Y."/>
            <person name="Gao C."/>
        </authorList>
    </citation>
    <scope>UBIQUITINATION</scope>
    <scope>DEUBIQUITINATION</scope>
</reference>
<reference key="46">
    <citation type="journal article" date="2019" name="Mol. Cell">
        <title>Apoptotic caspases suppress type i interferon production via the cleavage of cGAS, MAVS, and IRF3.</title>
        <authorList>
            <person name="Ning X."/>
            <person name="Wang Y."/>
            <person name="Jing M."/>
            <person name="Sha M."/>
            <person name="Lv M."/>
            <person name="Gao P."/>
            <person name="Zhang R."/>
            <person name="Huang X."/>
            <person name="Feng J.M."/>
            <person name="Jiang Z."/>
        </authorList>
    </citation>
    <scope>PROTEOLYTIC CLEAVAGE</scope>
    <scope>MUTAGENESIS OF ASP-319</scope>
</reference>
<reference key="47">
    <citation type="journal article" date="2019" name="PLoS Pathog.">
        <title>Human cytomegalovirus protein UL42 antagonizes cGAS/MITA-mediated innate antiviral response.</title>
        <authorList>
            <person name="Fu Y.Z."/>
            <person name="Guo Y."/>
            <person name="Zou H.M."/>
            <person name="Su S."/>
            <person name="Wang S.Y."/>
            <person name="Yang Q."/>
            <person name="Luo M.H."/>
            <person name="Wang Y.Y."/>
        </authorList>
    </citation>
    <scope>INTERACTION WITH HUMAN CYTOMEGALOVIRUS PROTEIN UL42 (MICROBIAL INFECTION)</scope>
</reference>
<reference key="48">
    <citation type="journal article" date="2020" name="Cell">
        <title>TDP-43 triggers mitochondrial DNA release via mPTP to activate cGAS/STING in ALS.</title>
        <authorList>
            <person name="Yu C.H."/>
            <person name="Davidson S."/>
            <person name="Harapas C.R."/>
            <person name="Hilton J.B."/>
            <person name="Mlodzianoski M.J."/>
            <person name="Laohamonthonkul P."/>
            <person name="Louis C."/>
            <person name="Low R.R.J."/>
            <person name="Moecking J."/>
            <person name="De Nardo D."/>
            <person name="Balka K.R."/>
            <person name="Calleja D.J."/>
            <person name="Moghaddas F."/>
            <person name="Ni E."/>
            <person name="McLean C.A."/>
            <person name="Samson A.L."/>
            <person name="Tyebji S."/>
            <person name="Tonkin C.J."/>
            <person name="Bye C.R."/>
            <person name="Turner B.J."/>
            <person name="Pepin G."/>
            <person name="Gantier M.P."/>
            <person name="Rogers K.L."/>
            <person name="McArthur K."/>
            <person name="Crouch P.J."/>
            <person name="Masters S.L."/>
        </authorList>
    </citation>
    <scope>FUNCTION</scope>
</reference>
<reference key="49">
    <citation type="journal article" date="2020" name="Cell Rep.">
        <title>Mn2+ directly activates cGAS and structural analysis suggests Mn2+ Induces a noncanonical catalytic synthesis of 2'3'-cGAMP.</title>
        <authorList>
            <person name="Zhao Z."/>
            <person name="Ma Z."/>
            <person name="Wang B."/>
            <person name="Guan Y."/>
            <person name="Su X.D."/>
            <person name="Jiang Z."/>
        </authorList>
    </citation>
    <scope>FUNCTION</scope>
    <scope>CATALYTIC ACTIVITY</scope>
    <scope>COFACTOR</scope>
</reference>
<reference key="50">
    <citation type="journal article" date="2020" name="Cell Discov.">
        <title>Phosphorylation of cGAS by CDK1 impairs self-DNA sensing in mitosis.</title>
        <authorList>
            <person name="Zhong L."/>
            <person name="Hu M.M."/>
            <person name="Bian L.J."/>
            <person name="Liu Y."/>
            <person name="Chen Q."/>
            <person name="Shu H.B."/>
        </authorList>
    </citation>
    <scope>SUBCELLULAR LOCATION</scope>
    <scope>PHOSPHORYLATION AT SER-305</scope>
    <scope>MUTAGENESIS OF SER-305</scope>
</reference>
<reference key="51">
    <citation type="journal article" date="2020" name="EMBO J.">
        <title>Disrupting HIV-1 capsid formation causes cGAS sensing of viral DNA.</title>
        <authorList>
            <person name="Sumner R.P."/>
            <person name="Harrison L."/>
            <person name="Touizer E."/>
            <person name="Peacock T.P."/>
            <person name="Spencer M."/>
            <person name="Zuliani-Alvarez L."/>
            <person name="Towers G.J."/>
        </authorList>
    </citation>
    <scope>FUNCTION</scope>
</reference>
<reference key="52">
    <citation type="journal article" date="2020" name="J. Immunol.">
        <title>TRIM14 Is a Key Regulator of the Type I IFN Response during Mycobacterium tuberculosis Infection.</title>
        <authorList>
            <person name="Hoffpauir C.T."/>
            <person name="Bell S.L."/>
            <person name="West K.O."/>
            <person name="Jing T."/>
            <person name="Wagner A.R."/>
            <person name="Torres-Odio S."/>
            <person name="Cox J.S."/>
            <person name="West A.P."/>
            <person name="Li P."/>
            <person name="Patrick K.L."/>
            <person name="Watson R.O."/>
        </authorList>
    </citation>
    <scope>INTERACTION WITH TRIM14</scope>
</reference>
<reference key="53">
    <citation type="journal article" date="2020" name="Nature">
        <title>The molecular basis of tight nuclear tethering and inactivation of cGAS.</title>
        <authorList>
            <person name="Zhao B."/>
            <person name="Xu P."/>
            <person name="Rowlett C.M."/>
            <person name="Jing T."/>
            <person name="Shinde O."/>
            <person name="Lei Y."/>
            <person name="West A.P."/>
            <person name="Liu W.R."/>
            <person name="Li P."/>
        </authorList>
    </citation>
    <scope>INTERACTION WITH NUCLEOSOMES</scope>
    <scope>MUTAGENESIS OF ARG-236; ARG-246; LYS-252; LYS-254; ARG-255; LYS-258; LYS-327; LYS-347; ARG-349; LYS-350 AND LYS-355</scope>
</reference>
<reference key="54">
    <citation type="journal article" date="2020" name="Nature">
        <title>Structural basis for sequestration and autoinhibition of cGAS by chromatin.</title>
        <authorList>
            <person name="Michalski S."/>
            <person name="de Oliveira Mann C.C."/>
            <person name="Stafford C.A."/>
            <person name="Witte G."/>
            <person name="Bartho J."/>
            <person name="Lammens K."/>
            <person name="Hornung V."/>
            <person name="Hopfner K.P."/>
        </authorList>
    </citation>
    <scope>INTERACTION WITH NUCLEOSOMES</scope>
    <scope>MUTAGENESIS OF LYS-236 AND ARG-255</scope>
</reference>
<reference key="55">
    <citation type="journal article" date="2020" name="Nat. Commun.">
        <title>DNA-PK deficiency potentiates cGAS-mediated antiviral innate immunity.</title>
        <authorList>
            <person name="Sun X."/>
            <person name="Liu T."/>
            <person name="Zhao J."/>
            <person name="Xia H."/>
            <person name="Xie J."/>
            <person name="Guo Y."/>
            <person name="Zhong L."/>
            <person name="Li M."/>
            <person name="Yang Q."/>
            <person name="Peng C."/>
            <person name="Rouvet I."/>
            <person name="Belot A."/>
            <person name="Shu H.B."/>
            <person name="Feng P."/>
            <person name="Zhang J."/>
        </authorList>
    </citation>
    <scope>FUNCTION</scope>
    <scope>SUBUNIT</scope>
    <scope>PHOSPHORYLATION AT THR-68 AND SER-213</scope>
    <scope>ACTIVITY REGULATION</scope>
    <scope>MUTAGENESIS OF THR-68 AND SER-213</scope>
</reference>
<reference key="56">
    <citation type="journal article" date="2020" name="Nat. Genet.">
        <title>cGAS-mediated induction of type I interferon due to inborn errors of histone pre-mRNA processing.</title>
        <authorList>
            <person name="Uggenti C."/>
            <person name="Lepelley A."/>
            <person name="Depp M."/>
            <person name="Badrock A.P."/>
            <person name="Rodero M.P."/>
            <person name="El-Daher M.T."/>
            <person name="Rice G.I."/>
            <person name="Dhir S."/>
            <person name="Wheeler A.P."/>
            <person name="Dhir A."/>
            <person name="Albawardi W."/>
            <person name="Fremond M.L."/>
            <person name="Seabra L."/>
            <person name="Doig J."/>
            <person name="Blair N."/>
            <person name="Martin-Niclos M.J."/>
            <person name="Della Mina E."/>
            <person name="Rubio-Roldan A."/>
            <person name="Garcia-Perez J.L."/>
            <person name="Sproul D."/>
            <person name="Rehwinkel J."/>
            <person name="Hertzog J."/>
            <person name="Boland-Auge A."/>
            <person name="Olaso R."/>
            <person name="Deleuze J.F."/>
            <person name="Baruteau J."/>
            <person name="Brochard K."/>
            <person name="Buckley J."/>
            <person name="Cavallera V."/>
            <person name="Cereda C."/>
            <person name="De Waele L.M.H."/>
            <person name="Dobbie A."/>
            <person name="Doummar D."/>
            <person name="Elmslie F."/>
            <person name="Koch-Hogrebe M."/>
            <person name="Kumar R."/>
            <person name="Lamb K."/>
            <person name="Livingston J.H."/>
            <person name="Majumdar A."/>
            <person name="Lorenco C.M."/>
            <person name="Orcesi S."/>
            <person name="Peudenier S."/>
            <person name="Rostasy K."/>
            <person name="Salmon C.A."/>
            <person name="Scott C."/>
            <person name="Tonduti D."/>
            <person name="Touati G."/>
            <person name="Valente M."/>
            <person name="van der Linden H. Jr."/>
            <person name="Van Esch H."/>
            <person name="Vermelle M."/>
            <person name="Webb K."/>
            <person name="Jackson A.P."/>
            <person name="Reijns M.A.M."/>
            <person name="Gilbert N."/>
            <person name="Crow Y.J."/>
        </authorList>
    </citation>
    <scope>FUNCTION</scope>
    <scope>SUBCELLULAR LOCATION</scope>
</reference>
<reference key="57">
    <citation type="journal article" date="2020" name="Proc. Natl. Acad. Sci. U.S.A.">
        <title>KAT5 acetylates cGAS to promote innate immune response to DNA virus.</title>
        <authorList>
            <person name="Song Z.M."/>
            <person name="Lin H."/>
            <person name="Yi X.M."/>
            <person name="Guo W."/>
            <person name="Hu M.M."/>
            <person name="Shu H.B."/>
        </authorList>
    </citation>
    <scope>FUNCTION</scope>
    <scope>ACTIVITY REGULATION</scope>
    <scope>ACETYLATION AT LYS-21; LYS-47; LYS-50; LYS-56; LYS-62; LYS-63; LYS-82 AND LYS-83</scope>
    <scope>MUTAGENESIS OF LYS-47; LYS-56; LYS-62 AND LYS-83</scope>
</reference>
<reference key="58">
    <citation type="journal article" date="2020" name="Protein Cell">
        <title>Dephosphorylation of cGAS by PPP6C impairs its substrate binding activity and innate antiviral response.</title>
        <authorList>
            <person name="Li M."/>
            <person name="Shu H.B."/>
        </authorList>
    </citation>
    <scope>PHOSPHORYLATION AT THR-91; SER-98; SER-434 AND SER-435</scope>
    <scope>DEPHOSPHORYLATION</scope>
    <scope>ACTIVITY REGULATION</scope>
    <scope>MUTAGENESIS OF SER-435</scope>
</reference>
<reference key="59">
    <citation type="journal article" date="2020" name="Science">
        <title>BAF restricts cGAS on nuclear DNA to prevent innate immune activation.</title>
        <authorList>
            <person name="Guey B."/>
            <person name="Wischnewski M."/>
            <person name="Decout A."/>
            <person name="Makasheva K."/>
            <person name="Kaynak M."/>
            <person name="Sakar M.S."/>
            <person name="Fierz B."/>
            <person name="Ablasser A."/>
        </authorList>
    </citation>
    <scope>SUBCELLULAR LOCATION</scope>
    <scope>ACTIVITY REGULATION</scope>
</reference>
<reference key="60">
    <citation type="journal article" date="2021" name="Cell Rep.">
        <title>A Nuclear export signal is required for cGAS to sense cytosolic DNA.</title>
        <authorList>
            <person name="Sun H."/>
            <person name="Huang Y."/>
            <person name="Mei S."/>
            <person name="Xu F."/>
            <person name="Liu X."/>
            <person name="Zhao F."/>
            <person name="Yin L."/>
            <person name="Zhang D."/>
            <person name="Wei L."/>
            <person name="Wu C."/>
            <person name="Ma S."/>
            <person name="Wang J."/>
            <person name="Cen S."/>
            <person name="Liang C."/>
            <person name="Hu S."/>
            <person name="Guo F."/>
        </authorList>
    </citation>
    <scope>FUNCTION</scope>
    <scope>NUCLEAR EXPORT SIGNAL MOTIF</scope>
    <scope>MUTAGENESIS OF 169-LEU--LEU-174 AND LEU-172</scope>
</reference>
<reference key="61">
    <citation type="journal article" date="2021" name="Mol. Cell">
        <title>ER-directed TREX1 limits cGAS activation at micronuclei.</title>
        <authorList>
            <person name="Mohr L."/>
            <person name="Toufektchan E."/>
            <person name="von Morgen P."/>
            <person name="Chu K."/>
            <person name="Kapoor A."/>
            <person name="Maciejowski J."/>
        </authorList>
    </citation>
    <scope>ACTIVITY REGULATION</scope>
    <scope>SUBCELLULAR LOCATION</scope>
</reference>
<reference key="62">
    <citation type="journal article" date="2021" name="Mol. Cell">
        <title>cGAS phase separation inhibits TREX1-mediated DNA degradation and enhances cytosolic DNA sensing.</title>
        <authorList>
            <person name="Zhou W."/>
            <person name="Mohr L."/>
            <person name="Maciejowski J."/>
            <person name="Kranzusch P.J."/>
        </authorList>
    </citation>
    <scope>FUNCTION</scope>
    <scope>ACTIVITY REGULATION</scope>
</reference>
<reference key="63">
    <citation type="journal article" date="2021" name="Mol. Cell">
        <title>Translation stress and collided ribosomes are co-activators of cGAS.</title>
        <authorList>
            <person name="Wan L."/>
            <person name="Juszkiewicz S."/>
            <person name="Blears D."/>
            <person name="Bajpe P.K."/>
            <person name="Han Z."/>
            <person name="Faull P."/>
            <person name="Mitter R."/>
            <person name="Stewart A."/>
            <person name="Snijders A.P."/>
            <person name="Hegde R.S."/>
            <person name="Svejstrup J.Q."/>
        </authorList>
    </citation>
    <scope>FUNCTION</scope>
    <scope>ACTIVITY REGULATION</scope>
    <scope>SUBCELLULAR LOCATION</scope>
    <scope>MUTAGENESIS OF LYS-347; ARG-349; LYS-350 AND ARG-353</scope>
</reference>
<reference key="64">
    <citation type="journal article" date="2021" name="Mol. Cell">
        <title>Viral tegument proteins restrict cGAS-DNA phase separation to mediate immune evasion.</title>
        <authorList>
            <person name="Xu G."/>
            <person name="Liu C."/>
            <person name="Zhou S."/>
            <person name="Li Q."/>
            <person name="Feng Y."/>
            <person name="Sun P."/>
            <person name="Feng H."/>
            <person name="Gao Y."/>
            <person name="Zhu J."/>
            <person name="Luo X."/>
            <person name="Zhan Q."/>
            <person name="Liu S."/>
            <person name="Zhu S."/>
            <person name="Deng H."/>
            <person name="Li D."/>
            <person name="Gao P."/>
        </authorList>
    </citation>
    <scope>ACTIVITY REGULATION (MICROBIAL INFECTION)</scope>
    <scope>INTERACTION WITH HHV-8 PROTEIN ORF52 (MICROBIAL INFECTION)</scope>
    <scope>INTERACTION WITH HERPES SIMPLEX VIRUS 1 PROTEIN UL49/VP22 (MICROBIAL INFECTION)</scope>
    <scope>INTERACTION WITH HERPESVIRUS 3 PROTEIN ORF9 (MICROBIAL INFECTION)</scope>
</reference>
<reference key="65">
    <citation type="journal article" date="2020" name="PLoS Pathog.">
        <title>Chikungunya virus antagonizes cGAS-STING mediated type-I interferon responses by degrading cGAS.</title>
        <authorList>
            <person name="Webb L.G."/>
            <person name="Veloz J."/>
            <person name="Pintado-Silva J."/>
            <person name="Zhu T."/>
            <person name="Rangel M.V."/>
            <person name="Mutetwa T."/>
            <person name="Zhang L."/>
            <person name="Bernal-Rubio D."/>
            <person name="Figueroa D."/>
            <person name="Carrau L."/>
            <person name="Fenutria R."/>
            <person name="Potla U."/>
            <person name="Reid S.P."/>
            <person name="Yount J.S."/>
            <person name="Stapleford K.A."/>
            <person name="Aguirre S."/>
            <person name="Fernandez-Sesma A."/>
        </authorList>
    </citation>
    <scope>DEGRADATION BY CHIKUNGUNYA VIRUS CAPSID PROTEIN (MICROBIAL INFECTION)</scope>
</reference>
<reference key="66">
    <citation type="journal article" date="2021" name="Nucleic Acids Res.">
        <title>Cooperative DNA binding mediated by KicGAS/ORF52 oligomerization allows inhibition of DNA-induced phase separation and activation of cGAS.</title>
        <authorList>
            <person name="Bhowmik D."/>
            <person name="Du M."/>
            <person name="Tian Y."/>
            <person name="Ma S."/>
            <person name="Wu J."/>
            <person name="Chen Z."/>
            <person name="Yin Q."/>
            <person name="Zhu F."/>
        </authorList>
    </citation>
    <scope>ACTIVITY REGULATION (MICROBIAL INFECTION)</scope>
    <scope>INTERACTION WITH HHV-8 PROTEIN ORF52 (MICROBIAL INFECTION)</scope>
</reference>
<reference key="67">
    <citation type="journal article" date="2021" name="Science">
        <title>Phosphorylation and chromatin tethering prevent cGAS activation during mitosis.</title>
        <authorList>
            <person name="Li T."/>
            <person name="Huang T."/>
            <person name="Du M."/>
            <person name="Chen X."/>
            <person name="Du F."/>
            <person name="Ren J."/>
            <person name="Chen Z.J."/>
        </authorList>
    </citation>
    <scope>FUNCTION</scope>
    <scope>CATALYTIC ACTIVITY</scope>
    <scope>ACTIVITY REGULATION</scope>
    <scope>DOMAIN</scope>
    <scope>PHOSPHORYLATION AT SER-13; SER-37; SER-64; THR-68; THR-91; SER-116; SER-129; SER-143 AND SER-305</scope>
    <scope>MUTAGENESIS OF SER-13; THR-18; SER-23; THR-35; SER-37; SER-57; SER-59; SER-64; THR-68; THR-77; THR-91; SER-94; THR-97; SER-98; SER-116; SER-120; SER-129; THR-130; SER-143 AND SER-149</scope>
</reference>
<reference key="68">
    <citation type="journal article" date="2021" name="Sci. Signal.">
        <title>The cytosolic DNA sensor cGAS recognizes neutrophil extracellular traps.</title>
        <authorList>
            <person name="Apel F."/>
            <person name="Andreeva L."/>
            <person name="Knackstedt L.S."/>
            <person name="Streeck R."/>
            <person name="Frese C.K."/>
            <person name="Goosmann C."/>
            <person name="Hopfner K.P."/>
            <person name="Zychlinsky A."/>
        </authorList>
    </citation>
    <scope>FUNCTION</scope>
</reference>
<reference key="69">
    <citation type="journal article" date="2022" name="Cell Rep.">
        <title>DDX41 is required for cGAS-STING activation against DNA virus infection.</title>
        <authorList>
            <person name="Singh R.S."/>
            <person name="Vidhyasagar V."/>
            <person name="Yang S."/>
            <person name="Arna A.B."/>
            <person name="Yadav M."/>
            <person name="Aggarwal A."/>
            <person name="Aguilera A.N."/>
            <person name="Shinriki S."/>
            <person name="Bhanumathy K.K."/>
            <person name="Pandey K."/>
            <person name="Xu A."/>
            <person name="Rapin N."/>
            <person name="Bosch M."/>
            <person name="DeCoteau J."/>
            <person name="Xiang J."/>
            <person name="Vizeacoumar F.J."/>
            <person name="Zhou Y."/>
            <person name="Misra V."/>
            <person name="Matsui H."/>
            <person name="Ross S.R."/>
            <person name="Wu Y."/>
        </authorList>
    </citation>
    <scope>FUNCTION</scope>
    <scope>SUBCELLULAR LOCATION</scope>
    <scope>INTERACTION WITH DDX41</scope>
</reference>
<reference key="70">
    <citation type="journal article" date="2022" name="Bone Res.">
        <title>RIOX1-demethylated cGAS regulates ionizing radiation-elicited DNA repair.</title>
        <authorList>
            <person name="Xiao Y."/>
            <person name="Li J."/>
            <person name="Liao X."/>
            <person name="He Y."/>
            <person name="He T."/>
            <person name="Yang C."/>
            <person name="Jiang L."/>
            <person name="Jeon S.M."/>
            <person name="Lee J.H."/>
            <person name="Chen Y."/>
            <person name="Liu R."/>
            <person name="Chen Q."/>
        </authorList>
    </citation>
    <scope>METHYLATION AT LYS-506</scope>
</reference>
<reference key="71">
    <citation type="journal article" date="2022" name="EMBO J.">
        <title>ZDHHC18 negatively regulates cGAS-mediated innate immunity through palmitoylation.</title>
        <authorList>
            <person name="Shi C."/>
            <person name="Yang X."/>
            <person name="Liu Y."/>
            <person name="Li H."/>
            <person name="Chu H."/>
            <person name="Li G."/>
            <person name="Yin H."/>
        </authorList>
    </citation>
    <scope>FUNCTION</scope>
    <scope>SUBCELLULAR LOCATION</scope>
    <scope>PALMITOYLATION AT CYS-474</scope>
    <scope>MUTAGENESIS OF CYS-396</scope>
</reference>
<reference key="72">
    <citation type="journal article" date="2022" name="Nature">
        <title>The cGAS-STING pathway drives type I IFN immunopathology in COVID-19.</title>
        <authorList>
            <person name="Di Domizio J."/>
            <person name="Gulen M.F."/>
            <person name="Saidoune F."/>
            <person name="Thacker V.V."/>
            <person name="Yatim A."/>
            <person name="Sharma K."/>
            <person name="Nass T."/>
            <person name="Guenova E."/>
            <person name="Schaller M."/>
            <person name="Conrad C."/>
            <person name="Goepfert C."/>
            <person name="De Leval L."/>
            <person name="von Garnier C."/>
            <person name="Berezowska S."/>
            <person name="Dubois A."/>
            <person name="Gilliet M."/>
            <person name="Ablasser A."/>
        </authorList>
    </citation>
    <scope>FUNCTION</scope>
</reference>
<reference key="73">
    <citation type="journal article" date="2022" name="Mol. Cell">
        <title>Cytoplasmic PARP1 links the genome instability to the inhibition of antiviral immunity through PARylating cGAS.</title>
        <authorList>
            <person name="Wang F."/>
            <person name="Zhao M."/>
            <person name="Chang B."/>
            <person name="Zhou Y."/>
            <person name="Wu X."/>
            <person name="Ma M."/>
            <person name="Liu S."/>
            <person name="Cao Y."/>
            <person name="Zheng M."/>
            <person name="Dang Y."/>
            <person name="Xu J."/>
            <person name="Chen L."/>
            <person name="Liu T."/>
            <person name="Tang F."/>
            <person name="Ren Y."/>
            <person name="Xu Z."/>
            <person name="Mao Z."/>
            <person name="Huang K."/>
            <person name="Luo M."/>
            <person name="Li J."/>
            <person name="Liu H."/>
            <person name="Ge B."/>
        </authorList>
    </citation>
    <scope>FUNCTION</scope>
    <scope>ADP-RIBOSYLATION AT ASP-191</scope>
    <scope>MUTAGENESIS OF ASP-191 AND CYS-474</scope>
</reference>
<reference key="74">
    <citation type="journal article" date="2022" name="Nat. Commun.">
        <title>PCBP2 maintains antiviral signaling homeostasis by regulating cGAS enzymatic activity via antagonizing its condensation.</title>
        <authorList>
            <person name="Gu H."/>
            <person name="Yang J."/>
            <person name="Zhang J."/>
            <person name="Song Y."/>
            <person name="Zhang Y."/>
            <person name="Xu P."/>
            <person name="Zhu Y."/>
            <person name="Wang L."/>
            <person name="Zhang P."/>
            <person name="Li L."/>
            <person name="Chen D."/>
            <person name="Sun Q."/>
        </authorList>
    </citation>
    <scope>FUNCTION</scope>
    <scope>INTERACTION WITH PCBP2</scope>
</reference>
<reference key="75">
    <citation type="journal article" date="2022" name="Sci. Signal.">
        <title>MARCH8 attenuates cGAS-mediated innate immune responses through ubiquitylation.</title>
        <authorList>
            <person name="Yang X."/>
            <person name="Shi C."/>
            <person name="Li H."/>
            <person name="Shen S."/>
            <person name="Su C."/>
            <person name="Yin H."/>
        </authorList>
    </citation>
    <scope>FUNCTION</scope>
    <scope>UBIQUITINATION BY MARCHF8</scope>
    <scope>MUTAGENESIS OF LYS-411</scope>
</reference>
<reference key="76">
    <citation type="journal article" date="2023" name="Nat. Commun.">
        <title>Vaccinia E5 is a major inhibitor of the DNA sensor cGAS.</title>
        <authorList>
            <person name="Yang N."/>
            <person name="Wang Y."/>
            <person name="Dai P."/>
            <person name="Li T."/>
            <person name="Zierhut C."/>
            <person name="Tan A."/>
            <person name="Zhang T."/>
            <person name="Xiang J.Z."/>
            <person name="Ordureau A."/>
            <person name="Funabiki H."/>
            <person name="Chen Z."/>
            <person name="Deng L."/>
        </authorList>
    </citation>
    <scope>FUNCTION</scope>
    <scope>SUBCELLULAR LOCATION</scope>
    <scope>INTERACTION WITH VACCINIA PROTEIN OPG067 (MICROBIAL INFECTION)</scope>
</reference>
<reference key="77">
    <citation type="journal article" date="2023" name="Mol. Cell">
        <title>Targeting LYPLAL1-mediated cGAS depalmitoylation enhances the response to anti-tumor immunotherapy.</title>
        <authorList>
            <person name="Fan Y."/>
            <person name="Gao Y."/>
            <person name="Nie L."/>
            <person name="Hou T."/>
            <person name="Dan W."/>
            <person name="Wang Z."/>
            <person name="Liu T."/>
            <person name="Wei Y."/>
            <person name="Wang Y."/>
            <person name="Liu B."/>
            <person name="Que T."/>
            <person name="Lei Y."/>
            <person name="Zeng J."/>
            <person name="Ma J."/>
            <person name="Wei W."/>
            <person name="Li L."/>
        </authorList>
    </citation>
    <scope>PALMITOYLATION AT CYS-404 AND CYS-405</scope>
    <scope>MUTAGENESIS OF 396-CYS-CYS-397 AND 404-CYS-CYS-405</scope>
</reference>
<reference key="78">
    <citation type="journal article" date="2024" name="Nature">
        <title>AARS1 and AARS2 sense L-lactate to regulate cGAS as global lysine lactyltransferases.</title>
        <authorList>
            <person name="Li H."/>
            <person name="Liu C."/>
            <person name="Li R."/>
            <person name="Zhou L."/>
            <person name="Ran Y."/>
            <person name="Yang Q."/>
            <person name="Huang H."/>
            <person name="Lu H."/>
            <person name="Song H."/>
            <person name="Yang B."/>
            <person name="Ru H."/>
            <person name="Lin S."/>
            <person name="Zhang L."/>
        </authorList>
    </citation>
    <scope>LACTYLATION AT LYS-131</scope>
</reference>
<reference key="79">
    <citation type="journal article" date="2013" name="Cell Rep.">
        <title>Structure of human cGAS reveals a conserved family of second-messenger enzymes in innate immunity.</title>
        <authorList>
            <person name="Kranzusch P.J."/>
            <person name="Lee A.S."/>
            <person name="Berger J.M."/>
            <person name="Doudna J.A."/>
        </authorList>
    </citation>
    <scope>X-RAY CRYSTALLOGRAPHY (2.5 ANGSTROMS) OF 157-222 IN COMPLEX WITH ZINC IONS</scope>
    <scope>FUNCTION</scope>
    <scope>CATALYTIC ACTIVITY</scope>
    <scope>DOMAIN</scope>
    <scope>ACTIVITY REGULATION</scope>
    <scope>DNA-BINDING</scope>
    <scope>MUTAGENESIS OF LYS-171; LYS-173; 225-GLU--ASP-227; LYS-384; HIS-390; LYS-394; CYS-396; CYS-397; CYS-404; LYS-407 AND LYS-414</scope>
</reference>
<reference key="80">
    <citation type="journal article" date="2013" name="Immunity">
        <title>Cyclic GMP-AMP synthase is activated by double-stranded DNA-induced oligomerization.</title>
        <authorList>
            <person name="Li X."/>
            <person name="Shu C."/>
            <person name="Yi G."/>
            <person name="Chaton C.T."/>
            <person name="Shelton C.L."/>
            <person name="Diao J."/>
            <person name="Zuo X."/>
            <person name="Kao C.C."/>
            <person name="Herr A.B."/>
            <person name="Li P."/>
        </authorList>
    </citation>
    <scope>X-RAY CRYSTALLOGRAPHY (1.95 ANGSTROMS) OF 157-522 IN COMPLEX WITH ZINC</scope>
</reference>
<reference key="81">
    <citation type="journal article" date="2013" name="PLoS ONE">
        <title>Structural and functional analyses of DNA-sensing and immune activation by human cGAS.</title>
        <authorList>
            <person name="Kato K."/>
            <person name="Ishii R."/>
            <person name="Goto E."/>
            <person name="Ishitani R."/>
            <person name="Tokunaga F."/>
            <person name="Nureki O."/>
        </authorList>
    </citation>
    <scope>X-RAY CRYSTALLOGRAPHY (1.95 ANGSTROMS) OF 161-522 IN COMPLEX WITH ZINC</scope>
    <scope>FUNCTION</scope>
    <scope>DNA-BINDING</scope>
    <scope>MUTAGENESIS OF LYS-384; LYS-400; LYS-403; LYS-407 AND LYS-411</scope>
</reference>
<reference key="82">
    <citation type="journal article" date="2014" name="Cell Rep.">
        <title>The cytosolic DNA sensor cGAS forms an oligomeric complex with DNA and undergoes switch-like conformational changes in the activation loop.</title>
        <authorList>
            <person name="Zhang X."/>
            <person name="Wu J."/>
            <person name="Du F."/>
            <person name="Xu H."/>
            <person name="Sun L."/>
            <person name="Chen Z."/>
            <person name="Brautigam C.A."/>
            <person name="Zhang X."/>
            <person name="Chen Z.J."/>
        </authorList>
    </citation>
    <scope>X-RAY CRYSTALLOGRAPHY (2.25 ANGSTROMS) OF 161-522 IN COMPLEX WITH ZINC AND 2',3'-CGAMP</scope>
    <scope>FUNCTION</scope>
    <scope>MUTAGENESIS OF ARG-236; LYS-254; LYS-327; LYS-347; ARG-353 AND LYS-394</scope>
</reference>
<reference evidence="101 124 125 126" key="83">
    <citation type="journal article" date="2017" name="PLoS ONE">
        <title>Discovery of PF-06928215 as a high affinity inhibitor of cGAS enabled by a novel fluorescence polarization assay.</title>
        <authorList>
            <person name="Hall J."/>
            <person name="Brault A."/>
            <person name="Vincent F."/>
            <person name="Weng S."/>
            <person name="Wang H."/>
            <person name="Dumlao D."/>
            <person name="Aulabaugh A."/>
            <person name="Aivazian D."/>
            <person name="Castro D."/>
            <person name="Chen M."/>
            <person name="Culp J."/>
            <person name="Dower K."/>
            <person name="Gardner J."/>
            <person name="Hawrylik S."/>
            <person name="Golenbock D."/>
            <person name="Hepworth D."/>
            <person name="Horn M."/>
            <person name="Jones L."/>
            <person name="Jones P."/>
            <person name="Latz E."/>
            <person name="Li J."/>
            <person name="Lin L.L."/>
            <person name="Lin W."/>
            <person name="Lin D."/>
            <person name="Lovering F."/>
            <person name="Niljanskul N."/>
            <person name="Nistler R."/>
            <person name="Pierce B."/>
            <person name="Plotnikova O."/>
            <person name="Schmitt D."/>
            <person name="Shanker S."/>
            <person name="Smith J."/>
            <person name="Snyder W."/>
            <person name="Subashi T."/>
            <person name="Trujillo J."/>
            <person name="Tyminski E."/>
            <person name="Wang G."/>
            <person name="Wong J."/>
            <person name="Lefker B."/>
            <person name="Dakin L."/>
            <person name="Leach K."/>
        </authorList>
    </citation>
    <scope>X-RAY CRYSTALLOGRAPHY (2.76 ANGSTROMS) OF 161-522 IN COMPLEX WITH ZINC AND INHIBITOR PF-06928215</scope>
    <scope>CATALYTIC ACTIVITY</scope>
    <scope>ACTIVITY REGULATION</scope>
    <scope>BIOPHYSICOCHEMICAL PROPERTIES</scope>
</reference>
<reference evidence="102 103 104 105 106 107 108 109 110" key="84">
    <citation type="journal article" date="2017" name="Protein Sci.">
        <title>The catalytic mechanism of cyclic GMP-AMP synthase (cGAS) and implications for innate immunity and inhibition.</title>
        <authorList>
            <person name="Hall J."/>
            <person name="Ralph E.C."/>
            <person name="Shanker S."/>
            <person name="Wang H."/>
            <person name="Byrnes L.J."/>
            <person name="Horst R."/>
            <person name="Wong J."/>
            <person name="Brault A."/>
            <person name="Dumlao D."/>
            <person name="Smith J.F."/>
            <person name="Dakin L.A."/>
            <person name="Schmitt D.C."/>
            <person name="Trujillo J."/>
            <person name="Vincent F."/>
            <person name="Griffor M."/>
            <person name="Aulabaugh A.E."/>
        </authorList>
    </citation>
    <scope>X-RAY CRYSTALLOGRAPHY (2.30 ANGSTROMS) OF 161-522 IN COMPLEX WITH ZINC</scope>
</reference>
<reference evidence="111 112" key="85">
    <citation type="journal article" date="2018" name="Cell">
        <title>Structure of the human cGAS-DNA complex reveals enhanced control of immune surveillance.</title>
        <authorList>
            <person name="Zhou W."/>
            <person name="Whiteley A.T."/>
            <person name="de Oliveira Mann C.C."/>
            <person name="Morehouse B.R."/>
            <person name="Nowak R.P."/>
            <person name="Fischer E.S."/>
            <person name="Gray N.S."/>
            <person name="Mekalanos J.J."/>
            <person name="Kranzusch P.J."/>
        </authorList>
    </citation>
    <scope>X-RAY CRYSTALLOGRAPHY (2.26 ANGSTROMS) OF 157-522 IN COMPLEX WITH ZINC; MAGNESIUM; DNA AND ATP</scope>
    <scope>FUNCTION</scope>
    <scope>CATALYTIC ACTIVITY</scope>
    <scope>ACTIVITY REGULATION</scope>
    <scope>MUTAGENESIS OF LYS-187; LEU-195; SER-434 AND ASN-482</scope>
</reference>
<reference evidence="121 122 123" key="86">
    <citation type="journal article" date="2019" name="Nat. Commun.">
        <title>Development of human cGAS-specific small-molecule inhibitors for repression of dsDNA-triggered interferon expression.</title>
        <authorList>
            <person name="Lama L."/>
            <person name="Adura C."/>
            <person name="Xie W."/>
            <person name="Tomita D."/>
            <person name="Kamei T."/>
            <person name="Kuryavyi V."/>
            <person name="Gogakos T."/>
            <person name="Steinberg J.I."/>
            <person name="Miller M."/>
            <person name="Ramos-Espiritu L."/>
            <person name="Asano Y."/>
            <person name="Hashizume S."/>
            <person name="Aida J."/>
            <person name="Imaeda T."/>
            <person name="Okamoto R."/>
            <person name="Jennings A.J."/>
            <person name="Michino M."/>
            <person name="Kuroita T."/>
            <person name="Stamford A."/>
            <person name="Gao P."/>
            <person name="Meinke P."/>
            <person name="Glickman J.F."/>
            <person name="Patel D.J."/>
            <person name="Tuschl T."/>
        </authorList>
    </citation>
    <scope>X-RAY CRYSTALLOGRAPHY (2.40 ANGSTROMS) OF 152-522 IN COMPLEX WITH SMALL INHIBITORS; 2',3'-CGAMP AND ZINC</scope>
    <scope>COFACTOR</scope>
    <scope>ACTIVITY REGULATION</scope>
</reference>
<reference evidence="113 114 127" key="87">
    <citation type="journal article" date="2019" name="Proc. Natl. Acad. Sci. U.S.A.">
        <title>Human cGAS catalytic domain has an additional DNA-binding interface that enhances enzymatic activity and liquid-phase condensation.</title>
        <authorList>
            <person name="Xie W."/>
            <person name="Lama L."/>
            <person name="Adura C."/>
            <person name="Tomita D."/>
            <person name="Glickman J.F."/>
            <person name="Tuschl T."/>
            <person name="Patel D.J."/>
        </authorList>
    </citation>
    <scope>X-RAY CRYSTALLOGRAPHY (2.20 ANGSTROMS) OF 152-522 IN COMPLEX WITH DNA AND ZINC</scope>
    <scope>FUNCTION</scope>
    <scope>CATALYTIC ACTIVITY</scope>
    <scope>DNA-BINDING</scope>
    <scope>COFACTOR</scope>
    <scope>SUBUNIT</scope>
    <scope>MUTAGENESIS OF LYS-275; 279-LYS--LYS-282; LYS-279; LYS-285; 300-ARG-LYS-301; ARG-300 AND 427-LYS-LYS-428</scope>
    <scope>CHARACTERIZATION OF VARIANT THR-432</scope>
    <scope>VARIANT GLU-303</scope>
</reference>
<reference evidence="131 132" key="88">
    <citation type="journal article" date="2020" name="Cell Res.">
        <title>Structural basis for nucleosome-mediated inhibition of cGAS activity.</title>
        <authorList>
            <person name="Cao D."/>
            <person name="Han X."/>
            <person name="Fan X."/>
            <person name="Xu R.M."/>
            <person name="Zhang X."/>
        </authorList>
    </citation>
    <scope>STRUCTURE BY ELECTRON MICROSCOPY (3.80 ANGSTROMS) OF 157-522 IN COMPLEX WITH NUCLEOSOME CORE</scope>
    <scope>FUNCTION</scope>
    <scope>INTERACTION WITH NUCLEOSOMES</scope>
    <scope>ACTIVITY REGULATION</scope>
    <scope>SUBCELLULAR LOCATION</scope>
    <scope>DOMAIN</scope>
    <scope>MUTAGENESIS OF ARG-236; LYS-254; ARG-255; LYS-258; LYS-327; SER-328; SER-329; ARG-349; LYS-350 AND ARG-353</scope>
</reference>
<reference evidence="115 116 117 118 119 120" key="89">
    <citation type="journal article" date="2020" name="J. Chem. Inf. Model.">
        <title>In silico screening-based discovery of novel inhibitors of human cyclic GMP-AMP synthase: a cross-validation study of molecular docking and experimental testing.</title>
        <authorList>
            <person name="Zhao W."/>
            <person name="Xiong M."/>
            <person name="Yuan X."/>
            <person name="Li M."/>
            <person name="Sun H."/>
            <person name="Xu Y."/>
        </authorList>
    </citation>
    <scope>X-RAY CRYSTALLOGRAPHY (1.83 ANGSTROMS) OF 157-522 IN COMPLEX WITH ZINC; INHIBITOR PF-06928215 AND OTHER INHIBITORS</scope>
    <scope>COFACTOR</scope>
    <scope>ACTIVITY REGULATION</scope>
</reference>
<reference evidence="128 129" key="90">
    <citation type="journal article" date="2020" name="Nature">
        <title>Structural mechanism of cGAS inhibition by the nucleosome.</title>
        <authorList>
            <person name="Pathare G.R."/>
            <person name="Decout A."/>
            <person name="Glueck S."/>
            <person name="Cavadini S."/>
            <person name="Makasheva K."/>
            <person name="Hovius R."/>
            <person name="Kempf G."/>
            <person name="Weiss J."/>
            <person name="Kozicka Z."/>
            <person name="Guey B."/>
            <person name="Melenec P."/>
            <person name="Fierz B."/>
            <person name="Thomae N.H."/>
            <person name="Ablasser A."/>
        </authorList>
    </citation>
    <scope>STRUCTURE BY ELECTRON MICROSCOPY (3.15 ANGSTROMS) OF 161-522 IN COMPLEX WITH NUCLEOSOME CORE AND ZINC</scope>
    <scope>FUNCTION</scope>
    <scope>COFACTOR</scope>
    <scope>INTERACTION WITH NUCLEOSOMES</scope>
    <scope>ACTIVITY REGULATION</scope>
    <scope>DOMAIN</scope>
    <scope>MUTAGENESIS OF ARG-236; ARG-255 AND LYS-394</scope>
</reference>
<reference evidence="130" key="91">
    <citation type="journal article" date="2020" name="Science">
        <title>Structural basis for the inhibition of cGAS by nucleosomes.</title>
        <authorList>
            <person name="Kujirai T."/>
            <person name="Zierhut C."/>
            <person name="Takizawa Y."/>
            <person name="Kim R."/>
            <person name="Negishi L."/>
            <person name="Uruma N."/>
            <person name="Hirai S."/>
            <person name="Funabiki H."/>
            <person name="Kurumizaka H."/>
        </authorList>
    </citation>
    <scope>STRUCTURE BY ELECTRON MICROSCOPY (3.90 ANGSTROMS) OF 151-522 IN COMPLEX WITH NUCLEOSOME CORE AND ZINC</scope>
    <scope>FUNCTION</scope>
    <scope>COFACTOR</scope>
    <scope>INTERACTION WITH NUCLEOSOMES</scope>
    <scope>ACTIVITY REGULATION</scope>
    <scope>DOMAIN</scope>
    <scope>MUTAGENESIS OF ARG-255</scope>
</reference>
<reference evidence="133 134" key="92">
    <citation type="journal article" date="2024" name="Nature">
        <title>The CRL5-SPSB3 ubiquitin ligase targets nuclear cGAS for degradation.</title>
        <authorList>
            <person name="Xu P."/>
            <person name="Liu Y."/>
            <person name="Liu C."/>
            <person name="Guey B."/>
            <person name="Li L."/>
            <person name="Melenec P."/>
            <person name="Ricci J."/>
            <person name="Ablasser A."/>
        </authorList>
    </citation>
    <scope>STRUCTURE BY ELECTRON MICROSCOPY (3.50 ANGSTROMS) OF 156-522 IN COMPLEX WITH ELOB; ELOC AND SPSB3</scope>
    <scope>SUBCELLULAR LOCATION</scope>
    <scope>UBIQUITINATION AT LYS-427 AND LYS-428</scope>
    <scope>MUTAGENESIS OF 427-LYS-LYS-428; ASP-465; GLU-509; TYR-510; ARG-512; ASN-513 AND ASN-514</scope>
</reference>
<organism>
    <name type="scientific">Homo sapiens</name>
    <name type="common">Human</name>
    <dbReference type="NCBI Taxonomy" id="9606"/>
    <lineage>
        <taxon>Eukaryota</taxon>
        <taxon>Metazoa</taxon>
        <taxon>Chordata</taxon>
        <taxon>Craniata</taxon>
        <taxon>Vertebrata</taxon>
        <taxon>Euteleostomi</taxon>
        <taxon>Mammalia</taxon>
        <taxon>Eutheria</taxon>
        <taxon>Euarchontoglires</taxon>
        <taxon>Primates</taxon>
        <taxon>Haplorrhini</taxon>
        <taxon>Catarrhini</taxon>
        <taxon>Hominidae</taxon>
        <taxon>Homo</taxon>
    </lineage>
</organism>
<feature type="chain" id="PRO_0000089543" description="Cyclic GMP-AMP synthase">
    <location>
        <begin position="1"/>
        <end position="522"/>
    </location>
</feature>
<feature type="region of interest" description="DNA-binding" evidence="28">
    <location>
        <begin position="1"/>
        <end position="160"/>
    </location>
</feature>
<feature type="region of interest" description="Disordered" evidence="2">
    <location>
        <begin position="1"/>
        <end position="144"/>
    </location>
</feature>
<feature type="region of interest" description="Required for association with the cell membrane" evidence="46">
    <location>
        <begin position="64"/>
        <end position="75"/>
    </location>
</feature>
<feature type="region of interest" description="Required for activation upon DNA viral infection" evidence="27">
    <location>
        <begin position="120"/>
        <end position="160"/>
    </location>
</feature>
<feature type="region of interest" description="DNA-binding" evidence="39 95 112">
    <location>
        <begin position="173"/>
        <end position="215"/>
    </location>
</feature>
<feature type="region of interest" description="Interaction with collided ribosomes" evidence="79">
    <location>
        <begin position="341"/>
        <end position="382"/>
    </location>
</feature>
<feature type="region of interest" description="DNA-binding" evidence="95">
    <location>
        <begin position="384"/>
        <end position="407"/>
    </location>
</feature>
<feature type="short sequence motif" description="Nuclear export signal" evidence="73">
    <location>
        <begin position="169"/>
        <end position="174"/>
    </location>
</feature>
<feature type="short sequence motif" description="Nuclear localization signal" evidence="43">
    <location>
        <begin position="295"/>
        <end position="305"/>
    </location>
</feature>
<feature type="short sequence motif" description="KRKR-loop" evidence="50">
    <location>
        <begin position="299"/>
        <end position="302"/>
    </location>
</feature>
<feature type="short sequence motif" description="KKH-loop" evidence="50">
    <location>
        <begin position="427"/>
        <end position="429"/>
    </location>
</feature>
<feature type="compositionally biased region" description="Basic and acidic residues" evidence="2">
    <location>
        <begin position="64"/>
        <end position="73"/>
    </location>
</feature>
<feature type="compositionally biased region" description="Polar residues" evidence="2">
    <location>
        <begin position="88"/>
        <end position="97"/>
    </location>
</feature>
<feature type="compositionally biased region" description="Low complexity" evidence="2">
    <location>
        <begin position="98"/>
        <end position="118"/>
    </location>
</feature>
<feature type="compositionally biased region" description="Pro residues" evidence="2">
    <location>
        <begin position="132"/>
        <end position="144"/>
    </location>
</feature>
<feature type="binding site" evidence="1">
    <location>
        <position position="211"/>
    </location>
    <ligand>
        <name>GTP</name>
        <dbReference type="ChEBI" id="CHEBI:37565"/>
    </ligand>
</feature>
<feature type="binding site" evidence="39 112">
    <location>
        <position position="213"/>
    </location>
    <ligand>
        <name>ATP</name>
        <dbReference type="ChEBI" id="CHEBI:30616"/>
    </ligand>
</feature>
<feature type="binding site" evidence="39 112">
    <location>
        <begin position="225"/>
        <end position="227"/>
    </location>
    <ligand>
        <name>ATP</name>
        <dbReference type="ChEBI" id="CHEBI:30616"/>
    </ligand>
</feature>
<feature type="binding site" evidence="39 96 98 111 112">
    <location>
        <position position="225"/>
    </location>
    <ligand>
        <name>Mg(2+)</name>
        <dbReference type="ChEBI" id="CHEBI:18420"/>
        <note>catalytic</note>
    </ligand>
</feature>
<feature type="binding site" evidence="15 49 100 123">
    <location>
        <position position="227"/>
    </location>
    <ligand>
        <name>2',3'-cGAMP</name>
        <dbReference type="ChEBI" id="CHEBI:143093"/>
    </ligand>
</feature>
<feature type="binding site" evidence="39 96 98 111 112">
    <location>
        <position position="227"/>
    </location>
    <ligand>
        <name>Mg(2+)</name>
        <dbReference type="ChEBI" id="CHEBI:18420"/>
        <note>catalytic</note>
    </ligand>
</feature>
<feature type="binding site" evidence="15 49 100 123">
    <location>
        <position position="319"/>
    </location>
    <ligand>
        <name>2',3'-cGAMP</name>
        <dbReference type="ChEBI" id="CHEBI:143093"/>
    </ligand>
</feature>
<feature type="binding site" evidence="97">
    <location>
        <position position="319"/>
    </location>
    <ligand>
        <name>GTP</name>
        <dbReference type="ChEBI" id="CHEBI:37565"/>
    </ligand>
</feature>
<feature type="binding site" evidence="39 111 112">
    <location>
        <position position="319"/>
    </location>
    <ligand>
        <name>Mg(2+)</name>
        <dbReference type="ChEBI" id="CHEBI:18420"/>
        <note>catalytic</note>
    </ligand>
</feature>
<feature type="binding site" evidence="15 49 100 123">
    <location>
        <position position="362"/>
    </location>
    <ligand>
        <name>2',3'-cGAMP</name>
        <dbReference type="ChEBI" id="CHEBI:143093"/>
    </ligand>
</feature>
<feature type="binding site" evidence="97">
    <location>
        <begin position="376"/>
        <end position="383"/>
    </location>
    <ligand>
        <name>GTP</name>
        <dbReference type="ChEBI" id="CHEBI:37565"/>
    </ligand>
</feature>
<feature type="binding site" evidence="15 49 100 123">
    <location>
        <position position="376"/>
    </location>
    <ligand>
        <name>2',3'-cGAMP</name>
        <dbReference type="ChEBI" id="CHEBI:143093"/>
    </ligand>
</feature>
<feature type="binding site" evidence="39 112">
    <location>
        <begin position="380"/>
        <end position="383"/>
    </location>
    <ligand>
        <name>ATP</name>
        <dbReference type="ChEBI" id="CHEBI:30616"/>
    </ligand>
</feature>
<feature type="binding site" evidence="7 14 15 31 32 39 49 50 66 67 101 102 103 104 105 106 107 108 109 110 111 112 113 114 121 122 123 124 125 126 128 129 130">
    <location>
        <position position="390"/>
    </location>
    <ligand>
        <name>Zn(2+)</name>
        <dbReference type="ChEBI" id="CHEBI:29105"/>
    </ligand>
</feature>
<feature type="binding site" evidence="7 14 15 31 32 39 49 50 57 66 67 101 102 103 104 105 106 107 108 109 110 111 112 113 114 115 121 122 123 124 125 126 127 128 129 130">
    <location>
        <position position="396"/>
    </location>
    <ligand>
        <name>Zn(2+)</name>
        <dbReference type="ChEBI" id="CHEBI:29105"/>
    </ligand>
</feature>
<feature type="binding site" evidence="7 14 15 31 32 39 49 50 57 66 67 101 102 103 104 105 106 107 108 109 110 111 112 113 114 115 121 122 123 124 125 126 127 128 129 130">
    <location>
        <position position="397"/>
    </location>
    <ligand>
        <name>Zn(2+)</name>
        <dbReference type="ChEBI" id="CHEBI:29105"/>
    </ligand>
</feature>
<feature type="binding site" evidence="7 14 15 31 32 39 49 50 57 66 67 101 102 103 104 105 106 107 108 109 110 111 112 113 114 115 121 122 123 124 125 126 127 128 129 130">
    <location>
        <position position="404"/>
    </location>
    <ligand>
        <name>Zn(2+)</name>
        <dbReference type="ChEBI" id="CHEBI:29105"/>
    </ligand>
</feature>
<feature type="binding site" evidence="39 112">
    <location>
        <position position="414"/>
    </location>
    <ligand>
        <name>ATP</name>
        <dbReference type="ChEBI" id="CHEBI:30616"/>
    </ligand>
</feature>
<feature type="binding site" evidence="39 97 112">
    <location>
        <begin position="435"/>
        <end position="439"/>
    </location>
    <ligand>
        <name>ATP</name>
        <dbReference type="ChEBI" id="CHEBI:30616"/>
    </ligand>
</feature>
<feature type="site" description="Cleavage; by CASP1" evidence="27">
    <location>
        <begin position="140"/>
        <end position="141"/>
    </location>
</feature>
<feature type="site" description="Cleavage; by CASP1" evidence="27">
    <location>
        <begin position="157"/>
        <end position="158"/>
    </location>
</feature>
<feature type="site" description="Important for preferential detection of curved long DNA" evidence="39">
    <location>
        <position position="187"/>
    </location>
</feature>
<feature type="site" description="Important for preferential detection of curved long DNA" evidence="39">
    <location>
        <position position="195"/>
    </location>
</feature>
<feature type="site" description="Arginine-anchor" evidence="66 67 69">
    <location>
        <position position="255"/>
    </location>
</feature>
<feature type="site" description="Cleavage; by CASP3" evidence="47">
    <location>
        <begin position="319"/>
        <end position="320"/>
    </location>
</feature>
<feature type="modified residue" description="N6-acetyllysine" evidence="44 135">
    <location>
        <position position="7"/>
    </location>
</feature>
<feature type="modified residue" description="Phosphoserine" evidence="75">
    <location>
        <position position="13"/>
    </location>
</feature>
<feature type="modified residue" description="N6-acetyllysine" evidence="62">
    <location>
        <position position="21"/>
    </location>
</feature>
<feature type="modified residue" description="Phosphoserine" evidence="75">
    <location>
        <position position="37"/>
    </location>
</feature>
<feature type="modified residue" description="N6-acetyllysine" evidence="62">
    <location>
        <position position="47"/>
    </location>
</feature>
<feature type="modified residue" description="N6-acetyllysine" evidence="44 62">
    <location>
        <position position="50"/>
    </location>
</feature>
<feature type="modified residue" description="N6-acetyllysine" evidence="62">
    <location>
        <position position="56"/>
    </location>
</feature>
<feature type="modified residue" description="N6-acetyllysine" evidence="62">
    <location>
        <position position="62"/>
    </location>
</feature>
<feature type="modified residue" description="N6-acetyllysine" evidence="62">
    <location>
        <position position="63"/>
    </location>
</feature>
<feature type="modified residue" description="Phosphoserine" evidence="75">
    <location>
        <position position="64"/>
    </location>
</feature>
<feature type="modified residue" description="Phosphothreonine" evidence="72 75">
    <location>
        <position position="68"/>
    </location>
</feature>
<feature type="modified residue" description="N6-acetyllysine" evidence="62">
    <location>
        <position position="82"/>
    </location>
</feature>
<feature type="modified residue" description="N6-acetyllysine" evidence="62">
    <location>
        <position position="83"/>
    </location>
</feature>
<feature type="modified residue" description="Phosphothreonine" evidence="58 75">
    <location>
        <position position="91"/>
    </location>
</feature>
<feature type="modified residue" description="Phosphoserine" evidence="58">
    <location>
        <position position="98"/>
    </location>
</feature>
<feature type="modified residue" description="Phosphoserine" evidence="75">
    <location>
        <position position="116"/>
    </location>
</feature>
<feature type="modified residue" description="Phosphoserine" evidence="75">
    <location>
        <position position="129"/>
    </location>
</feature>
<feature type="modified residue" description="N6-lactoyllysine" evidence="91">
    <location>
        <position position="131"/>
    </location>
</feature>
<feature type="modified residue" description="Phosphoserine" evidence="75 136">
    <location>
        <position position="143"/>
    </location>
</feature>
<feature type="modified residue" description="PolyADP-ribosyl aspartic acid" evidence="85">
    <location>
        <position position="191"/>
    </location>
</feature>
<feature type="modified residue" description="(Microbial infection) Deamidated asparagine; by herpes simplex virus 1/HHV-1 UL37" evidence="40">
    <location>
        <position position="210"/>
    </location>
</feature>
<feature type="modified residue" description="Phosphoserine" evidence="72">
    <location>
        <position position="213"/>
    </location>
</feature>
<feature type="modified residue" description="Phosphotyrosine; by BLK" evidence="43">
    <location>
        <position position="215"/>
    </location>
</feature>
<feature type="modified residue" description="5-glutamyl polyglutamate" evidence="1">
    <location>
        <position position="286"/>
    </location>
</feature>
<feature type="modified residue" description="Phosphoserine; by CDK1 and PKB" evidence="22 55 75">
    <location>
        <position position="305"/>
    </location>
</feature>
<feature type="modified residue" description="5-glutamyl glutamate" evidence="1">
    <location>
        <position position="314"/>
    </location>
</feature>
<feature type="modified residue" description="N6-acetyllysine" evidence="44">
    <location>
        <position position="384"/>
    </location>
</feature>
<feature type="modified residue" description="(Microbial infection) Deamidated asparagine; by herpes simplex virus 1/HHV-1 UL37" evidence="40">
    <location>
        <position position="389"/>
    </location>
</feature>
<feature type="modified residue" description="N6-acetyllysine" evidence="44">
    <location>
        <position position="392"/>
    </location>
</feature>
<feature type="modified residue" description="N6-acetyllysine" evidence="44">
    <location>
        <position position="394"/>
    </location>
</feature>
<feature type="modified residue" description="N6-acetyllysine" evidence="44 135">
    <location>
        <position position="414"/>
    </location>
</feature>
<feature type="modified residue" description="Phosphoserine" evidence="58">
    <location>
        <position position="434"/>
    </location>
</feature>
<feature type="modified residue" description="Phosphoserine" evidence="58">
    <location>
        <position position="435"/>
    </location>
</feature>
<feature type="modified residue" description="(Microbial infection) Deamidated glutamine; by herpes simplex virus 1/HHV-1 UL37" evidence="40">
    <location>
        <position position="451"/>
    </location>
</feature>
<feature type="modified residue" description="(Microbial infection) Deamidated glutamine; by herpes simplex virus 1/HHV-1 UL37" evidence="40">
    <location>
        <position position="454"/>
    </location>
</feature>
<feature type="modified residue" description="N6-methyllysine" evidence="82">
    <location>
        <position position="506"/>
    </location>
</feature>
<feature type="lipid moiety-binding region" description="S-palmitoyl cysteine" evidence="89">
    <location>
        <position position="404"/>
    </location>
</feature>
<feature type="lipid moiety-binding region" description="S-palmitoyl cysteine" evidence="89">
    <location>
        <position position="405"/>
    </location>
</feature>
<feature type="lipid moiety-binding region" description="S-palmitoyl cysteine" evidence="84">
    <location>
        <position position="474"/>
    </location>
</feature>
<feature type="cross-link" description="Glycyl lysine isopeptide (Lys-Gly) (interchain with G-Cter in ubiquitin)" evidence="26">
    <location>
        <position position="173"/>
    </location>
</feature>
<feature type="cross-link" description="Glycyl lysine isopeptide (Lys-Gly) (interchain with G-Cter in SUMO)" evidence="23">
    <location>
        <position position="231"/>
    </location>
</feature>
<feature type="cross-link" description="Glycyl lysine isopeptide (Lys-Gly) (interchain with G-Cter in ubiquitin)" evidence="23">
    <location>
        <position position="285"/>
    </location>
</feature>
<feature type="cross-link" description="Glycyl lysine isopeptide (Lys-Gly) (interchain with G-Cter in SUMO); alternate" evidence="1">
    <location>
        <position position="347"/>
    </location>
</feature>
<feature type="cross-link" description="Glycyl lysine isopeptide (Lys-Gly) (interchain with G-Cter in ubiquitin); alternate" evidence="1">
    <location>
        <position position="347"/>
    </location>
</feature>
<feature type="cross-link" description="Glycyl lysine isopeptide (Lys-Gly) (interchain with G-Cter in SUMO); alternate" evidence="1">
    <location>
        <position position="384"/>
    </location>
</feature>
<feature type="cross-link" description="Glycyl lysine isopeptide (Lys-Gly) (interchain with G-Cter in ubiquitin); alternate" evidence="26">
    <location>
        <position position="384"/>
    </location>
</feature>
<feature type="cross-link" description="Glycyl lysine isopeptide (Lys-Gly) (interchain with G-Cter in SUMO)" evidence="1">
    <location>
        <position position="394"/>
    </location>
</feature>
<feature type="cross-link" description="Glycyl lysine isopeptide (Lys-Gly) (interchain with G-Cter in ubiquitin)" evidence="86">
    <location>
        <position position="411"/>
    </location>
</feature>
<feature type="cross-link" description="Glycyl lysine isopeptide (Lys-Gly) (interchain with G-Cter in ubiquitin)" evidence="24">
    <location>
        <position position="414"/>
    </location>
</feature>
<feature type="cross-link" description="Glycyl lysine isopeptide (Lys-Gly) (interchain with G-Cter in ubiquitin)" evidence="90">
    <location>
        <position position="427"/>
    </location>
</feature>
<feature type="cross-link" description="Glycyl lysine isopeptide (Lys-Gly) (interchain with G-Cter in ubiquitin)" evidence="90">
    <location>
        <position position="428"/>
    </location>
</feature>
<feature type="cross-link" description="Glycyl lysine isopeptide (Lys-Gly) (interchain with G-Cter in SUMO); alternate" evidence="23">
    <location>
        <position position="479"/>
    </location>
</feature>
<feature type="cross-link" description="Glycyl lysine isopeptide (Lys-Gly) (interchain with G-Cter in ubiquitin); alternate" evidence="23">
    <location>
        <position position="479"/>
    </location>
</feature>
<feature type="splice variant" id="VSP_014388" description="In isoform 2." evidence="92">
    <original>VCT</original>
    <variation>RLY</variation>
    <location>
        <begin position="445"/>
        <end position="447"/>
    </location>
</feature>
<feature type="splice variant" id="VSP_014389" description="In isoform 2." evidence="92">
    <location>
        <begin position="448"/>
        <end position="522"/>
    </location>
</feature>
<feature type="sequence variant" id="VAR_050811" description="In dbSNP:rs9352000." evidence="3 4">
    <original>T</original>
    <variation>N</variation>
    <location>
        <position position="35"/>
    </location>
</feature>
<feature type="sequence variant" id="VAR_033677" description="In dbSNP:rs610913." evidence="4">
    <original>P</original>
    <variation>H</variation>
    <location>
        <position position="261"/>
    </location>
</feature>
<feature type="sequence variant" id="VAR_085524" description="Found in patients with tumors; dominant mutation; reduced nucleotidyltransferase activity." evidence="50">
    <original>G</original>
    <variation>E</variation>
    <location>
        <position position="303"/>
    </location>
</feature>
<feature type="sequence variant" id="VAR_085525" description="Found in patients with uterine endometrioid carcinoma; reduced nucleotidyltransferase activity." evidence="50">
    <original>K</original>
    <variation>T</variation>
    <location>
        <position position="432"/>
    </location>
</feature>
<feature type="mutagenesis site" description="Acetylation-mimetic mutant; no effect." evidence="44">
    <original>K</original>
    <variation>Q</variation>
    <location>
        <position position="7"/>
    </location>
</feature>
<feature type="mutagenesis site" description="No effect." evidence="44">
    <original>K</original>
    <variation>R</variation>
    <location>
        <position position="7"/>
    </location>
</feature>
<feature type="mutagenesis site" description="In 20DE phospho-mimetic mutant; causes inactivation of nucleotidyltransferase activity; when associated with E-18; D-23; E-35; D-37; D-57; D-59; D-64; E-68; E-77; E-91; D-94; E-97; D-98; D-116; D-120; D-129; E-130; D-143 and D-149." evidence="75">
    <original>S</original>
    <variation>D</variation>
    <location>
        <position position="13"/>
    </location>
</feature>
<feature type="mutagenesis site" description="In 20DE phospho-mimetic mutant; causes inactivation of nucleotidyltransferase activity; when associated with D-13; D-23; E-35; D-37; D-57; D-59; D-64; E-68; E-77; E-91; D-94; E-97; D-98; D-116; D-120; D-129; E-130; D-143 and D-149." evidence="75">
    <original>T</original>
    <variation>E</variation>
    <location>
        <position position="18"/>
    </location>
</feature>
<feature type="mutagenesis site" description="In 20DE phospho-mimetic mutant; causes inactivation of nucleotidyltransferase activity; when associated with D-13; E-18; E-35; D-37; D-57; D-59; D-64; E-68; E-77; E-91; D-94; E-97; D-98; D-116; D-120; D-129; E-130; D-143 and D-149." evidence="75">
    <original>S</original>
    <variation>D</variation>
    <location>
        <position position="23"/>
    </location>
</feature>
<feature type="mutagenesis site" description="No effect on type I IFN and RSAD2 induction. No effect on cleavage by CASP1. No effect on cleavage by CASP1; when associated with A-67; A-90 and A-95. Highly decreases cleavage by CASP1 and enhances RSAD2 induction upon DNA virus infection; when associated with A-67; A-90; A-95 and A-140. Abolishes cleavage by CASP1 and enhances RSAD2 induction upon DNA virus infection; when associated with A-67; A-90; A-95; A-140 and A-157." evidence="27">
    <original>D</original>
    <variation>A</variation>
    <location>
        <position position="33"/>
    </location>
</feature>
<feature type="mutagenesis site" description="In 20DE phospho-mimetic mutant; causes inactivation of nucleotidyltransferase activity; when associated with D-13; E-18; D-23; D-37; D-57; D-59; D-64; E-68; E-77; E-91; D-94; E-97; D-98; D-116; D-120; D-129; E-130; D-143 and D-149." evidence="75">
    <original>T</original>
    <variation>E</variation>
    <location>
        <position position="35"/>
    </location>
</feature>
<feature type="mutagenesis site" description="In 20DE phospho-mimetic mutant; causes inactivation of nucleotidyltransferase activity; when associated with D-13; E-18; D-23; E-35; D-57; D-59; D-64; E-68; E-77; E-91; D-94; E-97; D-98; D-116; D-120; D-129; E-130; D-143 and D-149." evidence="75">
    <original>S</original>
    <variation>D</variation>
    <location>
        <position position="37"/>
    </location>
</feature>
<feature type="mutagenesis site" description="Decreased acetylation by KAT5, leading to decreased stimulation of interferon production." evidence="62">
    <original>K</original>
    <variation>R</variation>
    <location>
        <position position="47"/>
    </location>
</feature>
<feature type="mutagenesis site" description="Acetylation-mimetic mutant; no effect." evidence="44">
    <original>K</original>
    <variation>Q</variation>
    <location>
        <position position="50"/>
    </location>
</feature>
<feature type="mutagenesis site" description="No effect." evidence="44">
    <original>K</original>
    <variation>R</variation>
    <location>
        <position position="50"/>
    </location>
</feature>
<feature type="mutagenesis site" description="Decreased acetylation by KAT5, leading to decreased stimulation of interferon production." evidence="62">
    <original>K</original>
    <variation>R</variation>
    <location>
        <position position="56"/>
    </location>
</feature>
<feature type="mutagenesis site" description="In 20DE phospho-mimetic mutant; causes inactivation of nucleotidyltransferase activity; when associated with D-13; E-18; D-23; E-35; D-37; D-59; D-64; E-68; E-77; E-91; D-94; E-97; D-98; D-116; D-120; D-129; E-130; D-143 and D-149." evidence="75">
    <original>S</original>
    <variation>D</variation>
    <location>
        <position position="57"/>
    </location>
</feature>
<feature type="mutagenesis site" description="In 20DE phospho-mimetic mutant; causes inactivation of nucleotidyltransferase activity; when associated with D-13; E-18; D-23; E-35; D-37; D-57; D-64; E-68; E-77; E-91; D-94; E-97; D-98; D-116; D-120; D-129; E-130; D-143 and D-149." evidence="75">
    <original>S</original>
    <variation>D</variation>
    <location>
        <position position="59"/>
    </location>
</feature>
<feature type="mutagenesis site" description="Decreased acetylation by KAT5, leading to decreased stimulation of interferon production." evidence="62">
    <original>K</original>
    <variation>R</variation>
    <location>
        <position position="62"/>
    </location>
</feature>
<feature type="mutagenesis site" description="In 20DE phospho-mimetic mutant; causes inactivation of nucleotidyltransferase activity; when associated with D-13; E-18; D-23; E-35; D-37; D-57; D-59; E-68; E-77; E-91; D-94; E-97; D-98; D-116; D-120; D-129; E-130; D-143 and D-149." evidence="75">
    <original>S</original>
    <variation>D</variation>
    <location>
        <position position="64"/>
    </location>
</feature>
<feature type="mutagenesis site" description="No effect on type I IFN and RSAD2 induction. No effect on cleavage by CASP1; when associated with A-33; A-90 and A-95. Highly decreases cleavage by CASP1 and enhances RSAD2 induction upon DNA virus infection; when associated with A-33; A-90; A-95 and A-140. Abolishes cleavage by CASP1 and enhances RSAD2 induction upon DNA virus infection; when associated with A-33; A-90; A-95; A-140 and A-157." evidence="27">
    <original>D</original>
    <variation>A</variation>
    <location>
        <position position="67"/>
    </location>
</feature>
<feature type="mutagenesis site" description="Phospho-mimetic mutant; decreased nucleotidyltransferase activity. In 20DE phospho-mimetic mutant; causes inactivation of nucleotidyltransferase activity; when associated with D-13; E-18; D-23; E-35; D-37; D-57; D-59; D-64; E-77; E-91; D-94; E-97; D-98; D-116; D-120; D-129; E-130; D-143 and D-149." evidence="72 75">
    <original>T</original>
    <variation>E</variation>
    <location>
        <position position="68"/>
    </location>
</feature>
<feature type="mutagenesis site" description="Abolished binding to phosphatidylinositol 4,5-bisphosphate (PtdIns(4,5)P2) and abolished association with the cell membrane." evidence="46">
    <original>RPPVR</original>
    <variation>EPPVE</variation>
    <location>
        <begin position="71"/>
        <end position="75"/>
    </location>
</feature>
<feature type="mutagenesis site" description="In 20DE phospho-mimetic mutant; causes inactivation of nucleotidyltransferase activity; when associated with D-13; E-18; D-23; E-35; D-37; D-57; D-59; D-64; E-68; E-91; D-94; E-97; D-98; D-116; D-120; D-129; E-130; D-143 and D-149." evidence="75">
    <original>T</original>
    <variation>E</variation>
    <location>
        <position position="77"/>
    </location>
</feature>
<feature type="mutagenesis site" description="Decreased acetylation by KAT5, leading to decreased stimulation of interferon production." evidence="62">
    <original>K</original>
    <variation>R</variation>
    <location>
        <position position="83"/>
    </location>
</feature>
<feature type="mutagenesis site" description="No effect on type I IFN and RSAD2 induction. No effect on cleavage by CASP1; when associated with A-33; A-67 and A-95. Highly decreases cleavage by CASP1 and enhances RSAD2 induction upon DNA virus infection; when associated with A-33; A-67; A-95 and A-140. Abolishes cleavage by CASP1 and enhances RSAD2 induction upon DNA virus infection; when associated with A-33; A-67; A-95; A-140 and A-157." evidence="27">
    <original>D</original>
    <variation>A</variation>
    <location>
        <position position="90"/>
    </location>
</feature>
<feature type="mutagenesis site" description="In 20DE phospho-mimetic mutant; causes inactivation of nucleotidyltransferase activity; when associated with D-13; E-18; D-23; E-35; D-37; D-57; D-59; D-64; E-68; E-77; D-94; E-97; D-98; D-116; D-120; D-129; E-130; D-143 and D-149." evidence="75">
    <original>T</original>
    <variation>E</variation>
    <location>
        <position position="91"/>
    </location>
</feature>
<feature type="mutagenesis site" description="In 20DE phospho-mimetic mutant; causes inactivation of nucleotidyltransferase activity; when associated with D-13; E-18; D-23; E-35; D-37; D-57; D-59; D-64; E-68; E-77; E-91; E-97; D-98; D-116; D-120; D-129; E-130; D-143 and D-149." evidence="75">
    <original>S</original>
    <variation>D</variation>
    <location>
        <position position="94"/>
    </location>
</feature>
<feature type="mutagenesis site" description="No effect on type I IFN and RSAD2 induction. No effect on cleavage by CASP1; when associated with A-33; A-67 and A-90. Highly decreases cleavage by CASP1 and enhances RSAD2 induction upon DNA virus infection; when associated with A-33; A-67; A-90 and A-140. Abolishes cleavage by CASP1 and enhances RSAD2 induction upon DNA virus infection; when associated with A-33; A-67; A-90; A-140 and A-157." evidence="27">
    <original>D</original>
    <variation>A</variation>
    <location>
        <position position="95"/>
    </location>
</feature>
<feature type="mutagenesis site" description="In 20DE phospho-mimetic mutant; causes inactivation of nucleotidyltransferase activity; when associated with D-13; E-18; D-23; E-35; D-37; D-57; D-59; D-64; E-68; E-77; E-91; D-94; D-98; D-116; D-120; D-129; E-130; D-143 and D-149." evidence="75">
    <original>T</original>
    <variation>E</variation>
    <location>
        <position position="97"/>
    </location>
</feature>
<feature type="mutagenesis site" description="In 20DE phospho-mimetic mutant; causes inactivation of nucleotidyltransferase activity; when associated with D-13; E-18; D-23; E-35; D-37; D-57; D-59; D-64; E-68; E-77; E-91; D-94; E-97; D-116; D-120; D-129; E-130; D-143 and D-149." evidence="75">
    <original>S</original>
    <variation>D</variation>
    <location>
        <position position="98"/>
    </location>
</feature>
<feature type="mutagenesis site" description="In 20DE phospho-mimetic mutant; causes inactivation of nucleotidyltransferase activity; when associated with D-13; E-18; D-23; E-35; D-37; D-57; D-59; D-64; E-68; E-77; E-91; D-94; E-97; D-98; D-120; D-129; E-130; D-143 and D-149." evidence="75">
    <original>S</original>
    <variation>D</variation>
    <location>
        <position position="116"/>
    </location>
</feature>
<feature type="mutagenesis site" description="In 20DE phospho-mimetic mutant; causes inactivation of nucleotidyltransferase activity; when associated with D-13; E-18; D-23; E-35; D-37; D-57; D-59; D-64; E-68; E-77; E-91; D-94; E-97; D-98; D-116; D-129; E-130; D-143 and D-149." evidence="75">
    <original>S</original>
    <variation>D</variation>
    <location>
        <position position="120"/>
    </location>
</feature>
<feature type="mutagenesis site" description="In 20DE phospho-mimetic mutant; causes inactivation of nucleotidyltransferase activity; when associated with D-13; E-18; D-23; E-35; D-37; D-57; D-59; D-64; E-68; E-77; E-91; D-94; E-97; D-98; D-116; D-120; E-130; D-143 and D-149." evidence="75">
    <original>S</original>
    <variation>D</variation>
    <location>
        <position position="129"/>
    </location>
</feature>
<feature type="mutagenesis site" description="In 20DE phospho-mimetic mutant; causes inactivation of nucleotidyltransferase activity; when associated with D-13; E-18; D-23; E-35; D-37; D-57; D-59; D-64; E-68; E-77; E-91; D-94; E-97; D-98; D-116; D-120; D-129; D-143 and D-149." evidence="75">
    <original>T</original>
    <variation>E</variation>
    <location>
        <position position="130"/>
    </location>
</feature>
<feature type="mutagenesis site" description="Highly decreases cleavage by CASP1 and enhances type I IFN and RSAD2 induction upon DNA virus infection. Abolishes cleavage by CASP1, enhances RSAD2 induction upon DNA virus infection but no effect on cleavage by CASP5; when associated with A-157. Highly decreases cleavage by CASP1 and enhances RSAD2 induction upon DNA virus infection; when associated with A-33; A-67; A-90 and A-95. Abolishes cleavage by CASP1 and enhances RSAD2 induction upon DNA virus infection; when associated with A-33; A-67; A-90; A-95 and A-157." evidence="27">
    <original>D</original>
    <variation>A</variation>
    <location>
        <position position="140"/>
    </location>
</feature>
<feature type="mutagenesis site" description="Highly decreases cleavage by CASP1 and enhances type I IFN and RSAD2 induction upon DNA virus infection." evidence="27">
    <original>D</original>
    <variation>H</variation>
    <location>
        <position position="140"/>
    </location>
</feature>
<feature type="mutagenesis site" description="In 20DE phospho-mimetic mutant; causes inactivation of nucleotidyltransferase activity; when associated with D-13; E-18; D-23; E-35; D-37; D-57; D-59; D-64; E-68; E-77; E-91; D-94; E-97; D-98; D-116; D-120; D-129; E-130 and D-149." evidence="75">
    <original>S</original>
    <variation>D</variation>
    <location>
        <position position="143"/>
    </location>
</feature>
<feature type="mutagenesis site" description="In 20DE phospho-mimetic mutant; causes inactivation of nucleotidyltransferase activity; when associated with D-13; E-18; D-23; E-35; D-37; D-57; D-59; D-64; E-68; E-77; E-91; D-94; E-97; D-98; D-116; D-120; D-129; E-130 and D-143." evidence="75">
    <original>S</original>
    <variation>D</variation>
    <location>
        <position position="149"/>
    </location>
</feature>
<feature type="mutagenesis site" description="No effect on type I IFN and RSAD2 induction. Highly decreases cleavage by CASP1 and enhances type I IFN and enhances RSAD2 induction upon DNA virus infection. Abolishes cleavage by CASP1, enhances RSAD2 induction upon DNA virus infection but no effect on cleavage by CASP5; when associated with A-140. Abolishes cleavage by CASP1; when associated with A-33; A-67; A-90; A-95 and A-140." evidence="27">
    <original>D</original>
    <variation>A</variation>
    <location>
        <position position="157"/>
    </location>
</feature>
<feature type="mutagenesis site" description="Highly decreases cleavage by CASP1 and enhances type I IFN and enhances RSAD2 induction upon DNA virus infection." evidence="27">
    <original>D</original>
    <variation>H</variation>
    <location>
        <position position="157"/>
    </location>
</feature>
<feature type="mutagenesis site" description="Abolished export from the nucleus to the cytosol in response to DNA stimulation." evidence="73">
    <original>LEKLKL</original>
    <variation>AAAAAA</variation>
    <location>
        <begin position="169"/>
        <end position="174"/>
    </location>
</feature>
<feature type="mutagenesis site" description="Abolishes DNA-binding but does not affect translocation to the nucleus following treatment with etoposide; when associated with A-407." evidence="43">
    <location>
        <begin position="171"/>
        <end position="174"/>
    </location>
</feature>
<feature type="mutagenesis site" description="No effect on stimulation of interferon production." evidence="7">
    <original>K</original>
    <variation>A</variation>
    <location>
        <position position="171"/>
    </location>
</feature>
<feature type="mutagenesis site" description="Impaired type-I interferon production in response to DNA stimulation." evidence="73">
    <original>L</original>
    <variation>A</variation>
    <location>
        <position position="172"/>
    </location>
</feature>
<feature type="mutagenesis site" description="Strongly reduces enzyme activity and stimulation of interferon production; when associated with A-176. No effect on stimulation of interferon production." evidence="7 9 12">
    <original>K</original>
    <variation>A</variation>
    <location>
        <position position="173"/>
    </location>
</feature>
<feature type="mutagenesis site" description="Strongly reduces stimulation of interferon production." evidence="7 9">
    <original>K</original>
    <variation>E</variation>
    <location>
        <position position="173"/>
    </location>
</feature>
<feature type="mutagenesis site" description="Strongly decreased ubiquitination by RNF185; when associated with R-384." evidence="26">
    <original>K</original>
    <variation>R</variation>
    <location>
        <position position="173"/>
    </location>
</feature>
<feature type="mutagenesis site" description="Strongly reduces enzyme activity and stimulation of interferon production." evidence="9 12">
    <original>L</original>
    <variation>N</variation>
    <location>
        <position position="174"/>
    </location>
</feature>
<feature type="mutagenesis site" description="Strongly reduces enzyme activity and stimulation of interferon production; when associated with A-173." evidence="9">
    <original>R</original>
    <variation>A</variation>
    <location>
        <position position="176"/>
    </location>
</feature>
<feature type="mutagenesis site" description="Induces alteration of the DNA-binding surface and leads to increased synthesis of cyclic GMP-AMP (cGAMP); when associated with R-195." evidence="39">
    <original>K</original>
    <variation>N</variation>
    <location>
        <position position="187"/>
    </location>
</feature>
<feature type="mutagenesis site" description="Abolished poly-ADP-ribosylation by PARP1, stimulating interferon production." evidence="85">
    <original>D</original>
    <variation>A</variation>
    <location>
        <position position="191"/>
    </location>
</feature>
<feature type="mutagenesis site" description="Induces alteration of the DNA-binding surface and leads to increased synthesis of cyclic GMP-AMP (cGAMP); when associated with N-187." evidence="39">
    <original>L</original>
    <variation>R</variation>
    <location>
        <position position="195"/>
    </location>
</feature>
<feature type="mutagenesis site" description="Abolishes DNA-binding but does not affect translocation to the nucleus following treatment with etoposide; when associated with A-384." evidence="43">
    <original>NTGSY</original>
    <variation>ATGSA</variation>
    <location>
        <begin position="210"/>
        <end position="214"/>
    </location>
</feature>
<feature type="mutagenesis site" description="More than 75% inhibition of interferon beta production." evidence="40">
    <original>N</original>
    <variation>D</variation>
    <location>
        <position position="210"/>
    </location>
</feature>
<feature type="mutagenesis site" description="Abolishes enzyme activity; when associated with I-376 and I-436." evidence="16">
    <original>T</original>
    <variation>Q</variation>
    <location>
        <position position="211"/>
    </location>
</feature>
<feature type="mutagenesis site" description="Abolishes enzyme activity. Abolishes stimulation of interferon production." evidence="9">
    <original>GS</original>
    <variation>AA</variation>
    <location>
        <begin position="212"/>
        <end position="213"/>
    </location>
</feature>
<feature type="mutagenesis site" description="Phospho-mimetic mutant; decreased nucleotidyltransferase activity." evidence="72">
    <original>S</original>
    <variation>D</variation>
    <location>
        <position position="213"/>
    </location>
</feature>
<feature type="mutagenesis site" description="Strongly reduced tyrosine phosphorylation." evidence="43">
    <original>Y</original>
    <variation>A</variation>
    <location>
        <position position="215"/>
    </location>
</feature>
<feature type="mutagenesis site" description="Phosphomimetic mutant; reduced translocation to the nucleus following treatment with etoposide." evidence="43">
    <original>Y</original>
    <variation>E</variation>
    <location>
        <position position="215"/>
    </location>
</feature>
<feature type="mutagenesis site" description="Abolishes enzyme activity and stimulation of interferon production. Does not affect subcellular location to the nucleus and cytosol." evidence="7 9 19 43 51 53">
    <original>EFD</original>
    <variation>AFA</variation>
    <location>
        <begin position="225"/>
        <end position="227"/>
    </location>
</feature>
<feature type="mutagenesis site" description="Reduced sumoylation." evidence="23">
    <original>K</original>
    <variation>R</variation>
    <location>
        <position position="231"/>
    </location>
</feature>
<feature type="mutagenesis site" description="Abolishes stimulation of interferon production; when associated with E-254 and E-327. Strongly decreased interaction with nucleosomes and tethering to chromatin, leading to constitutive activation in the absence of DNA." evidence="15 54 64 65 66 69">
    <original>R</original>
    <variation>E</variation>
    <location>
        <position position="236"/>
    </location>
</feature>
<feature type="mutagenesis site" description="Does not affect interaction with nucleosomes." evidence="65">
    <original>R</original>
    <variation>E</variation>
    <location>
        <position position="246"/>
    </location>
</feature>
<feature type="mutagenesis site" description="Does not affect interaction with nucleosomes." evidence="65">
    <original>K</original>
    <variation>E</variation>
    <location>
        <position position="252"/>
    </location>
</feature>
<feature type="mutagenesis site" description="Strongly decreased interaction with histones H2A and H2B." evidence="69">
    <original>K</original>
    <variation>A</variation>
    <location>
        <position position="254"/>
    </location>
</feature>
<feature type="mutagenesis site" description="Abolishes stimulation of interferon production; when associated with E-236 and E-327. Abolished interaction with nucleosomes." evidence="15 65">
    <original>K</original>
    <variation>E</variation>
    <location>
        <position position="254"/>
    </location>
</feature>
<feature type="mutagenesis site" description="Abolished interaction with nucleosomes and tethering to chromatin, leading to strong constitutive activation in the absence of DNA." evidence="54 64 65 66 67 69">
    <original>R</original>
    <variation>E</variation>
    <location>
        <position position="255"/>
    </location>
</feature>
<feature type="mutagenesis site" description="Slightly decreased interaction with histones H2A and H2B." evidence="69">
    <original>K</original>
    <variation>A</variation>
    <location>
        <position position="258"/>
    </location>
</feature>
<feature type="mutagenesis site" description="Does not affect interaction with nucleosomes." evidence="65">
    <original>K</original>
    <variation>E</variation>
    <location>
        <position position="258"/>
    </location>
</feature>
<feature type="mutagenesis site" description="Reduced nucleotidyltransferase activity. Abolished nucleotidyltransferase activity; when associated with E-285." evidence="50">
    <original>K</original>
    <variation>E</variation>
    <location>
        <position position="275"/>
    </location>
</feature>
<feature type="mutagenesis site" description="Strongly reduced nucleotidyltransferase activity." evidence="50">
    <original>KFRK</original>
    <variation>EFRE</variation>
    <location>
        <begin position="279"/>
        <end position="282"/>
    </location>
</feature>
<feature type="mutagenesis site" description="Reduced nucleotidyltransferase activity." evidence="50">
    <original>K</original>
    <variation>E</variation>
    <location>
        <position position="279"/>
    </location>
</feature>
<feature type="mutagenesis site" description="Strongly reduced nucleotidyltransferase activity. Abolished nucleotidyltransferase activity; when associated with E-275." evidence="50">
    <original>K</original>
    <variation>E</variation>
    <location>
        <position position="285"/>
    </location>
</feature>
<feature type="mutagenesis site" description="Abolished nuclear localization." evidence="43">
    <location>
        <begin position="295"/>
        <end position="305"/>
    </location>
</feature>
<feature type="mutagenesis site" description="Abolished nucleotidyltransferase activity." evidence="50">
    <original>RK</original>
    <variation>EE</variation>
    <variation>AA</variation>
    <location>
        <begin position="300"/>
        <end position="301"/>
    </location>
</feature>
<feature type="mutagenesis site" description="Reduced nucleotidyltransferase activity." evidence="50">
    <original>R</original>
    <variation>E</variation>
    <location>
        <position position="300"/>
    </location>
</feature>
<feature type="mutagenesis site" description="Enhanced stimulation of interferon production. Does not affect chromosome localization." evidence="22 55">
    <original>S</original>
    <variation>A</variation>
    <location>
        <position position="305"/>
    </location>
</feature>
<feature type="mutagenesis site" description="Phospho-mimetic mutant; decreased ability to trigger type-I interferon production." evidence="55">
    <original>S</original>
    <variation>D</variation>
    <location>
        <position position="305"/>
    </location>
</feature>
<feature type="mutagenesis site" description="Abolishes enzyme activity. Does not affect translocation to the nucleus following treatment with etoposide. Abolished cleavage by CASP3." evidence="43 47">
    <original>D</original>
    <variation>A</variation>
    <location>
        <position position="319"/>
    </location>
</feature>
<feature type="mutagenesis site" description="Slightly decreased interaction with histones H2A and H2B." evidence="69">
    <original>K</original>
    <variation>A</variation>
    <location>
        <position position="327"/>
    </location>
</feature>
<feature type="mutagenesis site" description="Abolishes stimulation of interferon production; when associated with E-236 and E-254. Does not affect interaction with nucleosomes." evidence="15 65">
    <original>K</original>
    <variation>E</variation>
    <location>
        <position position="327"/>
    </location>
</feature>
<feature type="mutagenesis site" description="Slightly decreased interaction with histones H2A and H2B." evidence="69">
    <original>S</original>
    <variation>A</variation>
    <location>
        <position position="328"/>
    </location>
</feature>
<feature type="mutagenesis site" description="Decreased interaction with histones H2A and H2B." evidence="69">
    <original>S</original>
    <variation>A</variation>
    <location>
        <position position="329"/>
    </location>
</feature>
<feature type="mutagenesis site" description="Impaired association with collided ribosomes in response to translation stress. Abolishes stimulation of interferon production. Decreased interaction with nucleosomes." evidence="15 65 79">
    <original>K</original>
    <variation>A</variation>
    <variation>E</variation>
    <location>
        <position position="347"/>
    </location>
</feature>
<feature type="mutagenesis site" description="Impaired association with collided ribosomes in response to translation stress. Decreased interaction with histones H2A and H2B." evidence="69 79">
    <original>R</original>
    <variation>A</variation>
    <location>
        <position position="349"/>
    </location>
</feature>
<feature type="mutagenesis site" description="Impaired association with collided ribosomes in response to translation stress. Decreased interaction with nucleosomes." evidence="65 79">
    <original>R</original>
    <variation>E</variation>
    <location>
        <position position="349"/>
    </location>
</feature>
<feature type="mutagenesis site" description="Impaired association with collided ribosomes in response to translation stress. Does not affect interaction with histones H2A and H2B." evidence="69 79">
    <original>K</original>
    <variation>A</variation>
    <location>
        <position position="350"/>
    </location>
</feature>
<feature type="mutagenesis site" description="Impaired association with collided ribosomes in response to translation stress. Decreased interaction with nucleosomes." evidence="65 79">
    <original>K</original>
    <variation>E</variation>
    <location>
        <position position="350"/>
    </location>
</feature>
<feature type="mutagenesis site" description="Impaired association with collided ribosomes in response to translation stress. Strongly decreased interaction with histones H2A and H2B." evidence="69 79">
    <original>R</original>
    <variation>A</variation>
    <variation>E</variation>
    <location>
        <position position="353"/>
    </location>
</feature>
<feature type="mutagenesis site" description="Abolishes stimulation of interferon production." evidence="15">
    <original>R</original>
    <variation>E</variation>
    <location>
        <position position="353"/>
    </location>
</feature>
<feature type="mutagenesis site" description="Does not affect interaction with nucleosomes." evidence="65">
    <original>K</original>
    <variation>E</variation>
    <location>
        <position position="355"/>
    </location>
</feature>
<feature type="mutagenesis site" description="Alters enzyme activity, leading to the appearance of 3'-5' linked cGAMP. Abolishes enzyme activity; when associated with Q-211 and I-436." evidence="16">
    <original>R</original>
    <variation>I</variation>
    <location>
        <position position="376"/>
    </location>
</feature>
<feature type="mutagenesis site" description="Abolishes stimulation of interferon production. Abolishes DNA-binding but does not affect translocation to the nucleus following treatment with etoposide; when associated with 210-A--A-214." evidence="7 12 43">
    <original>K</original>
    <variation>A</variation>
    <variation>E</variation>
    <location>
        <position position="384"/>
    </location>
</feature>
<feature type="mutagenesis site" description="Acetylation-mimetic mutant; reduced enzyme activity." evidence="44">
    <original>K</original>
    <variation>Q</variation>
    <location>
        <position position="384"/>
    </location>
</feature>
<feature type="mutagenesis site" description="No effect on stimulation of interferon production. Strongly decreased ubiquitination by RNF185; when associated with R-173." evidence="26 44">
    <original>K</original>
    <variation>R</variation>
    <location>
        <position position="384"/>
    </location>
</feature>
<feature type="mutagenesis site" description="Strongly reduces stimulation of interferon production." evidence="7">
    <original>H</original>
    <variation>A</variation>
    <location>
        <position position="390"/>
    </location>
</feature>
<feature type="mutagenesis site" description="Acetylation-mimetic mutant; no effect." evidence="44">
    <original>K</original>
    <variation>Q</variation>
    <location>
        <position position="392"/>
    </location>
</feature>
<feature type="mutagenesis site" description="No effect." evidence="44">
    <original>K</original>
    <variation>R</variation>
    <location>
        <position position="392"/>
    </location>
</feature>
<feature type="mutagenesis site" description="Abolishes enzyme activity. No effect on stimulation of interferon production." evidence="7 15">
    <original>K</original>
    <variation>A</variation>
    <location>
        <position position="394"/>
    </location>
</feature>
<feature type="mutagenesis site" description="Abolishes homodimerization and subsequent nucleotidyltransferase activity. Abolishes stimulation of interferon production. Does not affect subcellular location to the nucleus and cytosol." evidence="7 53 66">
    <original>K</original>
    <variation>E</variation>
    <location>
        <position position="394"/>
    </location>
</feature>
<feature type="mutagenesis site" description="Acetylation-mimetic mutant; reduced enzyme activity." evidence="44">
    <original>K</original>
    <variation>Q</variation>
    <location>
        <position position="394"/>
    </location>
</feature>
<feature type="mutagenesis site" description="No effect on stimulation of interferon production." evidence="44">
    <original>K</original>
    <variation>R</variation>
    <location>
        <position position="394"/>
    </location>
</feature>
<feature type="mutagenesis site" description="Abolishes DNA binding and enzyme activity. Abolishes stimulation of interferon production. Decreased localization to the nucleus." evidence="9 46 53">
    <original>CC</original>
    <variation>AA</variation>
    <location>
        <begin position="396"/>
        <end position="397"/>
    </location>
</feature>
<feature type="mutagenesis site" description="Does not affect palmitoylation by ZDHHC9." evidence="89">
    <original>CC</original>
    <variation>SS</variation>
    <location>
        <begin position="396"/>
        <end position="397"/>
    </location>
</feature>
<feature type="mutagenesis site" description="Abolishes DNA binding and enzyme activity." evidence="7 84">
    <original>C</original>
    <variation>A</variation>
    <location>
        <position position="396"/>
    </location>
</feature>
<feature type="mutagenesis site" description="Abolishes stimulation of interferon production." evidence="7">
    <original>C</original>
    <variation>A</variation>
    <location>
        <position position="397"/>
    </location>
</feature>
<feature type="mutagenesis site" description="Abolishes stimulation of interferon production; when associated with E-403." evidence="12">
    <original>K</original>
    <variation>E</variation>
    <location>
        <position position="400"/>
    </location>
</feature>
<feature type="mutagenesis site" description="Abolishes stimulation of interferon production; when associated with E-400." evidence="12">
    <original>K</original>
    <variation>E</variation>
    <location>
        <position position="403"/>
    </location>
</feature>
<feature type="mutagenesis site" description="Abolished palmitoylation by ZDHHC9, leading to decreased enzyme activity." evidence="89">
    <original>CC</original>
    <variation>SS</variation>
    <location>
        <begin position="404"/>
        <end position="405"/>
    </location>
</feature>
<feature type="mutagenesis site" description="Abolishes stimulation of interferon production." evidence="7">
    <original>C</original>
    <variation>A</variation>
    <location>
        <position position="404"/>
    </location>
</feature>
<feature type="mutagenesis site" description="Prevents activation in response to DNA-binding; leading to abolished enzyme activity and stimulation of interferon production." evidence="9 51">
    <original>KDCLK</original>
    <variation>EDCLA</variation>
    <location>
        <begin position="407"/>
        <end position="411"/>
    </location>
</feature>
<feature type="mutagenesis site" description="Abolishes enzyme activity. Abolishes stimulation of interferon production. Abolishes DNA-binding but does not affect translocation to the nucleus following treatment with etoposide; when associated with 171-K--L-174 DEL." evidence="7 43">
    <original>K</original>
    <variation>A</variation>
    <location>
        <position position="407"/>
    </location>
</feature>
<feature type="mutagenesis site" description="Loss of ubiquitination by MARCHF8." evidence="86">
    <original>K</original>
    <variation>R</variation>
    <location>
        <position position="411"/>
    </location>
</feature>
<feature type="mutagenesis site" description="Abolishes stimulation of interferon production." evidence="7">
    <original>K</original>
    <variation>A</variation>
    <variation>E</variation>
    <location>
        <position position="414"/>
    </location>
</feature>
<feature type="mutagenesis site" description="Acetylation-mimetic mutant; reduced enzyme activity." evidence="44">
    <original>K</original>
    <variation>Q</variation>
    <location>
        <position position="414"/>
    </location>
</feature>
<feature type="mutagenesis site" description="Reduced enzyme activity. Decreased ubiquitination and SQSTM1-mediated autophagic degradation." evidence="24 44">
    <original>K</original>
    <variation>R</variation>
    <location>
        <position position="414"/>
    </location>
</feature>
<feature type="mutagenesis site" description="Reduced nucleotidyltransferase activity." evidence="50">
    <original>KK</original>
    <variation>AA</variation>
    <location>
        <begin position="427"/>
        <end position="428"/>
    </location>
</feature>
<feature type="mutagenesis site" description="Abolished nucleotidyltransferase activity." evidence="50">
    <original>KK</original>
    <variation>EE</variation>
    <location>
        <begin position="427"/>
        <end position="428"/>
    </location>
</feature>
<feature type="mutagenesis site" description="Abolished ubiquitination by the ECS(SPSB3) complex." evidence="90">
    <original>KK</original>
    <variation>RR</variation>
    <location>
        <begin position="427"/>
        <end position="428"/>
    </location>
</feature>
<feature type="mutagenesis site" description="Gains susceptibility to mouse-specific RU.521; when associated with H-482." evidence="39">
    <original>S</original>
    <variation>C</variation>
    <location>
        <position position="434"/>
    </location>
</feature>
<feature type="mutagenesis site" description="Decreased cyclic GMP-AMP synthase activity." evidence="58">
    <original>S</original>
    <variation>A</variation>
    <location>
        <position position="435"/>
    </location>
</feature>
<feature type="mutagenesis site" description="Phospho-mimetic mutant; increased cyclic GMP-AMP synthase activity." evidence="58">
    <original>S</original>
    <variation>D</variation>
    <location>
        <position position="435"/>
    </location>
</feature>
<feature type="mutagenesis site" description="Abolishes enzyme activity; when associated with Q-211 and I-376." evidence="16">
    <original>Y</original>
    <variation>I</variation>
    <location>
        <position position="436"/>
    </location>
</feature>
<feature type="mutagenesis site" description="Reduced interaction with the SPSB3 component of the ECS(SPSB3) complex." evidence="90">
    <original>D</original>
    <variation>A</variation>
    <location>
        <position position="465"/>
    </location>
</feature>
<feature type="mutagenesis site" description="Abolished palmitoylation by ZDHHC18, leading to increased DNA-binding and enzyme activity." evidence="85">
    <original>C</original>
    <variation>S</variation>
    <location>
        <position position="474"/>
    </location>
</feature>
<feature type="mutagenesis site" description="Reduced sumoylation." evidence="23">
    <original>K</original>
    <variation>R</variation>
    <location>
        <position position="479"/>
    </location>
</feature>
<feature type="mutagenesis site" description="Gains susceptibility to mouse-specific RU.521; when associated with C-434." evidence="39">
    <original>N</original>
    <variation>H</variation>
    <location>
        <position position="482"/>
    </location>
</feature>
<feature type="mutagenesis site" description="Reduced interaction with the SPSB3 component of the ECS(SPSB3) complex." evidence="90">
    <original>E</original>
    <variation>A</variation>
    <location>
        <position position="509"/>
    </location>
</feature>
<feature type="mutagenesis site" description="Reduced interaction with the SPSB3 component of the ECS(SPSB3) complex." evidence="90">
    <original>Y</original>
    <variation>A</variation>
    <location>
        <position position="510"/>
    </location>
</feature>
<feature type="mutagenesis site" description="Reduced interaction with the SPSB3 component of the ECS(SPSB3) complex." evidence="90">
    <original>R</original>
    <variation>A</variation>
    <location>
        <position position="512"/>
    </location>
</feature>
<feature type="mutagenesis site" description="Abollshed interaction with the SPSB3 component of the ECS(SPSB3) complex." evidence="90">
    <original>N</original>
    <variation>A</variation>
    <location>
        <position position="513"/>
    </location>
</feature>
<feature type="mutagenesis site" description="Abollshed interaction with the SPSB3 component of the ECS(SPSB3) complex." evidence="90">
    <original>N</original>
    <variation>A</variation>
    <location>
        <position position="514"/>
    </location>
</feature>
<feature type="strand" evidence="137">
    <location>
        <begin position="157"/>
        <end position="159"/>
    </location>
</feature>
<feature type="helix" evidence="143">
    <location>
        <begin position="162"/>
        <end position="173"/>
    </location>
</feature>
<feature type="helix" evidence="143">
    <location>
        <begin position="176"/>
        <end position="197"/>
    </location>
</feature>
<feature type="helix" evidence="143">
    <location>
        <begin position="201"/>
        <end position="203"/>
    </location>
</feature>
<feature type="strand" evidence="143">
    <location>
        <begin position="206"/>
        <end position="209"/>
    </location>
</feature>
<feature type="strand" evidence="139">
    <location>
        <begin position="210"/>
        <end position="212"/>
    </location>
</feature>
<feature type="turn" evidence="143">
    <location>
        <begin position="213"/>
        <end position="217"/>
    </location>
</feature>
<feature type="strand" evidence="140">
    <location>
        <begin position="218"/>
        <end position="222"/>
    </location>
</feature>
<feature type="strand" evidence="143">
    <location>
        <begin position="225"/>
        <end position="233"/>
    </location>
</feature>
<feature type="strand" evidence="143">
    <location>
        <begin position="236"/>
        <end position="241"/>
    </location>
</feature>
<feature type="helix" evidence="145">
    <location>
        <begin position="242"/>
        <end position="244"/>
    </location>
</feature>
<feature type="strand" evidence="143">
    <location>
        <begin position="246"/>
        <end position="253"/>
    </location>
</feature>
<feature type="strand" evidence="141">
    <location>
        <begin position="255"/>
        <end position="257"/>
    </location>
</feature>
<feature type="helix" evidence="143">
    <location>
        <begin position="261"/>
        <end position="265"/>
    </location>
</feature>
<feature type="strand" evidence="138">
    <location>
        <begin position="266"/>
        <end position="271"/>
    </location>
</feature>
<feature type="helix" evidence="143">
    <location>
        <begin position="273"/>
        <end position="289"/>
    </location>
</feature>
<feature type="strand" evidence="140">
    <location>
        <begin position="292"/>
        <end position="294"/>
    </location>
</feature>
<feature type="strand" evidence="143">
    <location>
        <begin position="296"/>
        <end position="299"/>
    </location>
</feature>
<feature type="strand" evidence="143">
    <location>
        <begin position="304"/>
        <end position="306"/>
    </location>
</feature>
<feature type="strand" evidence="143">
    <location>
        <begin position="308"/>
        <end position="312"/>
    </location>
</feature>
<feature type="turn" evidence="143">
    <location>
        <begin position="313"/>
        <end position="315"/>
    </location>
</feature>
<feature type="strand" evidence="143">
    <location>
        <begin position="316"/>
        <end position="326"/>
    </location>
</feature>
<feature type="helix" evidence="143">
    <location>
        <begin position="332"/>
        <end position="334"/>
    </location>
</feature>
<feature type="turn" evidence="143">
    <location>
        <begin position="341"/>
        <end position="343"/>
    </location>
</feature>
<feature type="helix" evidence="143">
    <location>
        <begin position="346"/>
        <end position="353"/>
    </location>
</feature>
<feature type="strand" evidence="143">
    <location>
        <begin position="357"/>
        <end position="361"/>
    </location>
</feature>
<feature type="strand" evidence="144">
    <location>
        <begin position="366"/>
        <end position="368"/>
    </location>
</feature>
<feature type="strand" evidence="141">
    <location>
        <begin position="369"/>
        <end position="371"/>
    </location>
</feature>
<feature type="strand" evidence="143">
    <location>
        <begin position="375"/>
        <end position="378"/>
    </location>
</feature>
<feature type="helix" evidence="143">
    <location>
        <begin position="380"/>
        <end position="388"/>
    </location>
</feature>
<feature type="strand" evidence="144">
    <location>
        <begin position="391"/>
        <end position="393"/>
    </location>
</feature>
<feature type="turn" evidence="143">
    <location>
        <begin position="394"/>
        <end position="397"/>
    </location>
</feature>
<feature type="helix" evidence="143">
    <location>
        <begin position="400"/>
        <end position="402"/>
    </location>
</feature>
<feature type="helix" evidence="143">
    <location>
        <begin position="406"/>
        <end position="422"/>
    </location>
</feature>
<feature type="turn" evidence="143">
    <location>
        <begin position="423"/>
        <end position="427"/>
    </location>
</feature>
<feature type="turn" evidence="143">
    <location>
        <begin position="429"/>
        <end position="432"/>
    </location>
</feature>
<feature type="helix" evidence="143">
    <location>
        <begin position="435"/>
        <end position="448"/>
    </location>
</feature>
<feature type="helix" evidence="143">
    <location>
        <begin position="452"/>
        <end position="455"/>
    </location>
</feature>
<feature type="helix" evidence="143">
    <location>
        <begin position="457"/>
        <end position="459"/>
    </location>
</feature>
<feature type="helix" evidence="143">
    <location>
        <begin position="460"/>
        <end position="477"/>
    </location>
</feature>
<feature type="strand" evidence="142">
    <location>
        <begin position="483"/>
        <end position="485"/>
    </location>
</feature>
<feature type="turn" evidence="143">
    <location>
        <begin position="493"/>
        <end position="495"/>
    </location>
</feature>
<feature type="helix" evidence="143">
    <location>
        <begin position="498"/>
        <end position="513"/>
    </location>
</feature>
<feature type="helix" evidence="143">
    <location>
        <begin position="517"/>
        <end position="519"/>
    </location>
</feature>
<keyword id="KW-0002">3D-structure</keyword>
<keyword id="KW-0007">Acetylation</keyword>
<keyword id="KW-0013">ADP-ribosylation</keyword>
<keyword id="KW-0025">Alternative splicing</keyword>
<keyword id="KW-0051">Antiviral defense</keyword>
<keyword id="KW-0067">ATP-binding</keyword>
<keyword id="KW-1003">Cell membrane</keyword>
<keyword id="KW-0158">Chromosome</keyword>
<keyword id="KW-0963">Cytoplasm</keyword>
<keyword id="KW-0227">DNA damage</keyword>
<keyword id="KW-0234">DNA repair</keyword>
<keyword id="KW-0238">DNA-binding</keyword>
<keyword id="KW-0342">GTP-binding</keyword>
<keyword id="KW-0945">Host-virus interaction</keyword>
<keyword id="KW-0391">Immunity</keyword>
<keyword id="KW-0399">Innate immunity</keyword>
<keyword id="KW-1017">Isopeptide bond</keyword>
<keyword id="KW-0446">Lipid-binding</keyword>
<keyword id="KW-0449">Lipoprotein</keyword>
<keyword id="KW-0460">Magnesium</keyword>
<keyword id="KW-0472">Membrane</keyword>
<keyword id="KW-0479">Metal-binding</keyword>
<keyword id="KW-0488">Methylation</keyword>
<keyword id="KW-0547">Nucleotide-binding</keyword>
<keyword id="KW-0548">Nucleotidyltransferase</keyword>
<keyword id="KW-0539">Nucleus</keyword>
<keyword id="KW-0564">Palmitate</keyword>
<keyword id="KW-0597">Phosphoprotein</keyword>
<keyword id="KW-1267">Proteomics identification</keyword>
<keyword id="KW-1185">Reference proteome</keyword>
<keyword id="KW-0808">Transferase</keyword>
<keyword id="KW-0832">Ubl conjugation</keyword>
<keyword id="KW-0862">Zinc</keyword>
<proteinExistence type="evidence at protein level"/>
<name>CGAS_HUMAN</name>
<evidence type="ECO:0000250" key="1">
    <source>
        <dbReference type="UniProtKB" id="Q8C6L5"/>
    </source>
</evidence>
<evidence type="ECO:0000256" key="2">
    <source>
        <dbReference type="SAM" id="MobiDB-lite"/>
    </source>
</evidence>
<evidence type="ECO:0000269" key="3">
    <source>
    </source>
</evidence>
<evidence type="ECO:0000269" key="4">
    <source>
    </source>
</evidence>
<evidence type="ECO:0000269" key="5">
    <source>
    </source>
</evidence>
<evidence type="ECO:0000269" key="6">
    <source>
    </source>
</evidence>
<evidence type="ECO:0000269" key="7">
    <source>
    </source>
</evidence>
<evidence type="ECO:0000269" key="8">
    <source>
    </source>
</evidence>
<evidence type="ECO:0000269" key="9">
    <source>
    </source>
</evidence>
<evidence type="ECO:0000269" key="10">
    <source>
    </source>
</evidence>
<evidence type="ECO:0000269" key="11">
    <source>
    </source>
</evidence>
<evidence type="ECO:0000269" key="12">
    <source>
    </source>
</evidence>
<evidence type="ECO:0000269" key="13">
    <source>
    </source>
</evidence>
<evidence type="ECO:0000269" key="14">
    <source>
    </source>
</evidence>
<evidence type="ECO:0000269" key="15">
    <source>
    </source>
</evidence>
<evidence type="ECO:0000269" key="16">
    <source>
    </source>
</evidence>
<evidence type="ECO:0000269" key="17">
    <source>
    </source>
</evidence>
<evidence type="ECO:0000269" key="18">
    <source>
    </source>
</evidence>
<evidence type="ECO:0000269" key="19">
    <source>
    </source>
</evidence>
<evidence type="ECO:0000269" key="20">
    <source>
    </source>
</evidence>
<evidence type="ECO:0000269" key="21">
    <source>
    </source>
</evidence>
<evidence type="ECO:0000269" key="22">
    <source>
    </source>
</evidence>
<evidence type="ECO:0000269" key="23">
    <source>
    </source>
</evidence>
<evidence type="ECO:0000269" key="24">
    <source>
    </source>
</evidence>
<evidence type="ECO:0000269" key="25">
    <source>
    </source>
</evidence>
<evidence type="ECO:0000269" key="26">
    <source>
    </source>
</evidence>
<evidence type="ECO:0000269" key="27">
    <source>
    </source>
</evidence>
<evidence type="ECO:0000269" key="28">
    <source>
    </source>
</evidence>
<evidence type="ECO:0000269" key="29">
    <source>
    </source>
</evidence>
<evidence type="ECO:0000269" key="30">
    <source>
    </source>
</evidence>
<evidence type="ECO:0000269" key="31">
    <source>
    </source>
</evidence>
<evidence type="ECO:0000269" key="32">
    <source>
    </source>
</evidence>
<evidence type="ECO:0000269" key="33">
    <source>
    </source>
</evidence>
<evidence type="ECO:0000269" key="34">
    <source>
    </source>
</evidence>
<evidence type="ECO:0000269" key="35">
    <source>
    </source>
</evidence>
<evidence type="ECO:0000269" key="36">
    <source>
    </source>
</evidence>
<evidence type="ECO:0000269" key="37">
    <source>
    </source>
</evidence>
<evidence type="ECO:0000269" key="38">
    <source>
    </source>
</evidence>
<evidence type="ECO:0000269" key="39">
    <source>
    </source>
</evidence>
<evidence type="ECO:0000269" key="40">
    <source>
    </source>
</evidence>
<evidence type="ECO:0000269" key="41">
    <source>
    </source>
</evidence>
<evidence type="ECO:0000269" key="42">
    <source>
    </source>
</evidence>
<evidence type="ECO:0000269" key="43">
    <source>
    </source>
</evidence>
<evidence type="ECO:0000269" key="44">
    <source>
    </source>
</evidence>
<evidence type="ECO:0000269" key="45">
    <source>
    </source>
</evidence>
<evidence type="ECO:0000269" key="46">
    <source>
    </source>
</evidence>
<evidence type="ECO:0000269" key="47">
    <source>
    </source>
</evidence>
<evidence type="ECO:0000269" key="48">
    <source>
    </source>
</evidence>
<evidence type="ECO:0000269" key="49">
    <source>
    </source>
</evidence>
<evidence type="ECO:0000269" key="50">
    <source>
    </source>
</evidence>
<evidence type="ECO:0000269" key="51">
    <source>
    </source>
</evidence>
<evidence type="ECO:0000269" key="52">
    <source>
    </source>
</evidence>
<evidence type="ECO:0000269" key="53">
    <source>
    </source>
</evidence>
<evidence type="ECO:0000269" key="54">
    <source>
    </source>
</evidence>
<evidence type="ECO:0000269" key="55">
    <source>
    </source>
</evidence>
<evidence type="ECO:0000269" key="56">
    <source>
    </source>
</evidence>
<evidence type="ECO:0000269" key="57">
    <source>
    </source>
</evidence>
<evidence type="ECO:0000269" key="58">
    <source>
    </source>
</evidence>
<evidence type="ECO:0000269" key="59">
    <source>
    </source>
</evidence>
<evidence type="ECO:0000269" key="60">
    <source>
    </source>
</evidence>
<evidence type="ECO:0000269" key="61">
    <source>
    </source>
</evidence>
<evidence type="ECO:0000269" key="62">
    <source>
    </source>
</evidence>
<evidence type="ECO:0000269" key="63">
    <source>
    </source>
</evidence>
<evidence type="ECO:0000269" key="64">
    <source>
    </source>
</evidence>
<evidence type="ECO:0000269" key="65">
    <source>
    </source>
</evidence>
<evidence type="ECO:0000269" key="66">
    <source>
    </source>
</evidence>
<evidence type="ECO:0000269" key="67">
    <source>
    </source>
</evidence>
<evidence type="ECO:0000269" key="68">
    <source>
    </source>
</evidence>
<evidence type="ECO:0000269" key="69">
    <source>
    </source>
</evidence>
<evidence type="ECO:0000269" key="70">
    <source>
    </source>
</evidence>
<evidence type="ECO:0000269" key="71">
    <source>
    </source>
</evidence>
<evidence type="ECO:0000269" key="72">
    <source>
    </source>
</evidence>
<evidence type="ECO:0000269" key="73">
    <source>
    </source>
</evidence>
<evidence type="ECO:0000269" key="74">
    <source>
    </source>
</evidence>
<evidence type="ECO:0000269" key="75">
    <source>
    </source>
</evidence>
<evidence type="ECO:0000269" key="76">
    <source>
    </source>
</evidence>
<evidence type="ECO:0000269" key="77">
    <source>
    </source>
</evidence>
<evidence type="ECO:0000269" key="78">
    <source>
    </source>
</evidence>
<evidence type="ECO:0000269" key="79">
    <source>
    </source>
</evidence>
<evidence type="ECO:0000269" key="80">
    <source>
    </source>
</evidence>
<evidence type="ECO:0000269" key="81">
    <source>
    </source>
</evidence>
<evidence type="ECO:0000269" key="82">
    <source>
    </source>
</evidence>
<evidence type="ECO:0000269" key="83">
    <source>
    </source>
</evidence>
<evidence type="ECO:0000269" key="84">
    <source>
    </source>
</evidence>
<evidence type="ECO:0000269" key="85">
    <source>
    </source>
</evidence>
<evidence type="ECO:0000269" key="86">
    <source>
    </source>
</evidence>
<evidence type="ECO:0000269" key="87">
    <source>
    </source>
</evidence>
<evidence type="ECO:0000269" key="88">
    <source>
    </source>
</evidence>
<evidence type="ECO:0000269" key="89">
    <source>
    </source>
</evidence>
<evidence type="ECO:0000269" key="90">
    <source>
    </source>
</evidence>
<evidence type="ECO:0000269" key="91">
    <source>
    </source>
</evidence>
<evidence type="ECO:0000303" key="92">
    <source>
    </source>
</evidence>
<evidence type="ECO:0000303" key="93">
    <source>
    </source>
</evidence>
<evidence type="ECO:0000305" key="94"/>
<evidence type="ECO:0000305" key="95">
    <source>
    </source>
</evidence>
<evidence type="ECO:0000305" key="96">
    <source>
    </source>
</evidence>
<evidence type="ECO:0000305" key="97">
    <source>
    </source>
</evidence>
<evidence type="ECO:0000305" key="98">
    <source>
    </source>
</evidence>
<evidence type="ECO:0000312" key="99">
    <source>
        <dbReference type="HGNC" id="HGNC:21367"/>
    </source>
</evidence>
<evidence type="ECO:0007744" key="100">
    <source>
        <dbReference type="PDB" id="4O67"/>
    </source>
</evidence>
<evidence type="ECO:0007744" key="101">
    <source>
        <dbReference type="PDB" id="5V8O"/>
    </source>
</evidence>
<evidence type="ECO:0007744" key="102">
    <source>
        <dbReference type="PDB" id="5VDO"/>
    </source>
</evidence>
<evidence type="ECO:0007744" key="103">
    <source>
        <dbReference type="PDB" id="5VDP"/>
    </source>
</evidence>
<evidence type="ECO:0007744" key="104">
    <source>
        <dbReference type="PDB" id="5VDQ"/>
    </source>
</evidence>
<evidence type="ECO:0007744" key="105">
    <source>
        <dbReference type="PDB" id="5VDR"/>
    </source>
</evidence>
<evidence type="ECO:0007744" key="106">
    <source>
        <dbReference type="PDB" id="5VDS"/>
    </source>
</evidence>
<evidence type="ECO:0007744" key="107">
    <source>
        <dbReference type="PDB" id="5VDT"/>
    </source>
</evidence>
<evidence type="ECO:0007744" key="108">
    <source>
        <dbReference type="PDB" id="5VDU"/>
    </source>
</evidence>
<evidence type="ECO:0007744" key="109">
    <source>
        <dbReference type="PDB" id="5VDV"/>
    </source>
</evidence>
<evidence type="ECO:0007744" key="110">
    <source>
        <dbReference type="PDB" id="5VDW"/>
    </source>
</evidence>
<evidence type="ECO:0007744" key="111">
    <source>
        <dbReference type="PDB" id="6CT9"/>
    </source>
</evidence>
<evidence type="ECO:0007744" key="112">
    <source>
        <dbReference type="PDB" id="6CTA"/>
    </source>
</evidence>
<evidence type="ECO:0007744" key="113">
    <source>
        <dbReference type="PDB" id="6EDB"/>
    </source>
</evidence>
<evidence type="ECO:0007744" key="114">
    <source>
        <dbReference type="PDB" id="6EDC"/>
    </source>
</evidence>
<evidence type="ECO:0007744" key="115">
    <source>
        <dbReference type="PDB" id="6LRC"/>
    </source>
</evidence>
<evidence type="ECO:0007744" key="116">
    <source>
        <dbReference type="PDB" id="6LRE"/>
    </source>
</evidence>
<evidence type="ECO:0007744" key="117">
    <source>
        <dbReference type="PDB" id="6LRI"/>
    </source>
</evidence>
<evidence type="ECO:0007744" key="118">
    <source>
        <dbReference type="PDB" id="6LRJ"/>
    </source>
</evidence>
<evidence type="ECO:0007744" key="119">
    <source>
        <dbReference type="PDB" id="6LRK"/>
    </source>
</evidence>
<evidence type="ECO:0007744" key="120">
    <source>
        <dbReference type="PDB" id="6LRL"/>
    </source>
</evidence>
<evidence type="ECO:0007744" key="121">
    <source>
        <dbReference type="PDB" id="6MJU"/>
    </source>
</evidence>
<evidence type="ECO:0007744" key="122">
    <source>
        <dbReference type="PDB" id="6MJW"/>
    </source>
</evidence>
<evidence type="ECO:0007744" key="123">
    <source>
        <dbReference type="PDB" id="6MJX"/>
    </source>
</evidence>
<evidence type="ECO:0007744" key="124">
    <source>
        <dbReference type="PDB" id="6NAO"/>
    </source>
</evidence>
<evidence type="ECO:0007744" key="125">
    <source>
        <dbReference type="PDB" id="6NFG"/>
    </source>
</evidence>
<evidence type="ECO:0007744" key="126">
    <source>
        <dbReference type="PDB" id="6NFO"/>
    </source>
</evidence>
<evidence type="ECO:0007744" key="127">
    <source>
        <dbReference type="PDB" id="6O47"/>
    </source>
</evidence>
<evidence type="ECO:0007744" key="128">
    <source>
        <dbReference type="PDB" id="6Y5D"/>
    </source>
</evidence>
<evidence type="ECO:0007744" key="129">
    <source>
        <dbReference type="PDB" id="6Y5E"/>
    </source>
</evidence>
<evidence type="ECO:0007744" key="130">
    <source>
        <dbReference type="PDB" id="7C0M"/>
    </source>
</evidence>
<evidence type="ECO:0007744" key="131">
    <source>
        <dbReference type="PDB" id="7CCQ"/>
    </source>
</evidence>
<evidence type="ECO:0007744" key="132">
    <source>
        <dbReference type="PDB" id="7CCR"/>
    </source>
</evidence>
<evidence type="ECO:0007744" key="133">
    <source>
        <dbReference type="PDB" id="8OKX"/>
    </source>
</evidence>
<evidence type="ECO:0007744" key="134">
    <source>
        <dbReference type="PDB" id="8OL1"/>
    </source>
</evidence>
<evidence type="ECO:0007744" key="135">
    <source>
    </source>
</evidence>
<evidence type="ECO:0007744" key="136">
    <source>
    </source>
</evidence>
<evidence type="ECO:0007829" key="137">
    <source>
        <dbReference type="PDB" id="4LEV"/>
    </source>
</evidence>
<evidence type="ECO:0007829" key="138">
    <source>
        <dbReference type="PDB" id="6LRI"/>
    </source>
</evidence>
<evidence type="ECO:0007829" key="139">
    <source>
        <dbReference type="PDB" id="6O47"/>
    </source>
</evidence>
<evidence type="ECO:0007829" key="140">
    <source>
        <dbReference type="PDB" id="7FTF"/>
    </source>
</evidence>
<evidence type="ECO:0007829" key="141">
    <source>
        <dbReference type="PDB" id="7FTR"/>
    </source>
</evidence>
<evidence type="ECO:0007829" key="142">
    <source>
        <dbReference type="PDB" id="7FTV"/>
    </source>
</evidence>
<evidence type="ECO:0007829" key="143">
    <source>
        <dbReference type="PDB" id="7FUA"/>
    </source>
</evidence>
<evidence type="ECO:0007829" key="144">
    <source>
        <dbReference type="PDB" id="7FUK"/>
    </source>
</evidence>
<evidence type="ECO:0007829" key="145">
    <source>
        <dbReference type="PDB" id="8SHZ"/>
    </source>
</evidence>
<dbReference type="EC" id="2.7.7.86" evidence="6 7 9 16 31 38 44"/>
<dbReference type="EMBL" id="KC294566">
    <property type="protein sequence ID" value="AGB51853.1"/>
    <property type="molecule type" value="mRNA"/>
</dbReference>
<dbReference type="EMBL" id="AK097148">
    <property type="protein sequence ID" value="BAC04965.1"/>
    <property type="molecule type" value="mRNA"/>
</dbReference>
<dbReference type="EMBL" id="AC019205">
    <property type="status" value="NOT_ANNOTATED_CDS"/>
    <property type="molecule type" value="Genomic_DNA"/>
</dbReference>
<dbReference type="EMBL" id="AL603910">
    <property type="status" value="NOT_ANNOTATED_CDS"/>
    <property type="molecule type" value="Genomic_DNA"/>
</dbReference>
<dbReference type="EMBL" id="BC012928">
    <property type="protein sequence ID" value="AAH12928.1"/>
    <property type="status" value="ALT_INIT"/>
    <property type="molecule type" value="mRNA"/>
</dbReference>
<dbReference type="EMBL" id="BC108714">
    <property type="protein sequence ID" value="AAI08715.1"/>
    <property type="molecule type" value="mRNA"/>
</dbReference>
<dbReference type="EMBL" id="BC113606">
    <property type="protein sequence ID" value="AAI13607.1"/>
    <property type="molecule type" value="mRNA"/>
</dbReference>
<dbReference type="EMBL" id="BC113608">
    <property type="protein sequence ID" value="AAI13609.1"/>
    <property type="molecule type" value="mRNA"/>
</dbReference>
<dbReference type="EMBL" id="BC143694">
    <property type="protein sequence ID" value="AAI43695.1"/>
    <property type="molecule type" value="mRNA"/>
</dbReference>
<dbReference type="CCDS" id="CCDS4978.1">
    <molecule id="Q8N884-1"/>
</dbReference>
<dbReference type="RefSeq" id="NP_612450.2">
    <molecule id="Q8N884-1"/>
    <property type="nucleotide sequence ID" value="NM_138441.3"/>
</dbReference>
<dbReference type="PDB" id="4KM5">
    <property type="method" value="X-ray"/>
    <property type="resolution" value="2.50 A"/>
    <property type="chains" value="A=157-522"/>
</dbReference>
<dbReference type="PDB" id="4LEV">
    <property type="method" value="X-ray"/>
    <property type="resolution" value="1.95 A"/>
    <property type="chains" value="A/B=157-522"/>
</dbReference>
<dbReference type="PDB" id="4LEW">
    <property type="method" value="X-ray"/>
    <property type="resolution" value="2.04 A"/>
    <property type="chains" value="A/B=157-522"/>
</dbReference>
<dbReference type="PDB" id="4MKP">
    <property type="method" value="X-ray"/>
    <property type="resolution" value="1.95 A"/>
    <property type="chains" value="A=161-522"/>
</dbReference>
<dbReference type="PDB" id="4O67">
    <property type="method" value="X-ray"/>
    <property type="resolution" value="2.44 A"/>
    <property type="chains" value="A/B=161-522"/>
</dbReference>
<dbReference type="PDB" id="4O68">
    <property type="method" value="X-ray"/>
    <property type="resolution" value="2.44 A"/>
    <property type="chains" value="A=147-522"/>
</dbReference>
<dbReference type="PDB" id="4O69">
    <property type="method" value="X-ray"/>
    <property type="resolution" value="2.25 A"/>
    <property type="chains" value="A=161-522"/>
</dbReference>
<dbReference type="PDB" id="5V8O">
    <property type="method" value="X-ray"/>
    <property type="resolution" value="3.10 A"/>
    <property type="chains" value="A/B=161-522"/>
</dbReference>
<dbReference type="PDB" id="5VDO">
    <property type="method" value="X-ray"/>
    <property type="resolution" value="3.22 A"/>
    <property type="chains" value="A/B=161-522"/>
</dbReference>
<dbReference type="PDB" id="5VDP">
    <property type="method" value="X-ray"/>
    <property type="resolution" value="2.30 A"/>
    <property type="chains" value="A/B=161-522"/>
</dbReference>
<dbReference type="PDB" id="5VDQ">
    <property type="method" value="X-ray"/>
    <property type="resolution" value="3.25 A"/>
    <property type="chains" value="A/B=161-522"/>
</dbReference>
<dbReference type="PDB" id="5VDR">
    <property type="method" value="X-ray"/>
    <property type="resolution" value="3.04 A"/>
    <property type="chains" value="A/B=161-522"/>
</dbReference>
<dbReference type="PDB" id="5VDS">
    <property type="method" value="X-ray"/>
    <property type="resolution" value="2.77 A"/>
    <property type="chains" value="A/B=161-522"/>
</dbReference>
<dbReference type="PDB" id="5VDT">
    <property type="method" value="X-ray"/>
    <property type="resolution" value="2.58 A"/>
    <property type="chains" value="A/B=161-522"/>
</dbReference>
<dbReference type="PDB" id="5VDU">
    <property type="method" value="X-ray"/>
    <property type="resolution" value="2.73 A"/>
    <property type="chains" value="A/B=161-522"/>
</dbReference>
<dbReference type="PDB" id="5VDV">
    <property type="method" value="X-ray"/>
    <property type="resolution" value="3.00 A"/>
    <property type="chains" value="A/B=161-522"/>
</dbReference>
<dbReference type="PDB" id="5VDW">
    <property type="method" value="X-ray"/>
    <property type="resolution" value="2.71 A"/>
    <property type="chains" value="A/B=161-522"/>
</dbReference>
<dbReference type="PDB" id="6CT9">
    <property type="method" value="X-ray"/>
    <property type="resolution" value="2.26 A"/>
    <property type="chains" value="A=157-522"/>
</dbReference>
<dbReference type="PDB" id="6CTA">
    <property type="method" value="X-ray"/>
    <property type="resolution" value="2.78 A"/>
    <property type="chains" value="A=157-522"/>
</dbReference>
<dbReference type="PDB" id="6EDB">
    <property type="method" value="X-ray"/>
    <property type="resolution" value="3.21 A"/>
    <property type="chains" value="A/B=157-522"/>
</dbReference>
<dbReference type="PDB" id="6EDC">
    <property type="method" value="X-ray"/>
    <property type="resolution" value="2.71 A"/>
    <property type="chains" value="A=157-522"/>
</dbReference>
<dbReference type="PDB" id="6LRC">
    <property type="method" value="X-ray"/>
    <property type="resolution" value="1.83 A"/>
    <property type="chains" value="A/B=157-522"/>
</dbReference>
<dbReference type="PDB" id="6LRE">
    <property type="method" value="X-ray"/>
    <property type="resolution" value="2.65 A"/>
    <property type="chains" value="A/B=157-522"/>
</dbReference>
<dbReference type="PDB" id="6LRI">
    <property type="method" value="X-ray"/>
    <property type="resolution" value="2.50 A"/>
    <property type="chains" value="A/B=157-522"/>
</dbReference>
<dbReference type="PDB" id="6LRJ">
    <property type="method" value="X-ray"/>
    <property type="resolution" value="3.00 A"/>
    <property type="chains" value="A/B=157-522"/>
</dbReference>
<dbReference type="PDB" id="6LRK">
    <property type="method" value="X-ray"/>
    <property type="resolution" value="2.25 A"/>
    <property type="chains" value="A/B=157-522"/>
</dbReference>
<dbReference type="PDB" id="6LRL">
    <property type="method" value="X-ray"/>
    <property type="resolution" value="2.65 A"/>
    <property type="chains" value="A/B=157-522"/>
</dbReference>
<dbReference type="PDB" id="6MJU">
    <property type="method" value="X-ray"/>
    <property type="resolution" value="2.45 A"/>
    <property type="chains" value="A=152-522"/>
</dbReference>
<dbReference type="PDB" id="6MJW">
    <property type="method" value="X-ray"/>
    <property type="resolution" value="2.40 A"/>
    <property type="chains" value="A=152-522"/>
</dbReference>
<dbReference type="PDB" id="6MJX">
    <property type="method" value="X-ray"/>
    <property type="resolution" value="2.60 A"/>
    <property type="chains" value="A=152-522"/>
</dbReference>
<dbReference type="PDB" id="6NAO">
    <property type="method" value="X-ray"/>
    <property type="resolution" value="3.23 A"/>
    <property type="chains" value="A/B=161-522"/>
</dbReference>
<dbReference type="PDB" id="6NFG">
    <property type="method" value="X-ray"/>
    <property type="resolution" value="2.76 A"/>
    <property type="chains" value="A/B=161-522"/>
</dbReference>
<dbReference type="PDB" id="6NFO">
    <property type="method" value="X-ray"/>
    <property type="resolution" value="2.93 A"/>
    <property type="chains" value="A/B=161-522"/>
</dbReference>
<dbReference type="PDB" id="6O47">
    <property type="method" value="X-ray"/>
    <property type="resolution" value="2.20 A"/>
    <property type="chains" value="A=152-522"/>
</dbReference>
<dbReference type="PDB" id="6Y5D">
    <property type="method" value="EM"/>
    <property type="resolution" value="4.10 A"/>
    <property type="chains" value="K/L=161-522"/>
</dbReference>
<dbReference type="PDB" id="6Y5E">
    <property type="method" value="EM"/>
    <property type="resolution" value="3.15 A"/>
    <property type="chains" value="K=161-522"/>
</dbReference>
<dbReference type="PDB" id="7C0M">
    <property type="method" value="EM"/>
    <property type="resolution" value="3.90 A"/>
    <property type="chains" value="K/k=151-522"/>
</dbReference>
<dbReference type="PDB" id="7CCQ">
    <property type="method" value="EM"/>
    <property type="resolution" value="3.80 A"/>
    <property type="chains" value="K=157-522"/>
</dbReference>
<dbReference type="PDB" id="7CCR">
    <property type="method" value="EM"/>
    <property type="resolution" value="4.90 A"/>
    <property type="chains" value="K/V=157-522"/>
</dbReference>
<dbReference type="PDB" id="7FTF">
    <property type="method" value="X-ray"/>
    <property type="resolution" value="1.51 A"/>
    <property type="chains" value="A=161-522"/>
</dbReference>
<dbReference type="PDB" id="7FTG">
    <property type="method" value="X-ray"/>
    <property type="resolution" value="1.73 A"/>
    <property type="chains" value="A/B=161-522"/>
</dbReference>
<dbReference type="PDB" id="7FTH">
    <property type="method" value="X-ray"/>
    <property type="resolution" value="2.55 A"/>
    <property type="chains" value="A=161-522"/>
</dbReference>
<dbReference type="PDB" id="7FTI">
    <property type="method" value="X-ray"/>
    <property type="resolution" value="2.00 A"/>
    <property type="chains" value="A=161-522"/>
</dbReference>
<dbReference type="PDB" id="7FTJ">
    <property type="method" value="X-ray"/>
    <property type="resolution" value="1.46 A"/>
    <property type="chains" value="A=161-522"/>
</dbReference>
<dbReference type="PDB" id="7FTK">
    <property type="method" value="X-ray"/>
    <property type="resolution" value="2.12 A"/>
    <property type="chains" value="A/B=161-522"/>
</dbReference>
<dbReference type="PDB" id="7FTL">
    <property type="method" value="X-ray"/>
    <property type="resolution" value="2.20 A"/>
    <property type="chains" value="A=161-522"/>
</dbReference>
<dbReference type="PDB" id="7FTM">
    <property type="method" value="X-ray"/>
    <property type="resolution" value="1.70 A"/>
    <property type="chains" value="A=161-522"/>
</dbReference>
<dbReference type="PDB" id="7FTN">
    <property type="method" value="X-ray"/>
    <property type="resolution" value="2.00 A"/>
    <property type="chains" value="A=161-522"/>
</dbReference>
<dbReference type="PDB" id="7FTO">
    <property type="method" value="X-ray"/>
    <property type="resolution" value="2.40 A"/>
    <property type="chains" value="A=161-522"/>
</dbReference>
<dbReference type="PDB" id="7FTP">
    <property type="method" value="X-ray"/>
    <property type="resolution" value="2.48 A"/>
    <property type="chains" value="A=161-522"/>
</dbReference>
<dbReference type="PDB" id="7FTQ">
    <property type="method" value="X-ray"/>
    <property type="resolution" value="2.08 A"/>
    <property type="chains" value="A=161-522"/>
</dbReference>
<dbReference type="PDB" id="7FTR">
    <property type="method" value="X-ray"/>
    <property type="resolution" value="1.64 A"/>
    <property type="chains" value="A=161-522"/>
</dbReference>
<dbReference type="PDB" id="7FTS">
    <property type="method" value="X-ray"/>
    <property type="resolution" value="2.21 A"/>
    <property type="chains" value="A=161-522"/>
</dbReference>
<dbReference type="PDB" id="7FTT">
    <property type="method" value="X-ray"/>
    <property type="resolution" value="2.23 A"/>
    <property type="chains" value="A/B=161-522"/>
</dbReference>
<dbReference type="PDB" id="7FTU">
    <property type="method" value="X-ray"/>
    <property type="resolution" value="1.65 A"/>
    <property type="chains" value="A=161-522"/>
</dbReference>
<dbReference type="PDB" id="7FTV">
    <property type="method" value="X-ray"/>
    <property type="resolution" value="1.88 A"/>
    <property type="chains" value="A=161-522"/>
</dbReference>
<dbReference type="PDB" id="7FTW">
    <property type="method" value="X-ray"/>
    <property type="resolution" value="2.21 A"/>
    <property type="chains" value="A=161-522"/>
</dbReference>
<dbReference type="PDB" id="7FTX">
    <property type="method" value="X-ray"/>
    <property type="resolution" value="2.83 A"/>
    <property type="chains" value="A=161-522"/>
</dbReference>
<dbReference type="PDB" id="7FTY">
    <property type="method" value="X-ray"/>
    <property type="resolution" value="2.30 A"/>
    <property type="chains" value="A=161-522"/>
</dbReference>
<dbReference type="PDB" id="7FTZ">
    <property type="method" value="X-ray"/>
    <property type="resolution" value="2.50 A"/>
    <property type="chains" value="A/B=161-522"/>
</dbReference>
<dbReference type="PDB" id="7FU0">
    <property type="method" value="X-ray"/>
    <property type="resolution" value="1.97 A"/>
    <property type="chains" value="A=161-522"/>
</dbReference>
<dbReference type="PDB" id="7FU1">
    <property type="method" value="X-ray"/>
    <property type="resolution" value="2.07 A"/>
    <property type="chains" value="A=161-522"/>
</dbReference>
<dbReference type="PDB" id="7FU2">
    <property type="method" value="X-ray"/>
    <property type="resolution" value="2.30 A"/>
    <property type="chains" value="A=161-522"/>
</dbReference>
<dbReference type="PDB" id="7FU3">
    <property type="method" value="X-ray"/>
    <property type="resolution" value="1.82 A"/>
    <property type="chains" value="A=161-522"/>
</dbReference>
<dbReference type="PDB" id="7FU4">
    <property type="method" value="X-ray"/>
    <property type="resolution" value="1.93 A"/>
    <property type="chains" value="A=161-522"/>
</dbReference>
<dbReference type="PDB" id="7FU5">
    <property type="method" value="X-ray"/>
    <property type="resolution" value="2.18 A"/>
    <property type="chains" value="A/B=161-522"/>
</dbReference>
<dbReference type="PDB" id="7FU6">
    <property type="method" value="X-ray"/>
    <property type="resolution" value="2.37 A"/>
    <property type="chains" value="A=161-522"/>
</dbReference>
<dbReference type="PDB" id="7FU7">
    <property type="method" value="X-ray"/>
    <property type="resolution" value="2.24 A"/>
    <property type="chains" value="A=161-522"/>
</dbReference>
<dbReference type="PDB" id="7FU8">
    <property type="method" value="X-ray"/>
    <property type="resolution" value="1.72 A"/>
    <property type="chains" value="A=161-522"/>
</dbReference>
<dbReference type="PDB" id="7FU9">
    <property type="method" value="X-ray"/>
    <property type="resolution" value="1.67 A"/>
    <property type="chains" value="A=161-522"/>
</dbReference>
<dbReference type="PDB" id="7FUA">
    <property type="method" value="X-ray"/>
    <property type="resolution" value="1.44 A"/>
    <property type="chains" value="A=161-522"/>
</dbReference>
<dbReference type="PDB" id="7FUB">
    <property type="method" value="X-ray"/>
    <property type="resolution" value="1.98 A"/>
    <property type="chains" value="A=161-522"/>
</dbReference>
<dbReference type="PDB" id="7FUC">
    <property type="method" value="X-ray"/>
    <property type="resolution" value="2.52 A"/>
    <property type="chains" value="A=161-522"/>
</dbReference>
<dbReference type="PDB" id="7FUD">
    <property type="method" value="X-ray"/>
    <property type="resolution" value="2.03 A"/>
    <property type="chains" value="A/B=161-522"/>
</dbReference>
<dbReference type="PDB" id="7FUE">
    <property type="method" value="X-ray"/>
    <property type="resolution" value="2.17 A"/>
    <property type="chains" value="A=161-522"/>
</dbReference>
<dbReference type="PDB" id="7FUF">
    <property type="method" value="X-ray"/>
    <property type="resolution" value="1.92 A"/>
    <property type="chains" value="A=161-522"/>
</dbReference>
<dbReference type="PDB" id="7FUG">
    <property type="method" value="X-ray"/>
    <property type="resolution" value="2.11 A"/>
    <property type="chains" value="A/B=161-522"/>
</dbReference>
<dbReference type="PDB" id="7FUH">
    <property type="method" value="X-ray"/>
    <property type="resolution" value="1.94 A"/>
    <property type="chains" value="A=161-522"/>
</dbReference>
<dbReference type="PDB" id="7FUI">
    <property type="method" value="X-ray"/>
    <property type="resolution" value="1.74 A"/>
    <property type="chains" value="A=161-522"/>
</dbReference>
<dbReference type="PDB" id="7FUJ">
    <property type="method" value="X-ray"/>
    <property type="resolution" value="1.79 A"/>
    <property type="chains" value="A=161-522"/>
</dbReference>
<dbReference type="PDB" id="7FUK">
    <property type="method" value="X-ray"/>
    <property type="resolution" value="1.61 A"/>
    <property type="chains" value="A=161-522"/>
</dbReference>
<dbReference type="PDB" id="7FUL">
    <property type="method" value="X-ray"/>
    <property type="resolution" value="2.30 A"/>
    <property type="chains" value="A=161-522"/>
</dbReference>
<dbReference type="PDB" id="7FUM">
    <property type="method" value="X-ray"/>
    <property type="resolution" value="2.06 A"/>
    <property type="chains" value="A=161-522"/>
</dbReference>
<dbReference type="PDB" id="7FUN">
    <property type="method" value="X-ray"/>
    <property type="resolution" value="2.07 A"/>
    <property type="chains" value="A=161-522"/>
</dbReference>
<dbReference type="PDB" id="7FUO">
    <property type="method" value="X-ray"/>
    <property type="resolution" value="1.81 A"/>
    <property type="chains" value="A=161-522"/>
</dbReference>
<dbReference type="PDB" id="7FUP">
    <property type="method" value="X-ray"/>
    <property type="resolution" value="2.41 A"/>
    <property type="chains" value="A=161-522"/>
</dbReference>
<dbReference type="PDB" id="7FUQ">
    <property type="method" value="X-ray"/>
    <property type="resolution" value="1.76 A"/>
    <property type="chains" value="A=161-522"/>
</dbReference>
<dbReference type="PDB" id="7FUR">
    <property type="method" value="X-ray"/>
    <property type="resolution" value="1.70 A"/>
    <property type="chains" value="A=161-522"/>
</dbReference>
<dbReference type="PDB" id="8IME">
    <property type="method" value="X-ray"/>
    <property type="resolution" value="2.63 A"/>
    <property type="chains" value="A/B=157-522"/>
</dbReference>
<dbReference type="PDB" id="8IMF">
    <property type="method" value="X-ray"/>
    <property type="resolution" value="2.40 A"/>
    <property type="chains" value="A/B=157-522"/>
</dbReference>
<dbReference type="PDB" id="8IMG">
    <property type="method" value="X-ray"/>
    <property type="resolution" value="1.80 A"/>
    <property type="chains" value="A/B=157-522"/>
</dbReference>
<dbReference type="PDB" id="8OKX">
    <property type="method" value="EM"/>
    <property type="resolution" value="3.51 A"/>
    <property type="chains" value="A=156-522"/>
</dbReference>
<dbReference type="PDB" id="8OL1">
    <property type="method" value="EM"/>
    <property type="resolution" value="3.50 A"/>
    <property type="chains" value="K=161-522"/>
</dbReference>
<dbReference type="PDB" id="8SHZ">
    <property type="method" value="X-ray"/>
    <property type="resolution" value="2.40 A"/>
    <property type="chains" value="A=157-522"/>
</dbReference>
<dbReference type="PDB" id="8SI0">
    <property type="method" value="X-ray"/>
    <property type="resolution" value="2.70 A"/>
    <property type="chains" value="A=157-522"/>
</dbReference>
<dbReference type="PDB" id="8SJ8">
    <property type="method" value="X-ray"/>
    <property type="resolution" value="2.50 A"/>
    <property type="chains" value="A=157-522"/>
</dbReference>
<dbReference type="PDB" id="8WR8">
    <property type="method" value="X-ray"/>
    <property type="resolution" value="3.10 A"/>
    <property type="chains" value="A/B=161-522"/>
</dbReference>
<dbReference type="PDB" id="9C3G">
    <property type="method" value="X-ray"/>
    <property type="resolution" value="2.75 A"/>
    <property type="chains" value="A=152-522"/>
</dbReference>
<dbReference type="PDB" id="9ELX">
    <property type="method" value="X-ray"/>
    <property type="resolution" value="1.53 A"/>
    <property type="chains" value="A=157-522"/>
</dbReference>
<dbReference type="PDB" id="9MDC">
    <property type="method" value="X-ray"/>
    <property type="resolution" value="1.25 A"/>
    <property type="chains" value="A=157-522"/>
</dbReference>
<dbReference type="PDB" id="9MDD">
    <property type="method" value="X-ray"/>
    <property type="resolution" value="1.60 A"/>
    <property type="chains" value="A=157-522"/>
</dbReference>
<dbReference type="PDBsum" id="4KM5"/>
<dbReference type="PDBsum" id="4LEV"/>
<dbReference type="PDBsum" id="4LEW"/>
<dbReference type="PDBsum" id="4MKP"/>
<dbReference type="PDBsum" id="4O67"/>
<dbReference type="PDBsum" id="4O68"/>
<dbReference type="PDBsum" id="4O69"/>
<dbReference type="PDBsum" id="5V8O"/>
<dbReference type="PDBsum" id="5VDO"/>
<dbReference type="PDBsum" id="5VDP"/>
<dbReference type="PDBsum" id="5VDQ"/>
<dbReference type="PDBsum" id="5VDR"/>
<dbReference type="PDBsum" id="5VDS"/>
<dbReference type="PDBsum" id="5VDT"/>
<dbReference type="PDBsum" id="5VDU"/>
<dbReference type="PDBsum" id="5VDV"/>
<dbReference type="PDBsum" id="5VDW"/>
<dbReference type="PDBsum" id="6CT9"/>
<dbReference type="PDBsum" id="6CTA"/>
<dbReference type="PDBsum" id="6EDB"/>
<dbReference type="PDBsum" id="6EDC"/>
<dbReference type="PDBsum" id="6LRC"/>
<dbReference type="PDBsum" id="6LRE"/>
<dbReference type="PDBsum" id="6LRI"/>
<dbReference type="PDBsum" id="6LRJ"/>
<dbReference type="PDBsum" id="6LRK"/>
<dbReference type="PDBsum" id="6LRL"/>
<dbReference type="PDBsum" id="6MJU"/>
<dbReference type="PDBsum" id="6MJW"/>
<dbReference type="PDBsum" id="6MJX"/>
<dbReference type="PDBsum" id="6NAO"/>
<dbReference type="PDBsum" id="6NFG"/>
<dbReference type="PDBsum" id="6NFO"/>
<dbReference type="PDBsum" id="6O47"/>
<dbReference type="PDBsum" id="6Y5D"/>
<dbReference type="PDBsum" id="6Y5E"/>
<dbReference type="PDBsum" id="7C0M"/>
<dbReference type="PDBsum" id="7CCQ"/>
<dbReference type="PDBsum" id="7CCR"/>
<dbReference type="PDBsum" id="7FTF"/>
<dbReference type="PDBsum" id="7FTG"/>
<dbReference type="PDBsum" id="7FTH"/>
<dbReference type="PDBsum" id="7FTI"/>
<dbReference type="PDBsum" id="7FTJ"/>
<dbReference type="PDBsum" id="7FTK"/>
<dbReference type="PDBsum" id="7FTL"/>
<dbReference type="PDBsum" id="7FTM"/>
<dbReference type="PDBsum" id="7FTN"/>
<dbReference type="PDBsum" id="7FTO"/>
<dbReference type="PDBsum" id="7FTP"/>
<dbReference type="PDBsum" id="7FTQ"/>
<dbReference type="PDBsum" id="7FTR"/>
<dbReference type="PDBsum" id="7FTS"/>
<dbReference type="PDBsum" id="7FTT"/>
<dbReference type="PDBsum" id="7FTU"/>
<dbReference type="PDBsum" id="7FTV"/>
<dbReference type="PDBsum" id="7FTW"/>
<dbReference type="PDBsum" id="7FTX"/>
<dbReference type="PDBsum" id="7FTY"/>
<dbReference type="PDBsum" id="7FTZ"/>
<dbReference type="PDBsum" id="7FU0"/>
<dbReference type="PDBsum" id="7FU1"/>
<dbReference type="PDBsum" id="7FU2"/>
<dbReference type="PDBsum" id="7FU3"/>
<dbReference type="PDBsum" id="7FU4"/>
<dbReference type="PDBsum" id="7FU5"/>
<dbReference type="PDBsum" id="7FU6"/>
<dbReference type="PDBsum" id="7FU7"/>
<dbReference type="PDBsum" id="7FU8"/>
<dbReference type="PDBsum" id="7FU9"/>
<dbReference type="PDBsum" id="7FUA"/>
<dbReference type="PDBsum" id="7FUB"/>
<dbReference type="PDBsum" id="7FUC"/>
<dbReference type="PDBsum" id="7FUD"/>
<dbReference type="PDBsum" id="7FUE"/>
<dbReference type="PDBsum" id="7FUF"/>
<dbReference type="PDBsum" id="7FUG"/>
<dbReference type="PDBsum" id="7FUH"/>
<dbReference type="PDBsum" id="7FUI"/>
<dbReference type="PDBsum" id="7FUJ"/>
<dbReference type="PDBsum" id="7FUK"/>
<dbReference type="PDBsum" id="7FUL"/>
<dbReference type="PDBsum" id="7FUM"/>
<dbReference type="PDBsum" id="7FUN"/>
<dbReference type="PDBsum" id="7FUO"/>
<dbReference type="PDBsum" id="7FUP"/>
<dbReference type="PDBsum" id="7FUQ"/>
<dbReference type="PDBsum" id="7FUR"/>
<dbReference type="PDBsum" id="8IME"/>
<dbReference type="PDBsum" id="8IMF"/>
<dbReference type="PDBsum" id="8IMG"/>
<dbReference type="PDBsum" id="8OKX"/>
<dbReference type="PDBsum" id="8OL1"/>
<dbReference type="PDBsum" id="8SHZ"/>
<dbReference type="PDBsum" id="8SI0"/>
<dbReference type="PDBsum" id="8SJ8"/>
<dbReference type="PDBsum" id="8WR8"/>
<dbReference type="PDBsum" id="9C3G"/>
<dbReference type="PDBsum" id="9ELX"/>
<dbReference type="PDBsum" id="9MDC"/>
<dbReference type="PDBsum" id="9MDD"/>
<dbReference type="EMDB" id="EMD-10694"/>
<dbReference type="EMDB" id="EMD-10695"/>
<dbReference type="EMDB" id="EMD-11005"/>
<dbReference type="EMDB" id="EMD-16933"/>
<dbReference type="EMDB" id="EMD-16936"/>
<dbReference type="EMDB" id="EMD-30267"/>
<dbReference type="EMDB" id="EMD-30339"/>
<dbReference type="EMDB" id="EMD-30340"/>
<dbReference type="SASBDB" id="Q8N884"/>
<dbReference type="SMR" id="Q8N884"/>
<dbReference type="BioGRID" id="125408">
    <property type="interactions" value="348"/>
</dbReference>
<dbReference type="FunCoup" id="Q8N884">
    <property type="interactions" value="1640"/>
</dbReference>
<dbReference type="IntAct" id="Q8N884">
    <property type="interactions" value="13"/>
</dbReference>
<dbReference type="MINT" id="Q8N884"/>
<dbReference type="STRING" id="9606.ENSP00000359339"/>
<dbReference type="BindingDB" id="Q8N884"/>
<dbReference type="ChEMBL" id="CHEMBL4105728"/>
<dbReference type="GuidetoPHARMACOLOGY" id="3165"/>
<dbReference type="iPTMnet" id="Q8N884"/>
<dbReference type="PhosphoSitePlus" id="Q8N884"/>
<dbReference type="SwissPalm" id="Q8N884"/>
<dbReference type="BioMuta" id="MB21D1"/>
<dbReference type="DMDM" id="68565218"/>
<dbReference type="jPOST" id="Q8N884"/>
<dbReference type="MassIVE" id="Q8N884"/>
<dbReference type="PaxDb" id="9606-ENSP00000359339"/>
<dbReference type="PeptideAtlas" id="Q8N884"/>
<dbReference type="ProteomicsDB" id="72382">
    <molecule id="Q8N884-1"/>
</dbReference>
<dbReference type="ProteomicsDB" id="72383">
    <molecule id="Q8N884-2"/>
</dbReference>
<dbReference type="Pumba" id="Q8N884"/>
<dbReference type="Antibodypedia" id="31341">
    <property type="antibodies" value="240 antibodies from 33 providers"/>
</dbReference>
<dbReference type="CPTC" id="Q8N884">
    <property type="antibodies" value="1 antibody"/>
</dbReference>
<dbReference type="DNASU" id="115004"/>
<dbReference type="Ensembl" id="ENST00000370315.4">
    <molecule id="Q8N884-1"/>
    <property type="protein sequence ID" value="ENSP00000359339.3"/>
    <property type="gene ID" value="ENSG00000164430.17"/>
</dbReference>
<dbReference type="Ensembl" id="ENST00000370318.5">
    <molecule id="Q8N884-2"/>
    <property type="protein sequence ID" value="ENSP00000359342.1"/>
    <property type="gene ID" value="ENSG00000164430.17"/>
</dbReference>
<dbReference type="GeneID" id="115004"/>
<dbReference type="KEGG" id="hsa:115004"/>
<dbReference type="MANE-Select" id="ENST00000370315.4">
    <property type="protein sequence ID" value="ENSP00000359339.3"/>
    <property type="RefSeq nucleotide sequence ID" value="NM_138441.3"/>
    <property type="RefSeq protein sequence ID" value="NP_612450.2"/>
</dbReference>
<dbReference type="UCSC" id="uc003pgx.2">
    <molecule id="Q8N884-1"/>
    <property type="organism name" value="human"/>
</dbReference>
<dbReference type="AGR" id="HGNC:21367"/>
<dbReference type="CTD" id="115004"/>
<dbReference type="DisGeNET" id="115004"/>
<dbReference type="GeneCards" id="CGAS"/>
<dbReference type="HGNC" id="HGNC:21367">
    <property type="gene designation" value="CGAS"/>
</dbReference>
<dbReference type="HPA" id="ENSG00000164430">
    <property type="expression patterns" value="Tissue enhanced (bone)"/>
</dbReference>
<dbReference type="MIM" id="613973">
    <property type="type" value="gene"/>
</dbReference>
<dbReference type="neXtProt" id="NX_Q8N884"/>
<dbReference type="OpenTargets" id="ENSG00000164430"/>
<dbReference type="PharmGKB" id="PA134956015"/>
<dbReference type="VEuPathDB" id="HostDB:ENSG00000164430"/>
<dbReference type="eggNOG" id="KOG3963">
    <property type="taxonomic scope" value="Eukaryota"/>
</dbReference>
<dbReference type="GeneTree" id="ENSGT01050000244827"/>
<dbReference type="HOGENOM" id="CLU_040428_2_0_1"/>
<dbReference type="InParanoid" id="Q8N884"/>
<dbReference type="OMA" id="EKTCCER"/>
<dbReference type="OrthoDB" id="6054650at2759"/>
<dbReference type="PAN-GO" id="Q8N884">
    <property type="GO annotations" value="13 GO annotations based on evolutionary models"/>
</dbReference>
<dbReference type="PhylomeDB" id="Q8N884"/>
<dbReference type="TreeFam" id="TF331255"/>
<dbReference type="BioCyc" id="MetaCyc:ENSG00000164430-MONOMER"/>
<dbReference type="BRENDA" id="2.7.7.86">
    <property type="organism ID" value="2681"/>
</dbReference>
<dbReference type="PathwayCommons" id="Q8N884"/>
<dbReference type="Reactome" id="R-HSA-1834941">
    <property type="pathway name" value="STING mediated induction of host immune responses"/>
</dbReference>
<dbReference type="SignaLink" id="Q8N884"/>
<dbReference type="SIGNOR" id="Q8N884"/>
<dbReference type="BioGRID-ORCS" id="115004">
    <property type="hits" value="11 hits in 1144 CRISPR screens"/>
</dbReference>
<dbReference type="CD-CODE" id="1A0B17A6">
    <property type="entry name" value="cGAS foci"/>
</dbReference>
<dbReference type="CD-CODE" id="C34F94B5">
    <property type="entry name" value="Synthetic Condensate 000199"/>
</dbReference>
<dbReference type="CD-CODE" id="DEE660B4">
    <property type="entry name" value="Stress granule"/>
</dbReference>
<dbReference type="ChiTaRS" id="MB21D1">
    <property type="organism name" value="human"/>
</dbReference>
<dbReference type="EvolutionaryTrace" id="Q8N884"/>
<dbReference type="GenomeRNAi" id="115004"/>
<dbReference type="Pharos" id="Q8N884">
    <property type="development level" value="Tchem"/>
</dbReference>
<dbReference type="PRO" id="PR:Q8N884"/>
<dbReference type="Proteomes" id="UP000005640">
    <property type="component" value="Chromosome 6"/>
</dbReference>
<dbReference type="RNAct" id="Q8N884">
    <property type="molecule type" value="protein"/>
</dbReference>
<dbReference type="Bgee" id="ENSG00000164430">
    <property type="expression patterns" value="Expressed in pancreatic ductal cell and 173 other cell types or tissues"/>
</dbReference>
<dbReference type="GO" id="GO:0005737">
    <property type="term" value="C:cytoplasm"/>
    <property type="evidence" value="ECO:0000314"/>
    <property type="project" value="UniProt"/>
</dbReference>
<dbReference type="GO" id="GO:0005829">
    <property type="term" value="C:cytosol"/>
    <property type="evidence" value="ECO:0000314"/>
    <property type="project" value="HPA"/>
</dbReference>
<dbReference type="GO" id="GO:0016604">
    <property type="term" value="C:nuclear body"/>
    <property type="evidence" value="ECO:0000314"/>
    <property type="project" value="HPA"/>
</dbReference>
<dbReference type="GO" id="GO:0005654">
    <property type="term" value="C:nucleoplasm"/>
    <property type="evidence" value="ECO:0000314"/>
    <property type="project" value="HPA"/>
</dbReference>
<dbReference type="GO" id="GO:0005634">
    <property type="term" value="C:nucleus"/>
    <property type="evidence" value="ECO:0000314"/>
    <property type="project" value="UniProtKB"/>
</dbReference>
<dbReference type="GO" id="GO:0005886">
    <property type="term" value="C:plasma membrane"/>
    <property type="evidence" value="ECO:0000314"/>
    <property type="project" value="UniProtKB"/>
</dbReference>
<dbReference type="GO" id="GO:0035861">
    <property type="term" value="C:site of double-strand break"/>
    <property type="evidence" value="ECO:0000314"/>
    <property type="project" value="UniProtKB"/>
</dbReference>
<dbReference type="GO" id="GO:0061501">
    <property type="term" value="F:2',3'-cyclic GMP-AMP synthase activity"/>
    <property type="evidence" value="ECO:0000314"/>
    <property type="project" value="UniProtKB"/>
</dbReference>
<dbReference type="GO" id="GO:0005524">
    <property type="term" value="F:ATP binding"/>
    <property type="evidence" value="ECO:0007669"/>
    <property type="project" value="UniProtKB-KW"/>
</dbReference>
<dbReference type="GO" id="GO:0003682">
    <property type="term" value="F:chromatin binding"/>
    <property type="evidence" value="ECO:0000314"/>
    <property type="project" value="UniProtKB"/>
</dbReference>
<dbReference type="GO" id="GO:0003677">
    <property type="term" value="F:DNA binding"/>
    <property type="evidence" value="ECO:0000314"/>
    <property type="project" value="UniProtKB"/>
</dbReference>
<dbReference type="GO" id="GO:0003690">
    <property type="term" value="F:double-stranded DNA binding"/>
    <property type="evidence" value="ECO:0000314"/>
    <property type="project" value="UniProtKB"/>
</dbReference>
<dbReference type="GO" id="GO:0005525">
    <property type="term" value="F:GTP binding"/>
    <property type="evidence" value="ECO:0007669"/>
    <property type="project" value="UniProtKB-KW"/>
</dbReference>
<dbReference type="GO" id="GO:0046872">
    <property type="term" value="F:metal ion binding"/>
    <property type="evidence" value="ECO:0007669"/>
    <property type="project" value="UniProtKB-KW"/>
</dbReference>
<dbReference type="GO" id="GO:0140693">
    <property type="term" value="F:molecular condensate scaffold activity"/>
    <property type="evidence" value="ECO:0000314"/>
    <property type="project" value="UniProtKB"/>
</dbReference>
<dbReference type="GO" id="GO:0031491">
    <property type="term" value="F:nucleosome binding"/>
    <property type="evidence" value="ECO:0000314"/>
    <property type="project" value="UniProtKB"/>
</dbReference>
<dbReference type="GO" id="GO:0005546">
    <property type="term" value="F:phosphatidylinositol-4,5-bisphosphate binding"/>
    <property type="evidence" value="ECO:0000314"/>
    <property type="project" value="UniProtKB"/>
</dbReference>
<dbReference type="GO" id="GO:0160004">
    <property type="term" value="F:poly-ADP-D-ribose modification-dependent protein binding"/>
    <property type="evidence" value="ECO:0000250"/>
    <property type="project" value="UniProtKB"/>
</dbReference>
<dbReference type="GO" id="GO:0042803">
    <property type="term" value="F:protein homodimerization activity"/>
    <property type="evidence" value="ECO:0000314"/>
    <property type="project" value="UniProtKB"/>
</dbReference>
<dbReference type="GO" id="GO:0002218">
    <property type="term" value="P:activation of innate immune response"/>
    <property type="evidence" value="ECO:0000314"/>
    <property type="project" value="UniProtKB"/>
</dbReference>
<dbReference type="GO" id="GO:0019933">
    <property type="term" value="P:cAMP-mediated signaling"/>
    <property type="evidence" value="ECO:0000314"/>
    <property type="project" value="UniProtKB"/>
</dbReference>
<dbReference type="GO" id="GO:0071360">
    <property type="term" value="P:cellular response to exogenous dsRNA"/>
    <property type="evidence" value="ECO:0000318"/>
    <property type="project" value="GO_Central"/>
</dbReference>
<dbReference type="GO" id="GO:0140896">
    <property type="term" value="P:cGAS/STING signaling pathway"/>
    <property type="evidence" value="ECO:0000314"/>
    <property type="project" value="UniProtKB"/>
</dbReference>
<dbReference type="GO" id="GO:0019934">
    <property type="term" value="P:cGMP-mediated signaling"/>
    <property type="evidence" value="ECO:0000314"/>
    <property type="project" value="UniProtKB"/>
</dbReference>
<dbReference type="GO" id="GO:0002753">
    <property type="term" value="P:cytoplasmic pattern recognition receptor signaling pathway"/>
    <property type="evidence" value="ECO:0000314"/>
    <property type="project" value="UniProt"/>
</dbReference>
<dbReference type="GO" id="GO:0051607">
    <property type="term" value="P:defense response to virus"/>
    <property type="evidence" value="ECO:0000314"/>
    <property type="project" value="UniProtKB"/>
</dbReference>
<dbReference type="GO" id="GO:0008340">
    <property type="term" value="P:determination of adult lifespan"/>
    <property type="evidence" value="ECO:0007669"/>
    <property type="project" value="Ensembl"/>
</dbReference>
<dbReference type="GO" id="GO:0006974">
    <property type="term" value="P:DNA damage response"/>
    <property type="evidence" value="ECO:0000314"/>
    <property type="project" value="UniProtKB"/>
</dbReference>
<dbReference type="GO" id="GO:0006281">
    <property type="term" value="P:DNA repair"/>
    <property type="evidence" value="ECO:0007669"/>
    <property type="project" value="UniProtKB-KW"/>
</dbReference>
<dbReference type="GO" id="GO:0045087">
    <property type="term" value="P:innate immune response"/>
    <property type="evidence" value="ECO:0000304"/>
    <property type="project" value="FlyBase"/>
</dbReference>
<dbReference type="GO" id="GO:0160049">
    <property type="term" value="P:negative regulation of cGAS/STING signaling pathway"/>
    <property type="evidence" value="ECO:0000314"/>
    <property type="project" value="UniProt"/>
</dbReference>
<dbReference type="GO" id="GO:2000042">
    <property type="term" value="P:negative regulation of double-strand break repair via homologous recombination"/>
    <property type="evidence" value="ECO:0000314"/>
    <property type="project" value="UniProtKB"/>
</dbReference>
<dbReference type="GO" id="GO:0038001">
    <property type="term" value="P:paracrine signaling"/>
    <property type="evidence" value="ECO:0000314"/>
    <property type="project" value="UniProtKB"/>
</dbReference>
<dbReference type="GO" id="GO:0002221">
    <property type="term" value="P:pattern recognition receptor signaling pathway"/>
    <property type="evidence" value="ECO:0000314"/>
    <property type="project" value="UniProt"/>
</dbReference>
<dbReference type="GO" id="GO:2000774">
    <property type="term" value="P:positive regulation of cellular senescence"/>
    <property type="evidence" value="ECO:0000250"/>
    <property type="project" value="UniProtKB"/>
</dbReference>
<dbReference type="GO" id="GO:0002230">
    <property type="term" value="P:positive regulation of defense response to virus by host"/>
    <property type="evidence" value="ECO:0000314"/>
    <property type="project" value="UniProtKB"/>
</dbReference>
<dbReference type="GO" id="GO:0032481">
    <property type="term" value="P:positive regulation of type I interferon production"/>
    <property type="evidence" value="ECO:0000314"/>
    <property type="project" value="UniProtKB"/>
</dbReference>
<dbReference type="GO" id="GO:0002637">
    <property type="term" value="P:regulation of immunoglobulin production"/>
    <property type="evidence" value="ECO:0007669"/>
    <property type="project" value="Ensembl"/>
</dbReference>
<dbReference type="GO" id="GO:0050863">
    <property type="term" value="P:regulation of T cell activation"/>
    <property type="evidence" value="ECO:0007669"/>
    <property type="project" value="Ensembl"/>
</dbReference>
<dbReference type="DisProt" id="DP02876"/>
<dbReference type="FunFam" id="1.10.1410.40:FF:000007">
    <property type="entry name" value="Cyclic GMP-AMP synthase"/>
    <property type="match status" value="1"/>
</dbReference>
<dbReference type="FunFam" id="3.30.460.90:FF:000005">
    <property type="entry name" value="Cyclic GMP-AMP synthase"/>
    <property type="match status" value="1"/>
</dbReference>
<dbReference type="Gene3D" id="1.10.1410.40">
    <property type="match status" value="1"/>
</dbReference>
<dbReference type="Gene3D" id="3.30.460.90">
    <property type="match status" value="1"/>
</dbReference>
<dbReference type="InterPro" id="IPR046903">
    <property type="entry name" value="Mab-21-like_nuc_Trfase"/>
</dbReference>
<dbReference type="InterPro" id="IPR046906">
    <property type="entry name" value="Mab-21_HhH/H2TH-like"/>
</dbReference>
<dbReference type="InterPro" id="IPR024810">
    <property type="entry name" value="MAB21L/cGLR"/>
</dbReference>
<dbReference type="PANTHER" id="PTHR10656">
    <property type="entry name" value="CELL FATE DETERMINING PROTEIN MAB21-RELATED"/>
    <property type="match status" value="1"/>
</dbReference>
<dbReference type="PANTHER" id="PTHR10656:SF35">
    <property type="entry name" value="CYCLIC GMP-AMP SYNTHASE"/>
    <property type="match status" value="1"/>
</dbReference>
<dbReference type="Pfam" id="PF03281">
    <property type="entry name" value="Mab-21"/>
    <property type="match status" value="1"/>
</dbReference>
<dbReference type="Pfam" id="PF20266">
    <property type="entry name" value="Mab-21_C"/>
    <property type="match status" value="1"/>
</dbReference>
<dbReference type="SMART" id="SM01265">
    <property type="entry name" value="Mab-21"/>
    <property type="match status" value="1"/>
</dbReference>
<gene>
    <name evidence="93 99" type="primary">CGAS</name>
    <name evidence="99" type="synonym">C6orf150</name>
    <name evidence="99" type="synonym">MB21D1</name>
</gene>
<sequence>MQPWHGKAMQRASEAGATAPKASARNARGAPMDPTESPAAPEAALPKAGKFGPARKSGSRQKKSAPDTQERPPVRATGARAKKAPQRAQDTQPSDATSAPGAEGLEPPAAREPALSRAGSCRQRGARCSTKPRPPPGPWDVPSPGLPVSAPILVRRDAAPGASKLRAVLEKLKLSRDDISTAAGMVKGVVDHLLLRLKCDSAFRGVGLLNTGSYYEHVKISAPNEFDVMFKLEVPRIQLEEYSNTRAYYFVKFKRNPKENPLSQFLEGEILSASKMLSKFRKIIKEEINDIKDTDVIMKRKRGGSPAVTLLISEKISVDITLALESKSSWPASTQEGLRIQNWLSAKVRKQLRLKPFYLVPKHAKEGNGFQEETWRLSFSHIEKEILNNHGKSKTCCENKEEKCCRKDCLKLMKYLLEQLKERFKDKKHLDKFSSYHVKTAFFHVCTQNPQDSQWDRKDLGLCFDNCVTYFLQCLRTEKLENYFIPEFNLFSSNLIDKRSKEFLTKQIEYERNNEFPVFDEF</sequence>
<accession>Q8N884</accession>
<accession>L0L2J9</accession>
<accession>Q14CV6</accession>
<accession>Q32NC9</accession>
<accession>Q5SWL0</accession>
<accession>Q5SWL1</accession>
<accession>Q96E45</accession>
<protein>
    <recommendedName>
        <fullName evidence="93">Cyclic GMP-AMP synthase</fullName>
        <shortName evidence="93">cGAMP synthase</shortName>
        <shortName evidence="93">cGAS</shortName>
        <shortName evidence="93">h-cGAS</shortName>
        <ecNumber evidence="6 7 9 16 31 38 44">2.7.7.86</ecNumber>
    </recommendedName>
    <alternativeName>
        <fullName evidence="93">2'3'-cGAMP synthase</fullName>
    </alternativeName>
    <alternativeName>
        <fullName>Mab-21 domain-containing protein 1</fullName>
    </alternativeName>
</protein>
<comment type="function">
    <text evidence="1 5 6 7 8 9 10 11 12 13 15 16 17 18 19 20 25 27 28 29 30 38 39 42 43 44 50 51 53 61 62 63 66 67 68 69 71 72 75 76 77 79 81 83 84 85 86 87 88 89">Nucleotidyltransferase that catalyzes the formation of cyclic GMP-AMP (2',3'-cGAMP) from ATP and GTP and plays a key role in innate immunity (PubMed:21478870, PubMed:23258413, PubMed:23707061, PubMed:23707065, PubMed:23722159, PubMed:24077100, PubMed:24116191, PubMed:24462292, PubMed:25131990, PubMed:26300263, PubMed:29976794, PubMed:30799039, PubMed:31142647, PubMed:32814054, PubMed:33273464, PubMed:33542149, PubMed:37217469, PubMed:37802025). Catalysis involves both the formation of a 2',5' phosphodiester linkage at the GpA step and the formation of a 3',5' phosphodiester linkage at the ApG step, producing c[G(2',5')pA(3',5')p] (PubMed:28214358, PubMed:28363908). Acts as a key DNA sensor: directly binds double-stranded DNA (dsDNA), inducing the formation of liquid-like droplets in which CGAS is activated, leading to synthesis of 2',3'-cGAMP, a second messenger that binds to and activates STING1, thereby triggering type-I interferon production (PubMed:28314590, PubMed:28363908, PubMed:29976794, PubMed:32817552, PubMed:33230297, PubMed:33606975, PubMed:35322803, PubMed:35438208, PubMed:35460603, PubMed:35503863). Preferentially recognizes and binds curved long dsDNAs of a minimal length of 40 bp (PubMed:30007416). Acts as a key foreign DNA sensor, the presence of double-stranded DNA (dsDNA) in the cytoplasm being a danger signal that triggers the immune responses (PubMed:28363908). Has antiviral activity by sensing the presence of dsDNA from DNA viruses in the cytoplasm (PubMed:28363908, PubMed:35613581). Also acts as an innate immune sensor of infection by retroviruses, such as HIV-2, by detecting the presence of reverse-transcribed DNA in the cytosol (PubMed:23929945, PubMed:24269171, PubMed:30270045, PubMed:32852081). In contrast, HIV-1 is poorly sensed by CGAS, due to its capsid that cloaks viral DNA from CGAS detection (PubMed:24269171, PubMed:30270045, PubMed:32852081). Detection of retroviral reverse-transcribed DNA in the cytosol may be indirect and be mediated via interaction with PQBP1, which directly binds reverse-transcribed retroviral DNA (PubMed:26046437). Also detects the presence of DNA from bacteria, such as M.tuberculosis (PubMed:26048138). 2',3'-cGAMP can be transferred from producing cells to neighboring cells through gap junctions, leading to promote STING1 activation and convey immune response to connecting cells (PubMed:24077100). 2',3'-cGAMP can also be transferred between cells by virtue of packaging within viral particles contributing to IFN-induction in newly infected cells in a cGAS-independent but STING1-dependent manner (PubMed:26229115). Also senses the presence of neutrophil extracellular traps (NETs) that are translocated to the cytosol following phagocytosis, leading to synthesis of 2',3'-cGAMP (PubMed:33688080). In addition to foreign DNA, can also be activated by endogenous nuclear or mitochondrial DNA (PubMed:28738408, PubMed:28759889, PubMed:31299200, PubMed:33031745, PubMed:33230297). When self-DNA leaks into the cytosol during cellular stress (such as mitochondrial stress, SARS-CoV-2 infection causing severe COVID-19 disease, DNA damage, mitotic arrest or senescence), or is present in form of cytosolic micronuclei, CGAS is activated leading to a state of sterile inflammation (PubMed:28738408, PubMed:28759889, PubMed:31299200, PubMed:33031745, PubMed:33230297, PubMed:35045565). Acts as a regulator of cellular senescence by binding to cytosolic chromatin fragments that are present in senescent cells, leading to trigger type-I interferon production via STING1 and promote cellular senescence (By similarity). Also involved in the inflammatory response to genome instability and double-stranded DNA breaks: acts by localizing to micronuclei arising from genome instability (PubMed:28738408, PubMed:28759889). Micronuclei, which are frequently found in cancer cells, consist of chromatin surrounded by their own nuclear membrane: following breakdown of the micronuclear envelope, a process associated with chromothripsis, CGAS binds self-DNA exposed to the cytosol, leading to 2',3'-cGAMP synthesis and subsequent activation of STING1 and type-I interferon production (PubMed:28738408, PubMed:28759889). Activated in response to prolonged mitotic arrest, promoting mitotic cell death (PubMed:31299200). In a healthy cell, CGAS is however kept inactive even in cellular events that directly expose it to self-DNA, such as mitosis, when cGAS associates with chromatin directly after nuclear envelope breakdown or remains in the form of postmitotic persistent nuclear cGAS pools bound to chromatin (PubMed:31299200, PubMed:33542149). Nuclear CGAS is inactivated by chromatin via direct interaction with nucleosomes, which block CGAS from DNA binding and thus prevent CGAS-induced autoimmunity (PubMed:31299200, PubMed:32911482, PubMed:32912999, PubMed:33051594, PubMed:33542149). Also acts as a suppressor of DNA repair in response to DNA damage: inhibits homologous recombination repair by interacting with PARP1, the CGAS-PARP1 interaction leading to impede the formation of the PARP1-TIMELESS complex (PubMed:30356214, PubMed:31544964). In addition to DNA, also sense translation stress: in response to translation stress, translocates to the cytosol and associates with collided ribosomes, promoting its activation and triggering type-I interferon production (PubMed:34111399). In contrast to other mammals, human CGAS displays species-specific mechanisms of DNA recognition and produces less 2',3'-cGAMP, allowing a more fine-tuned response to pathogens (PubMed:30007416).</text>
</comment>
<comment type="catalytic activity">
    <reaction evidence="6 7 9 16 31 38 44 50 61 75 89">
        <text>GTP + ATP = 2',3'-cGAMP + 2 diphosphate</text>
        <dbReference type="Rhea" id="RHEA:42064"/>
        <dbReference type="ChEBI" id="CHEBI:30616"/>
        <dbReference type="ChEBI" id="CHEBI:33019"/>
        <dbReference type="ChEBI" id="CHEBI:37565"/>
        <dbReference type="ChEBI" id="CHEBI:143093"/>
        <dbReference type="EC" id="2.7.7.86"/>
    </reaction>
    <physiologicalReaction direction="left-to-right" evidence="6 31 89">
        <dbReference type="Rhea" id="RHEA:42065"/>
    </physiologicalReaction>
</comment>
<comment type="catalytic activity">
    <reaction evidence="6 7 9 16 31 38 44 50 61 75 89">
        <text>GTP + ATP = pppGp(2'-5')A + diphosphate</text>
        <dbReference type="Rhea" id="RHEA:23748"/>
        <dbReference type="ChEBI" id="CHEBI:30616"/>
        <dbReference type="ChEBI" id="CHEBI:33019"/>
        <dbReference type="ChEBI" id="CHEBI:37565"/>
        <dbReference type="ChEBI" id="CHEBI:78318"/>
    </reaction>
    <physiologicalReaction direction="left-to-right" evidence="6 31 89">
        <dbReference type="Rhea" id="RHEA:23749"/>
    </physiologicalReaction>
</comment>
<comment type="catalytic activity">
    <reaction evidence="6 7 9 16 31 38 44 50 61 75 89">
        <text>pppGp(2'-5')A = 2',3'-cGAMP + diphosphate</text>
        <dbReference type="Rhea" id="RHEA:23924"/>
        <dbReference type="ChEBI" id="CHEBI:33019"/>
        <dbReference type="ChEBI" id="CHEBI:78318"/>
        <dbReference type="ChEBI" id="CHEBI:143093"/>
    </reaction>
    <physiologicalReaction direction="left-to-right" evidence="6 31 89">
        <dbReference type="Rhea" id="RHEA:23925"/>
    </physiologicalReaction>
</comment>
<comment type="cofactor">
    <cofactor evidence="39">
        <name>Mg(2+)</name>
        <dbReference type="ChEBI" id="CHEBI:18420"/>
    </cofactor>
    <cofactor evidence="61">
        <name>Mn(2+)</name>
        <dbReference type="ChEBI" id="CHEBI:29035"/>
    </cofactor>
    <text evidence="1 39 61">Binds 1 Mg(2+) ion per subunit (PubMed:30007416). Is also active with Mn(2+) (PubMed:32814054). Mn(2+)-activated enzyme forms an inverted pppGp(2'-5')A intermediate, suggesting a non-canonical but accelerated 2',3'-cGAMP cyclization without substrate flip-over (By similarity). Mn(2+) ions are coordinated by triphosphate moiety of the inverted substrate, independent of the catalytic triad residues (By similarity).</text>
</comment>
<comment type="cofactor">
    <cofactor evidence="38 49 50 57 66 67">
        <name>Zn(2+)</name>
        <dbReference type="ChEBI" id="CHEBI:29105"/>
    </cofactor>
    <text evidence="38">Undergoes a liquid-like phase transition after binding to DNA, which is dependent on zinc.</text>
</comment>
<comment type="activity regulation">
    <text evidence="1 6 7 20 22 26 27 31 34 38 39 44 49 51 57 58 60 62 66 67 69 72 74 75 76 79">The enzyme activity is strongly increased by double-stranded DNA (dsDNA), but not by single-stranded DNA or RNA (PubMed:23258413, PubMed:23707061, PubMed:26300263). DNA-binding induces the formation of liquid-like droplets in which CGAS is activated (PubMed:29976794, PubMed:33606975). Liquid-like droplets also create a selective environment that restricts entry of negative regulators, such as TREX1 or BANF1/BAF, allowing sensing of DNA (PubMed:33606975). A number of mechanisms exist to restrict its activity toward self-DNA (PubMed:31299200, PubMed:32792394, PubMed:32911482, PubMed:32912999, PubMed:33051594, PubMed:33542149). The nucleotidyltransferase activity is inhibited in the nucleus via its association with nucleosomes: interacts with the acidic patch of histones H2A and H2B, thereby blocking DNA-binding and subsequent activation (PubMed:31299200, PubMed:32911482, PubMed:32912999, PubMed:33051594). CGAS is also inactive when associated with mitotic chromatin (PubMed:33542149). Chromatin-bound CGAS cannot be activated by exogenous DNA in mitotic cells: phosphorylation of the N-terminal disordered part by AURKB during the G2-M transition blocks CGAS liquid phase separation and activation (PubMed:33542149). Activity toward self-DNA is inhibited by BANF1/BAF upon acute loss of nuclear membrane integrity: BANF1/BAF acts by outcompeting CGAS for DNA-binding, thereby preventing CGAS activation (PubMed:32792394). DNA-induced activation at micronuclei is also limited by TREX1, which degrades micronuclear DNA upon nuclear envelope rupture, thereby preventing CGAS activation (PubMed:33476576). CGAS can be released from nucleosomes and activated by MRE11 component of the MRN complex, which displaces CGAS from acidic-patch-mediated sequestration (By similarity). Acetylation at Lys-384, Lys-394 and Lys-414 inhibits the cyclic GMP-AMP synthase activity (PubMed:30799039). Inhibited by aspirin (acetylsalicylate) drug, which acetylates CGAS (PubMed:30799039). Acetylation by KAT5 increases the cyclic GMP-AMP synthase activity by promoting DNA-binding and subsequent activation (PubMed:32817552). Phosphorylation at Ser-305 suppresses the nucleotidyltransferase activity (PubMed:26440888). Phosphorylation at Ser-435 promotes the cyclic GMP-AMP synthase activity (PubMed:32474700). Phosphorylation at Thr-68 and Ser-213 inhibits its cyclic GMP-AMP synthase activity (PubMed:33273464). Ubiquitination at Lys-173 and Lys-384 via 'Lys-27'-linked polyubiquitination enhances the cyclic GMP-AMP synthase activity (PubMed:28273161). Monoubiquitination at Lys-347 promotes oligomerization and subsequent activation (PubMed:29426904). Sumoylation at Lys-347, Lys-384 and Lys-394 prevents DNA-binding, oligomerization and nucleotidyltransferase activity (By similarity). The enzyme activity is impaired by the cleavage at Asp-140 and Asp-157 produced by CASP1 (PubMed:28314590). In addition to DNA, also activated by collided ribosomes upon translation stress: specifically binds collided ribosomes, promoting its activation and triggering type-I interferon production (PubMed:34111399). Strongly inhibited by compound PF-06928215, which is specific for human protein (PubMed:28934246, PubMed:30007416, PubMed:32459092). Inhibited by small-molecule inhibitors with a pyridoindole tricyclic core G108, G140 and G150 (PubMed:31113940).</text>
</comment>
<comment type="activity regulation">
    <text evidence="78 80">(Microbial infection) Nucleotidyltransferase activity is inhibited by different herpesvirus tegument proteins (Herpes simplex virus 1 tegument protein VP22, herpes virus 8 protein ORF52 and herpesvirus 3 tegument protein VP22/ORF9) (PubMed:34015248, PubMed:34387695). Viral tegument proteins act by disrupting liquid-like droplets in which CGAS is activated, thereby preventing CGAS activity (PubMed:34015248, PubMed:34387695).</text>
</comment>
<comment type="biophysicochemical properties">
    <kinetics>
        <KM evidence="31">35 uM for ATP (with 1 mM GTP)</KM>
        <KM evidence="31">30 uM for GTP (with 1 mM ATP)</KM>
    </kinetics>
</comment>
<comment type="subunit">
    <text evidence="1 17 24 28 39 41 43 44 50 56 59 64 65 66 67 69 72 83 87">Monomer in the absence of DNA (PubMed:28363908). Homodimer in presence of dsDNA: forms a 2:2 dimer with two enzymes binding to two DNA molecules (PubMed:30007416, PubMed:30799039, PubMed:31142647, PubMed:33273464). Interacts with nucleosomes; interaction is mainly mediated via histones H2A and H2B and inactivates the nucleotidyltransferase activity by blocking DNA-binding and subsequent activation (PubMed:32911480, PubMed:32911481, PubMed:32911482, PubMed:32912999, PubMed:33051594). Interacts with PQBP1 (via WW domain) (PubMed:26046437). Interacts with TRIM14; this interaction recruits USP14, leading to deubiquitinate and stabilize CGAS and promote type I interferon production (PubMed:27666593, PubMed:32404352). Interacts with ZCCHC3; promoting sensing of dsDNA by CGAS (PubMed:30135424). Interacts (when not monomethylated) with (poly-ADP-ribosylated) PARP1; interaction takes place in the nucleus and prevents the formation of the PARP1-TIMELESS complex (PubMed:30356214). Interacts (when monomethylated) with SGF29; interaction with SGF29 prevents interaction with PARP1 (By similarity). Interacts with PCBP2; preventing the formation of liquid-like droplets in which CGAS is activated (PubMed:35322803). Interacts with IRGM; promoting CGAS degradation (PubMed:32715615). Interacts with DDX41 (PubMed:35613581).</text>
</comment>
<comment type="subunit">
    <text evidence="21 78 80">(Microbial infection) Interacts with herpes virus 8/HHV-8 protein ORF52; this interaction inhibits cGAS enzymatic activity by preventing the formation of liquid-like droplets by CGAS.</text>
</comment>
<comment type="subunit">
    <text evidence="40">(Microbial infection) Interacts with herpes simplex virus 1 protein UL37; this interaction deaminates CGAS and inhibits its activation.</text>
</comment>
<comment type="subunit">
    <text evidence="88">(Microbial infection) Interacts with vaccinia virus protein OPG067; this interaction promotes CGAS proteasomal degradation.</text>
</comment>
<comment type="subunit">
    <text evidence="37">(Microbial infection) Interacts with cytomegalovirus protein UL31; this interaction promotes dissociation of DNA from CGAS, thereby inhibiting the enzymatic activity of CGAS.</text>
</comment>
<comment type="subunit">
    <text evidence="36 78">(Microbial infection) Interacts with herpes simplex virus 1 tegument protein VP22 (UL49); this interaction inhibits cGAS enzymatic activity by preventing the formation of liquid-like droplets by CGAS.</text>
</comment>
<comment type="subunit">
    <text evidence="78">(Microbial infection) Interacts with herpesvirus 3 tegument protein VP22 (ORF9); this interaction inhibits cGAS enzymatic activity by preventing the formation of liquid-like droplets by CGAS.</text>
</comment>
<comment type="subunit">
    <text evidence="33 48">(Microbial infection) Interacts with human cytomegalovirus proteins UL42 and UL83; these interactions result in the inhibition of cGAS-STING signaling.</text>
</comment>
<comment type="subcellular location">
    <subcellularLocation>
        <location evidence="33 37 42 43 45 51 53 54 60 71 73 74 79 84 90">Nucleus</location>
    </subcellularLocation>
    <subcellularLocation>
        <location evidence="45 51 53 55 67 69">Chromosome</location>
    </subcellularLocation>
    <subcellularLocation>
        <location evidence="46 55">Cell membrane</location>
        <topology evidence="46">Peripheral membrane protein</topology>
    </subcellularLocation>
    <subcellularLocation>
        <location evidence="6 18 33 37 44 46 53 54 60 73 74 79 84 87 88">Cytoplasm</location>
        <location evidence="6 18 33 37 44 46 53 54 60 73 74 79 84 87 88">Cytosol</location>
    </subcellularLocation>
    <text evidence="18 43 45 46 53 54 73 79">Mainly localizes in the nucleus, and at low level in the cytosol (PubMed:31544964, PubMed:31808743). On chromosomes, enriched on centromeric satellite and LINE DNA repeat elements (PubMed:30811988). Exported from the nucleus to the cytosol in a XPO1/CRM1 via the nuclear export signal in response to DNA stimulation (PubMed:33406424). Outside the nucleus, localizes at the cell membrane as a peripheral membrane protein in resting conditions: association to the cell membrane is mediated via binding to phosphatidylinositol 4,5-bisphosphate (PtdIns(4,5)P2) (PubMed:30827685). Localization at the cell membrane is required to limit the recognition of self-DNA (PubMed:30827685). Following detection of double-stranded DNA (dsDNA), released from the cell membrane into the cytosol in order to signal (PubMed:30827685). Upon transfection with dsDNA forms punctate structures that co-localize with DNA and Beclin-1 (BECN1) (PubMed:26048138). Phosphorylation at Tyr-215 promotes cytosolic retention (PubMed:30356214). In response to translation stress, translocates to the cytosol and associates with collided ribosomes (PubMed:34111399).</text>
</comment>
<comment type="subcellular location">
    <text evidence="18">(Microbial infection) Upon infection with virulent M.tuberculosis forms aggregates with dsDNA, non-virulent bacteria (without the ESX-1 locus) do not form these aggregates (PubMed:26048138).</text>
</comment>
<comment type="alternative products">
    <event type="alternative splicing"/>
    <isoform>
        <id>Q8N884-1</id>
        <name>1</name>
        <sequence type="displayed"/>
    </isoform>
    <isoform>
        <id>Q8N884-2</id>
        <name>2</name>
        <sequence type="described" ref="VSP_014388 VSP_014389"/>
    </isoform>
</comment>
<comment type="tissue specificity">
    <text evidence="6">Expressed in the monocytic cell line THP1.</text>
</comment>
<comment type="induction">
    <text evidence="5">By type I interferons.</text>
</comment>
<comment type="domain">
    <text evidence="39">Lys-187 and Leu-195 residues are specific to human and destabilize the interactions with short DNA, shifting the specificity toward the detection of curved long DNAs (PubMed:30007416). Lys-187 and Leu-195 also restrain cGAMP production and, therefore, immune activation, allowing a more fine-tuned response to pathogens (PubMed:30007416).</text>
</comment>
<comment type="domain">
    <text evidence="1 25 28 38 75">The N-terminal disordered part (1-160) binds unspecifically dsDNA and expands the binding and moving range of CGAS on dsDNA (PubMed:28214358, PubMed:28363908). The disordered and positively charged residues enhance CGAS-DNA phase separation by increasing the valencies of DNA-binding (PubMed:29976794). The N-terminus is required to sense chromatin and its phosphorylation blocks its activation by chromatin DNA (PubMed:33542149). When the N-terminal part (1-160) is missing the protein bound to dsDNA homodimerizes (By similarity).</text>
</comment>
<comment type="domain">
    <text evidence="66 67 69">The arginine-anchor tightly binds to the canonical H2A acidic-patch residues.</text>
</comment>
<comment type="PTM">
    <text evidence="22 43 55 58 72 75">The N-terminal disordered part (1-160) is phosphorylated by AURKB during the G2-M transition, blocking CGAS liquid phase separation and preventing activation (PubMed:33542149). Phosphorylation at Tyr-215 by BLK promotes cytosolic retention (PubMed:30356214). Localizes into the nucleus following dephosphorylation at Tyr-215 (PubMed:30356214). Phosphorylation at Ser-435 activates the nucleotidyltransferase activity (PubMed:32474700). Dephosphorylation at Ser-435 by PPP6C impairs its ability to bind GTP, thereby inactivating it (PubMed:32474700). Phosphorylation at Thr-68 and Ser-213 by PRKDC inhibits its cyclic GMP-AMP synthase activity by impairing homodimerization and activation (PubMed:33273464). Phosphorylation at Ser-305 by AKT (AKT1, AKT2 or AKT3) suppresses the nucleotidyltransferase activity (PubMed:26440888). Phosphorylation at Ser-305 by CDK1 during mitosis leads to its inhibition, thereby preventing CGAS activation by self-DNA during mitosis (PubMed:32351706). Dephosphorylated at Ser-305 by protein phosphatase PP1 upon mitotic exit (PubMed:32351706).</text>
</comment>
<comment type="PTM">
    <text evidence="1 24 26 34 35 52 86 90">Ubiquitinated at Lys-414 via 'Lys-48'-linked polyubiquitin chains, leading to its SQSTM1-mediated autophagic degradation (PubMed:27666593). Interaction with TRIM14 promotes recruitment of USP14, leading to deubiquitinate Lys-414 and stabilize CGAS (PubMed:27666593). Ubiquitinated at Lys-173 and Lys-384 by RNF185 via 'Lys-27'-linked polyubiquitination, promoting CGAS cyclic GMP-AMP synthase activity (PubMed:28273161). Monoubiquitination at Lys-347 by TRIM56 promotes oligomerization and subsequent activation (PubMed:29426904). Monoubiquitination by TRIM41 promotes CGAS activation (PubMed:29760876). Ubiquitination at Lys-285 and Lys-479 via 'Lys-48'-linked polyubiquitination promotes its degradation (By similarity). Deubiquitination at Lys-285 by USP29 promotes its stabilization (By similarity). Deubiquitinated by USP27X, promoting its stabilization (PubMed:31534008). Ubiquitinated at Lys-411 via 'Lys-63'-linked polyubiquitin chains by MARCHF8, leading to the inhibition of its DNA binding ability (PubMed:35503863). In cycling cells, nucleosome-bound CGAS is ubiquitinated at Lys-427 and Lys-428 via 'Lys-48'-linked polyubiquitin chains by the ECS(SPSB3) complex, leading to its degradation: ubiquitination and degradation of nuclear CGAS during G1 and G2 phases is required to promote low intranuclear CGAS abundance before the next mitotic cycle (PubMed:38418882).</text>
</comment>
<comment type="PTM">
    <text evidence="1">Sumoylated at Lys-231 and Lys-479 by TRIM38 in uninfected cells and during the early phase of viral infection, promoting its stability by preventing ubiquitination at Lys-285 and Lys-479, and subsequent degradation (By similarity). Desumoylated by SENP2 during the late phase of viral infection (By similarity). Sumoylation at Lys-347, Lys-384 and Lys-394 prevents DNA-binding, oligomerization and nucleotidyltransferase activity (By similarity). Desumoylation at Lys-347, Lys-384 and Lys-394 by SENP7 relieves inhibition and activates CGAS (By similarity).</text>
</comment>
<comment type="PTM">
    <text evidence="1">Polyglutamylated by TTLL6 at Glu-286, leading to impair DNA-binding activity. Monoglutamylated at Glu-314 by TTLL4, leading to impair the nucleotidyltransferase activity. Deglutamylated by AGBL5/CCP5 and AGBL6/CCP6.</text>
</comment>
<comment type="PTM">
    <text evidence="44 62">Acetylation at Lys-384, Lys-394 and Lys-414 inhibits the cyclic GMP-AMP synthase activity (PubMed:30799039). Deacetylated upon cytosolic DNA challenge such as viral infections (PubMed:30799039). Acetylation can be mediated by aspirin (acetylsalicylate) drug, which directly acetylates CGAS (PubMed:30799039). Acetylation by aspirin efficiently inhibits CGAS-mediated immune responses and is able to suppress self-DNA-induced autoimmunity (PubMed:30799039). Acetylation at Lys-47, Lys-56, Lys-62 and Lys-83 by KAT5 increases the cyclic GMP-AMP synthase activity by promoting DNA-binding and subsequent activation (PubMed:32817552).</text>
</comment>
<comment type="PTM">
    <text evidence="1 27 47">Proteolytically cleaved by apoptotic caspases during apoptosis, leading to its inactivation (PubMed:30878284). The damage of the nucleus and the mitochondria during apoptosis leads to leakage of nuclear and mitochondrial DNA, which activate CGAS: cleavage and inactivation during apoptosis in required to prevent cytokine overproduction (By similarity). Cleaved by CASP3 at Asp-319 during virus-induced apoptosis, thereby inactivating it and preventing cytokine overproduction (PubMed:30878284). Cleaved by CASP1 at Asp-140 and Asp-157 upon DNA virus infection; the cleavage impairs cGAMP production (PubMed:28314590). Also cleaved by the pyroptotic CASP4 and CASP5 during non-canonical inflammasome activation; they don't cut at the same sites than CASP1 (PubMed:28314590).</text>
</comment>
<comment type="PTM">
    <text evidence="59">Degraded via selective autophagy following interaction with IRGM (PubMed:32715615). IRGM promotes CGAS recruitment to autophagosome membranes, promoting its SQSTM1/p62-dependent autophagic degradation (PubMed:32715615).</text>
</comment>
<comment type="PTM">
    <text evidence="85">Poly-ADP-ribosylation at Asp-191 by PARP1 impairs DNA-binding, thereby preventing the cyclic GMP-AMP synthase activity.</text>
</comment>
<comment type="PTM">
    <text evidence="84 89">Palmitoylation at Cys-474 by ZDHHC18 impairs DNA-binding, thereby preventing the cyclic GMP-AMP synthase activity (PubMed:35438208). Palmitoylation at Cys-404 and Cys-405 by ZDHHC9 promotes homodimerization and cyclic GMP-AMP synthase activity (PubMed:37802025). Depalmitoylation at Cys-404 and Cys-405 by LYPLAL1 impairs homodimerization and cyclic GMP-AMP synthase activity (PubMed:37802025).</text>
</comment>
<comment type="PTM">
    <text evidence="1 82">Monomethylated at Lys-506 by SETD7 (PubMed:35210392). Monomethylation promotes interaction with SGF29, preventing interaction between PARP1 nad SGF29 (By similarity). Demethylation by RIOX1 promotes interaction with PARP1, followed by PARP1 inactivation (By similarity).</text>
</comment>
<comment type="PTM">
    <text evidence="91">Lactylation by AARS2 prevents ability to undergo liquid-liquid phase separation (LLPS), thereby inhibiting CGAS activation.</text>
</comment>
<comment type="PTM">
    <text evidence="40">(Microbial infection) Deamidated on 'Asn-210' by herpes simplex virus 1 protein UL37. This modification significantly reduces CGAS-dependent cGAMP production and innate immune signaling induced by dsDNA.</text>
</comment>
<comment type="PTM">
    <text evidence="70">(Microbial infection) Degraded by an autophagy-mediated mechanism in presence of Chikungunya virus capsid protein.</text>
</comment>
<comment type="miscellaneous">
    <text evidence="81">The cGAS-STING signaling pathway drives sterile inflammation leading to type I interferon immunopathology in severe COVID-19 disease caused by SARS-CoV-2 virus infection (PubMed:35045565). Tissue damages in the lung and skin lesions are caused by activation of the cGAS-STING signaling leading to aberrant inflammation (PubMed:35045565). Endothelial cell damage is also caused by activation of the cGAS-STING pathway: SARS-CoV-2 infection triggers mitochondrial DNA release into the cytosol (PubMed:35045565). Released mitochondrial DNA is then detected by CGAS, leading to activation of the cGAS-STING pathway, triggering type-I interferon production and autoinflammation (PubMed:35045565).</text>
</comment>
<comment type="similarity">
    <text evidence="94">Belongs to the mab-21 family.</text>
</comment>
<comment type="sequence caution" evidence="94">
    <conflict type="erroneous initiation">
        <sequence resource="EMBL-CDS" id="AAH12928"/>
    </conflict>
    <text>Extended N-terminus.</text>
</comment>